<comment type="function">
    <molecule>Fibrillin-1</molecule>
    <text evidence="1 9 17 20 29 36 58 103">Structural component of the 10-12 nm diameter microfibrils of the extracellular matrix, which conveys both structural and regulatory properties to load-bearing connective tissues (PubMed:15062093, PubMed:1860873). Fibrillin-1-containing microfibrils provide long-term force bearing structural support (PubMed:27026396). In tissues such as the lung, blood vessels and skin, microfibrils form the periphery of the elastic fiber, acting as a scaffold for the deposition of elastin (PubMed:27026396). In addition, microfibrils can occur as elastin-independent networks in tissues such as the ciliary zonule, tendon, cornea and glomerulus where they provide tensile strength and have anchoring roles (PubMed:27026396). Fibrillin-1 also plays a key role in tissue homeostasis through specific interactions with growth factors, such as the bone morphogenetic proteins (BMPs), growth and differentiation factors (GDFs) and latent transforming growth factor-beta-binding proteins (LTBPs), cell-surface integrins and other extracellular matrix protein and proteoglycan components (PubMed:27026396). Regulates osteoblast maturation by controlling TGF-beta bioavailability and calibrating TGF-beta and BMP levels, respectively (By similarity). Negatively regulates osteoclastogenesis by binding and sequestering an osteoclast differentiation and activation factor TNFSF11 (PubMed:24039232). This leads to disruption of TNFSF11-induced Ca(2+) signaling and impairment of TNFSF11-mediated nuclear translocation and activation of transcription factor NFATC1 which regulates genes important for osteoclast differentiation and function (PubMed:24039232). Mediates cell adhesion via its binding to cell surface receptors integrins ITGAV:ITGB3 and ITGA5:ITGB1 (PubMed:12807887, PubMed:17158881). Binds heparin and this interaction has an important role in the assembly of microfibrils (PubMed:11461921).</text>
</comment>
<comment type="function">
    <molecule>Asprosin</molecule>
    <text evidence="1 65 68 69">Adipokine secreted by white adipose tissue that plays an important regulatory role in the glucose metabolism of liver, muscle and pancreas (PubMed:27087445, PubMed:30853600). Hormone that targets the liver in response to fasting to increase plasma glucose levels (PubMed:27087445). Binds the olfactory receptor OR4M1 at the surface of hepatocytes and promotes hepatocyte glucose release by activating the protein kinase A activity in the liver, resulting in rapid glucose release into the circulation (PubMed:27087445, PubMed:31230984). May act as a regulator of adaptive thermogenesis by inhibiting browning and energy consumption, while increasing lipid deposition in white adipose tissue (By similarity). Also acts as an orexigenic hormone that increases appetite: crosses the blood brain barrier and exerts effects on the hypothalamus (By similarity). In the arcuate nucleus of the hypothalamus, asprosin directly activates orexigenic AgRP neurons and indirectly inhibits anorexigenic POMC neurons, resulting in appetite stimulation (By similarity). Activates orexigenic AgRP neurons via binding to the olfactory receptor OR4M1 (By similarity). May also play a role in sperm motility in testis via interaction with OR4M1 receptor (By similarity).</text>
</comment>
<comment type="subunit">
    <molecule>Fibrillin-1</molecule>
    <text evidence="1 17 20 21 23 26 29 30 31 33 39 42 49 55 58 63">Interacts with COL16A1 (PubMed:15165854). Interacts with integrin alpha-V/beta-3 (PubMed:15062093). Interacts with ADAMTS10; this interaction promotes microfibril assembly (PubMed:21402694). Interacts with THSD4; this interaction promotes fibril formation (By similarity). Interacts (via N-terminal domain) with FBLN2 and FBLN5 (PubMed:15790312, PubMed:17255108). Interacts with ELN (PubMed:15790312). Forms a ternary complex with ELN and FBLN2 or FBLN5 and a significant interaction with ELN seen only in the presence of FBLN2 or FBLN5 (PubMed:17255108). Interacts (via N-terminal domain) with LTBP2 (via C-terminal domain) in a Ca(+2)-dependent manner (PubMed:17293099). Interacts (via N-terminal domain) with LTBP1 (via C-terminal domain) (PubMed:17293099). Interacts with integrins ITGA5:ITGB1, ITGAV:ITGB3 and ITGAV:ITGB6 (PubMed:12807887, PubMed:17158881). Interacts (via N-terminal domain) with BMP2, BMP4, BMP7, BMP10 and GDF5 (PubMed:18339631). Interacts (via N-terminal domain) with MFAP2 and MFAP5 (PubMed:15131124). Interacts with ADAMTSL5 (PubMed:23010571). Interacts with MFAP4 (PubMed:26601954). Interacts (via N-terminal domain) with TNFSF11 in a Ca(+2)-dependent manner (PubMed:24039232). Interacts (via N-terminal domain) with EFEMP2; this interaction inhibits EFEMP2 binding to LOX and ELN (PubMed:17255108, PubMed:19349279, PubMed:19570982).</text>
</comment>
<comment type="interaction">
    <interactant intactId="EBI-2505934">
        <id>P35555</id>
    </interactant>
    <interactant intactId="EBI-743414">
        <id>O95967</id>
        <label>EFEMP2</label>
    </interactant>
    <organismsDiffer>false</organismsDiffer>
    <experiments>3</experiments>
</comment>
<comment type="interaction">
    <interactant intactId="EBI-2505934">
        <id>P35555</id>
    </interactant>
    <interactant intactId="EBI-947897">
        <id>Q9UBX5</id>
        <label>FBLN5</label>
    </interactant>
    <organismsDiffer>false</organismsDiffer>
    <experiments>3</experiments>
</comment>
<comment type="interaction">
    <interactant intactId="EBI-2505934">
        <id>P35555</id>
    </interactant>
    <interactant intactId="EBI-2505934">
        <id>P35555</id>
        <label>FBN1</label>
    </interactant>
    <organismsDiffer>false</organismsDiffer>
    <experiments>6</experiments>
</comment>
<comment type="interaction">
    <interactant intactId="EBI-2505934">
        <id>P35555</id>
    </interactant>
    <interactant intactId="EBI-6164392">
        <id>P35556</id>
        <label>FBN2</label>
    </interactant>
    <organismsDiffer>false</organismsDiffer>
    <experiments>2</experiments>
</comment>
<comment type="interaction">
    <interactant intactId="EBI-2505934">
        <id>P35555</id>
    </interactant>
    <interactant intactId="EBI-1220319">
        <id>P02751</id>
        <label>FN1</label>
    </interactant>
    <organismsDiffer>false</organismsDiffer>
    <experiments>2</experiments>
</comment>
<comment type="interaction">
    <interactant intactId="EBI-2505934">
        <id>P35555</id>
    </interactant>
    <interactant intactId="EBI-711823">
        <id>Q7L5D6</id>
        <label>GET4</label>
    </interactant>
    <organismsDiffer>false</organismsDiffer>
    <experiments>3</experiments>
</comment>
<comment type="interaction">
    <interactant intactId="EBI-2505934">
        <id>P35555</id>
    </interactant>
    <interactant intactId="EBI-740220">
        <id>O14964</id>
        <label>HGS</label>
    </interactant>
    <organismsDiffer>false</organismsDiffer>
    <experiments>3</experiments>
</comment>
<comment type="interaction">
    <interactant intactId="EBI-2505934">
        <id>P35555</id>
    </interactant>
    <interactant intactId="EBI-3893481">
        <id>P28300</id>
        <label>LOX</label>
    </interactant>
    <organismsDiffer>false</organismsDiffer>
    <experiments>2</experiments>
</comment>
<comment type="interaction">
    <interactant intactId="EBI-2505934">
        <id>P35555</id>
    </interactant>
    <interactant intactId="EBI-11173832">
        <id>Q14766-2</id>
        <label>LTBP1</label>
    </interactant>
    <organismsDiffer>false</organismsDiffer>
    <experiments>2</experiments>
</comment>
<comment type="interaction">
    <interactant intactId="EBI-2505934">
        <id>P35555</id>
    </interactant>
    <interactant intactId="EBI-744081">
        <id>Q96EQ0</id>
        <label>SGTB</label>
    </interactant>
    <organismsDiffer>false</organismsDiffer>
    <experiments>3</experiments>
</comment>
<comment type="subcellular location">
    <subcellularLocation>
        <location evidence="61 72">Secreted</location>
    </subcellularLocation>
    <text evidence="61">Fibrillin-1 and Asprosin chains are still linked together during the secretion from cells, but are subsequently separated by furin (PubMed:24982166).</text>
</comment>
<comment type="subcellular location">
    <molecule>Fibrillin-1</molecule>
    <subcellularLocation>
        <location evidence="9 61">Secreted</location>
        <location evidence="9 61">Extracellular space</location>
        <location evidence="9 61">Extracellular matrix</location>
    </subcellularLocation>
</comment>
<comment type="subcellular location">
    <molecule>Asprosin</molecule>
    <subcellularLocation>
        <location evidence="65">Secreted</location>
    </subcellularLocation>
    <text evidence="65">Secreted by white adipose tissue and circulates in the plasma.</text>
</comment>
<comment type="induction">
    <molecule>Asprosin</molecule>
    <text evidence="67 70">Asprosin levels are elevated in patients with type II diabetes and metabolic syndrome (at protein level).</text>
</comment>
<comment type="PTM">
    <text evidence="7 61 103">Cleavage of N- and C-terminus by furin is required for incorporation into the extracellular matrix and assembly into microfibrils (PubMed:27026396). The C-terminus, which corresponds to the Asprosin chain, was initially thought to constitute a propeptide (PubMed:24982166). Fibrillin-1 and Asprosin chains are still linked together during the secretion from cells, but are subsequently separated by furin, an essential step for incorporation of Fibrillin-1 into the nascent microfibrils (PubMed:24982166).</text>
</comment>
<comment type="PTM">
    <molecule>Fibrillin-1</molecule>
    <text evidence="96">Forms intermolecular disulfide bonds either with other fibrillin-1 molecules or with other components of the microfibrils.</text>
</comment>
<comment type="PTM">
    <text evidence="72">O-glycosylated on serine residues by POGLUT2 and POGLUT3 which is necessary for efficient protein secretion.</text>
</comment>
<comment type="disease" evidence="5 6 8 10 11 12 13 14 18 19 22 24 25 27 28 32 34 35 41 43 46 50 54 73 74 75 76 78 79 80 81 82 83 85 86 87 88 89 91 93 94 97 98 100 101">
    <disease id="DI-00699">
        <name>Marfan syndrome</name>
        <acronym>MFS</acronym>
        <description>A hereditary disorder of connective tissue that affects the skeletal, ocular, and cardiovascular systems. A wide variety of skeletal abnormalities occurs with Marfan syndrome, including scoliosis, chest wall deformity, tall stature, abnormal joint mobility. Ectopia lentis occurs in most of the patients and is almost always bilateral. The leading cause of premature death is progressive dilation of the aortic root and ascending aorta, causing aortic incompetence and dissection. Neonatal Marfan syndrome is the most severe form resulting in death from cardiorespiratory failure in the first few years of life.</description>
        <dbReference type="MIM" id="154700"/>
    </disease>
    <text>The disease is caused by variants affecting the gene represented in this entry. The majority of the more than a thousand mutations in FBN1 currently known are point mutations, the rest are frameshifts and splice site mutations. Marfan syndrome has been suggested in at least 2 historical figures, Abraham Lincoln and Paganini.</text>
</comment>
<comment type="disease" evidence="10 11 13 32 84">
    <disease id="DI-01839">
        <name>Ectopia lentis 1, isolated, autosomal dominant</name>
        <acronym>ECTOL1</acronym>
        <description>An ocular abnormality characterized by partial or complete displacement of the lens from its space resulting from defective zonule formation.</description>
        <dbReference type="MIM" id="129600"/>
    </disease>
    <text>The disease is caused by variants affecting the gene represented in this entry.</text>
</comment>
<comment type="disease" evidence="16">
    <disease id="DI-01142">
        <name>Weill-Marchesani syndrome 2</name>
        <acronym>WMS2</acronym>
        <description>A rare connective tissue disorder characterized by short stature, brachydactyly, joint stiffness, and eye abnormalities including microspherophakia, ectopia lentis, severe myopia and glaucoma.</description>
        <dbReference type="MIM" id="608328"/>
    </disease>
    <text>The disease is caused by variants affecting the gene represented in this entry.</text>
</comment>
<comment type="disease" evidence="66">
    <disease id="DI-01941">
        <name>Overlap connective tissue disease</name>
        <acronym>OCTD</acronym>
        <description>Heritable disorder of connective tissue characterized by involvement of the mitral valve, aorta, skeleton, and skin. MASS syndrome is closely resembling both the Marfan syndrome and the Barlow syndrome. However, no dislocation of the lenses or aneurysmal changes occur in the aorta, and the mitral valve prolapse is by no means invariable.</description>
        <dbReference type="MIM" id="604308"/>
    </disease>
    <text>The disease is caused by variants affecting the gene represented in this entry.</text>
</comment>
<comment type="disease" evidence="44">
    <disease id="DI-02823">
        <name>Stiff skin syndrome</name>
        <acronym>SSKS</acronym>
        <description>A syndrome characterized by hard, thick skin, usually over the entire body, which limits joint mobility and causes flexion contractures. Other occasional findings include lipodystrophy and muscle weakness.</description>
        <dbReference type="MIM" id="184900"/>
    </disease>
    <text>The disease is caused by variants affecting the gene represented in this entry.</text>
</comment>
<comment type="disease" evidence="53">
    <disease id="DI-03224">
        <name>Geleophysic dysplasia 2</name>
        <acronym>GPHYSD2</acronym>
        <description>An autosomal dominant disorder characterized by severe short stature, short hands and feet, joint limitations, and skin thickening. Radiologic features include delayed bone age, cone-shaped epiphyses, shortened long tubular bones, and ovoid vertebral bodies. Affected individuals have characteristic facial features including a 'happy' face with full cheeks, shortened nose, hypertelorism, long and flat philtrum, and thin upper lip. Other distinctive features include progressive cardiac valvular thickening often leading to an early death, toe walking, tracheal stenosis, respiratory insufficiency, and lysosomal-like storage vacuoles in various tissues.</description>
        <dbReference type="MIM" id="614185"/>
    </disease>
    <text>The disease is caused by variants affecting the gene represented in this entry.</text>
</comment>
<comment type="disease" evidence="53">
    <disease id="DI-03225">
        <name>Acromicric dysplasia</name>
        <acronym>ACMICD</acronym>
        <description>An autosomal dominant disorder characterized by severe short stature, short hands and feet, joint limitations, and skin thickening. Radiologic features include delayed bone age, cone-shaped epiphyses, shortened long tubular bones, and ovoid vertebral bodies. Affected individuals have distinct facial features, including round face, well-defined eyebrows, long eyelashes, bulbous nose with anteverted nostrils, long and prominent philtrum, and thick lips with a small mouth. Other characteristic features include hoarse voice and pseudomuscular build, and there are distinct skeletal features as well, including an internal notch of the femoral head, internal notch of the second metacarpal, and external notch of the fifth metacarpal.</description>
        <dbReference type="MIM" id="102370"/>
    </disease>
    <text>The disease is caused by variants affecting the gene represented in this entry.</text>
</comment>
<comment type="disease" evidence="47 51 52 57 59 60 64 65">
    <molecule>Asprosin</molecule>
    <disease id="DI-04689">
        <name>Marfanoid-progeroid-lipodystrophy syndrome</name>
        <acronym>MFLS</acronym>
        <description>An autosomal dominant syndrome characterized by congenital lipodystrophy, a progeroid facial appearance due to lack of subcutaneous fat, and variable signs of Marfan syndrome. Clinical features include premature birth with an accelerated linear growth disproportionate to the weight gain, ectopia lentis, aortic dilatation, dural ectasia, and arachnodactyly. Mental and motor development are within normal limits.</description>
        <dbReference type="MIM" id="616914"/>
    </disease>
    <text>The disease is caused by variants affecting the gene represented in this entry.</text>
</comment>
<comment type="biotechnology">
    <molecule>Asprosin</molecule>
    <text evidence="71">Attractive therapeutic target for type II diabetes and metabolic syndrome.</text>
</comment>
<comment type="miscellaneous">
    <molecule>Asprosin</molecule>
    <text evidence="104">Was named after the Greek word for white, because of the reduction in subcutaneous white adipose tissue that is displayed by asprosin-deficient patients.</text>
</comment>
<comment type="similarity">
    <text evidence="105">Belongs to the fibrillin family.</text>
</comment>
<comment type="sequence caution" evidence="105">
    <conflict type="erroneous initiation">
        <sequence resource="EMBL-CDS" id="CAA45118"/>
    </conflict>
    <text>Extended N-terminus.</text>
</comment>
<comment type="online information" name="Protein Spotlight">
    <link uri="https://www.proteinspotlight.org/back_issues/248/"/>
    <text>Two birds, one stone - Issue 248 of June 2022</text>
</comment>
<evidence type="ECO:0000250" key="1">
    <source>
        <dbReference type="UniProtKB" id="Q61554"/>
    </source>
</evidence>
<evidence type="ECO:0000255" key="2"/>
<evidence type="ECO:0000255" key="3">
    <source>
        <dbReference type="PROSITE-ProRule" id="PRU00076"/>
    </source>
</evidence>
<evidence type="ECO:0000256" key="4">
    <source>
        <dbReference type="SAM" id="MobiDB-lite"/>
    </source>
</evidence>
<evidence type="ECO:0000269" key="5">
    <source>
    </source>
</evidence>
<evidence type="ECO:0000269" key="6">
    <source>
    </source>
</evidence>
<evidence type="ECO:0000269" key="7">
    <source>
    </source>
</evidence>
<evidence type="ECO:0000269" key="8">
    <source>
    </source>
</evidence>
<evidence type="ECO:0000269" key="9">
    <source>
    </source>
</evidence>
<evidence type="ECO:0000269" key="10">
    <source>
    </source>
</evidence>
<evidence type="ECO:0000269" key="11">
    <source>
    </source>
</evidence>
<evidence type="ECO:0000269" key="12">
    <source>
    </source>
</evidence>
<evidence type="ECO:0000269" key="13">
    <source>
    </source>
</evidence>
<evidence type="ECO:0000269" key="14">
    <source>
    </source>
</evidence>
<evidence type="ECO:0000269" key="15">
    <source>
    </source>
</evidence>
<evidence type="ECO:0000269" key="16">
    <source>
    </source>
</evidence>
<evidence type="ECO:0000269" key="17">
    <source>
    </source>
</evidence>
<evidence type="ECO:0000269" key="18">
    <source>
    </source>
</evidence>
<evidence type="ECO:0000269" key="19">
    <source>
    </source>
</evidence>
<evidence type="ECO:0000269" key="20">
    <source>
    </source>
</evidence>
<evidence type="ECO:0000269" key="21">
    <source>
    </source>
</evidence>
<evidence type="ECO:0000269" key="22">
    <source>
    </source>
</evidence>
<evidence type="ECO:0000269" key="23">
    <source>
    </source>
</evidence>
<evidence type="ECO:0000269" key="24">
    <source>
    </source>
</evidence>
<evidence type="ECO:0000269" key="25">
    <source>
    </source>
</evidence>
<evidence type="ECO:0000269" key="26">
    <source>
    </source>
</evidence>
<evidence type="ECO:0000269" key="27">
    <source>
    </source>
</evidence>
<evidence type="ECO:0000269" key="28">
    <source>
    </source>
</evidence>
<evidence type="ECO:0000269" key="29">
    <source>
    </source>
</evidence>
<evidence type="ECO:0000269" key="30">
    <source>
    </source>
</evidence>
<evidence type="ECO:0000269" key="31">
    <source>
    </source>
</evidence>
<evidence type="ECO:0000269" key="32">
    <source>
    </source>
</evidence>
<evidence type="ECO:0000269" key="33">
    <source>
    </source>
</evidence>
<evidence type="ECO:0000269" key="34">
    <source>
    </source>
</evidence>
<evidence type="ECO:0000269" key="35">
    <source>
    </source>
</evidence>
<evidence type="ECO:0000269" key="36">
    <source>
    </source>
</evidence>
<evidence type="ECO:0000269" key="37">
    <source>
    </source>
</evidence>
<evidence type="ECO:0000269" key="38">
    <source>
    </source>
</evidence>
<evidence type="ECO:0000269" key="39">
    <source>
    </source>
</evidence>
<evidence type="ECO:0000269" key="40">
    <source>
    </source>
</evidence>
<evidence type="ECO:0000269" key="41">
    <source>
    </source>
</evidence>
<evidence type="ECO:0000269" key="42">
    <source>
    </source>
</evidence>
<evidence type="ECO:0000269" key="43">
    <source>
    </source>
</evidence>
<evidence type="ECO:0000269" key="44">
    <source>
    </source>
</evidence>
<evidence type="ECO:0000269" key="45">
    <source>
    </source>
</evidence>
<evidence type="ECO:0000269" key="46">
    <source>
    </source>
</evidence>
<evidence type="ECO:0000269" key="47">
    <source>
    </source>
</evidence>
<evidence type="ECO:0000269" key="48">
    <source>
    </source>
</evidence>
<evidence type="ECO:0000269" key="49">
    <source>
    </source>
</evidence>
<evidence type="ECO:0000269" key="50">
    <source>
    </source>
</evidence>
<evidence type="ECO:0000269" key="51">
    <source>
    </source>
</evidence>
<evidence type="ECO:0000269" key="52">
    <source>
    </source>
</evidence>
<evidence type="ECO:0000269" key="53">
    <source>
    </source>
</evidence>
<evidence type="ECO:0000269" key="54">
    <source>
    </source>
</evidence>
<evidence type="ECO:0000269" key="55">
    <source>
    </source>
</evidence>
<evidence type="ECO:0000269" key="56">
    <source>
    </source>
</evidence>
<evidence type="ECO:0000269" key="57">
    <source>
    </source>
</evidence>
<evidence type="ECO:0000269" key="58">
    <source>
    </source>
</evidence>
<evidence type="ECO:0000269" key="59">
    <source>
    </source>
</evidence>
<evidence type="ECO:0000269" key="60">
    <source>
    </source>
</evidence>
<evidence type="ECO:0000269" key="61">
    <source>
    </source>
</evidence>
<evidence type="ECO:0000269" key="62">
    <source>
    </source>
</evidence>
<evidence type="ECO:0000269" key="63">
    <source>
    </source>
</evidence>
<evidence type="ECO:0000269" key="64">
    <source>
    </source>
</evidence>
<evidence type="ECO:0000269" key="65">
    <source>
    </source>
</evidence>
<evidence type="ECO:0000269" key="66">
    <source>
    </source>
</evidence>
<evidence type="ECO:0000269" key="67">
    <source>
    </source>
</evidence>
<evidence type="ECO:0000269" key="68">
    <source>
    </source>
</evidence>
<evidence type="ECO:0000269" key="69">
    <source>
    </source>
</evidence>
<evidence type="ECO:0000269" key="70">
    <source>
    </source>
</evidence>
<evidence type="ECO:0000269" key="71">
    <source>
    </source>
</evidence>
<evidence type="ECO:0000269" key="72">
    <source>
    </source>
</evidence>
<evidence type="ECO:0000269" key="73">
    <source>
    </source>
</evidence>
<evidence type="ECO:0000269" key="74">
    <source>
    </source>
</evidence>
<evidence type="ECO:0000269" key="75">
    <source>
    </source>
</evidence>
<evidence type="ECO:0000269" key="76">
    <source>
    </source>
</evidence>
<evidence type="ECO:0000269" key="77">
    <source>
    </source>
</evidence>
<evidence type="ECO:0000269" key="78">
    <source>
    </source>
</evidence>
<evidence type="ECO:0000269" key="79">
    <source>
    </source>
</evidence>
<evidence type="ECO:0000269" key="80">
    <source>
    </source>
</evidence>
<evidence type="ECO:0000269" key="81">
    <source>
    </source>
</evidence>
<evidence type="ECO:0000269" key="82">
    <source>
    </source>
</evidence>
<evidence type="ECO:0000269" key="83">
    <source>
    </source>
</evidence>
<evidence type="ECO:0000269" key="84">
    <source>
    </source>
</evidence>
<evidence type="ECO:0000269" key="85">
    <source>
    </source>
</evidence>
<evidence type="ECO:0000269" key="86">
    <source>
    </source>
</evidence>
<evidence type="ECO:0000269" key="87">
    <source>
    </source>
</evidence>
<evidence type="ECO:0000269" key="88">
    <source>
    </source>
</evidence>
<evidence type="ECO:0000269" key="89">
    <source>
    </source>
</evidence>
<evidence type="ECO:0000269" key="90">
    <source>
    </source>
</evidence>
<evidence type="ECO:0000269" key="91">
    <source>
    </source>
</evidence>
<evidence type="ECO:0000269" key="92">
    <source>
    </source>
</evidence>
<evidence type="ECO:0000269" key="93">
    <source>
    </source>
</evidence>
<evidence type="ECO:0000269" key="94">
    <source>
    </source>
</evidence>
<evidence type="ECO:0000269" key="95">
    <source>
    </source>
</evidence>
<evidence type="ECO:0000269" key="96">
    <source>
    </source>
</evidence>
<evidence type="ECO:0000269" key="97">
    <source>
    </source>
</evidence>
<evidence type="ECO:0000269" key="98">
    <source>
    </source>
</evidence>
<evidence type="ECO:0000269" key="99">
    <source>
    </source>
</evidence>
<evidence type="ECO:0000269" key="100">
    <source>
    </source>
</evidence>
<evidence type="ECO:0000269" key="101">
    <source ref="76"/>
</evidence>
<evidence type="ECO:0000303" key="102">
    <source>
    </source>
</evidence>
<evidence type="ECO:0000303" key="103">
    <source>
    </source>
</evidence>
<evidence type="ECO:0000303" key="104">
    <source>
    </source>
</evidence>
<evidence type="ECO:0000305" key="105"/>
<evidence type="ECO:0000305" key="106">
    <source>
    </source>
</evidence>
<evidence type="ECO:0000305" key="107">
    <source>
    </source>
</evidence>
<evidence type="ECO:0000305" key="108">
    <source>
    </source>
</evidence>
<evidence type="ECO:0000305" key="109">
    <source>
    </source>
</evidence>
<evidence type="ECO:0000305" key="110">
    <source>
    </source>
</evidence>
<evidence type="ECO:0000305" key="111">
    <source>
    </source>
</evidence>
<evidence type="ECO:0000312" key="112">
    <source>
        <dbReference type="HGNC" id="HGNC:3603"/>
    </source>
</evidence>
<evidence type="ECO:0007744" key="113">
    <source>
    </source>
</evidence>
<evidence type="ECO:0007829" key="114">
    <source>
        <dbReference type="PDB" id="1APJ"/>
    </source>
</evidence>
<evidence type="ECO:0007829" key="115">
    <source>
        <dbReference type="PDB" id="1EMN"/>
    </source>
</evidence>
<evidence type="ECO:0007829" key="116">
    <source>
        <dbReference type="PDB" id="1LMJ"/>
    </source>
</evidence>
<evidence type="ECO:0007829" key="117">
    <source>
        <dbReference type="PDB" id="1UZJ"/>
    </source>
</evidence>
<evidence type="ECO:0007829" key="118">
    <source>
        <dbReference type="PDB" id="1UZK"/>
    </source>
</evidence>
<evidence type="ECO:0007829" key="119">
    <source>
        <dbReference type="PDB" id="1UZP"/>
    </source>
</evidence>
<evidence type="ECO:0007829" key="120">
    <source>
        <dbReference type="PDB" id="2M74"/>
    </source>
</evidence>
<evidence type="ECO:0007829" key="121">
    <source>
        <dbReference type="PDB" id="2W86"/>
    </source>
</evidence>
<evidence type="ECO:0007829" key="122">
    <source>
        <dbReference type="PDB" id="5MS9"/>
    </source>
</evidence>
<sequence>MRRGRLLEIALGFTVLLASYTSHGADANLEAGNVKETRASRAKRRGGGGHDALKGPNVCGSRYNAYCCPGWKTLPGGNQCIVPICRHSCGDGFCSRPNMCTCPSGQIAPSCGSRSIQHCNIRCMNGGSCSDDHCLCQKGYIGTHCGQPVCESGCLNGGRCVAPNRCACTYGFTGPQCERDYRTGPCFTVISNQMCQGQLSGIVCTKTLCCATVGRAWGHPCEMCPAQPHPCRRGFIPNIRTGACQDVDECQAIPGLCQGGNCINTVGSFECKCPAGHKLNEVSQKCEDIDECSTIPGICEGGECTNTVSSYFCKCPPGFYTSPDGTRCIDVRPGYCYTALTNGRCSNQLPQSITKMQCCCDAGRCWSPGVTVAPEMCPIRATEDFNKLCSVPMVIPGRPEYPPPPLGPIPPVLPVPPGFPPGPQIPVPRPPVEYLYPSREPPRVLPVNVTDYCQLVRYLCQNGRCIPTPGSYRCECNKGFQLDLRGECIDVDECEKNPCAGGECINNQGSYTCQCRAGYQSTLTRTECRDIDECLQNGRICNNGRCINTDGSFHCVCNAGFHVTRDGKNCEDMDECSIRNMCLNGMCINEDGSFKCICKPGFQLASDGRYCKDINECETPGICMNGRCVNTDGSYRCECFPGLAVGLDGRVCVDTHMRSTCYGGYKRGQCIKPLFGAVTKSECCCASTEYAFGEPCQPCPAQNSAEYQALCSSGPGMTSAGSDINECALDPDICPNGICENLRGTYKCICNSGYEVDSTGKNCVDINECVLNSLLCDNGQCRNTPGSFVCTCPKGFIYKPDLKTCEDIDECESSPCINGVCKNSPGSFICECSSESTLDPTKTICIETIKGTCWQTVIDGRCEININGATLKSQCCSSLGAAWGSPCTLCQVDPICGKGYSRIKGTQCEDIDECEVFPGVCKNGLCVNTRGSFKCQCPSGMTLDATGRICLDIRLETCFLRYEDEECTLPIAGRHRMDACCCSVGAAWGTEECEECPMRNTPEYEELCPRGPGFATKEITNGKPFFKDINECKMIPSLCTHGKCRNTIGSFKCRCDSGFALDSEERNCTDIDECRISPDLCGRGQCVNTPGDFECKCDEGYESGFMMMKNCMDIDECQRDPLLCRGGVCHNTEGSYRCECPPGHQLSPNISACIDINECELSAHLCPNGRCVNLIGKYQCACNPGYHSTPDRLFCVDIDECSIMNGGCETFCTNSEGSYECSCQPGFALMPDQRSCTDIDECEDNPNICDGGQCTNIPGEYRCLCYDGFMASEDMKTCVDVNECDLNPNICLSGTCENTKGSFICHCDMGYSGKKGKTGCTDINECEIGAHNCGKHAVCTNTAGSFKCSCSPGWIGDGIKCTDLDECSNGTHMCSQHADCKNTMGSYRCLCKEGYTGDGFTCTDLDECSENLNLCGNGQCLNAPGGYRCECDMGFVPSADGKACEDIDECSLPNICVFGTCHNLPGLFRCECEIGYELDRSGGNCTDVNECLDPTTCISGNCVNTPGSYICDCPPDFELNPTRVGCVDTRSGNCYLDIRPRGDNGDTACSNEIGVGVSKASCCCSLGKAWGTPCEMCPAVNTSEYKILCPGGEGFRPNPITVILEDIDECQELPGLCQGGKCINTFGSFQCRCPTGYYLNEDTRVCDDVNECETPGICGPGTCYNTVGNYTCICPPDYMQVNGGNNCMDMRRSLCYRNYYADNQTCDGELLFNMTKKMCCCSYNIGRAWNKPCEQCPIPSTDEFATLCGSQRPGFVIDIYTGLPVDIDECREIPGVCENGVCINMVGSFRCECPVGFFYNDKLLVCEDIDECQNGPVCQRNAECINTAGSYRCDCKPGYRFTSTGQCNDRNECQEIPNICSHGQCIDTVGSFYCLCHTGFKTNDDQTMCLDINECERDACGNGTCRNTIGSFNCRCNHGFILSHNNDCIDVDECASGNGNLCRNGQCINTVGSFQCQCNEGYEVAPDGRTCVDINECLLEPRKCAPGTCQNLDGSYRCICPPGYSLQNEKCEDIDECVEEPEICALGTCSNTEGSFKCLCPEGFSLSSSGRRCQDLRMSYCYAKFEGGKCSSPKSRNHSKQECCCALKGEGWGDPCELCPTEPDEAFRQICPYGSGIIVGPDDSAVDMDECKEPDVCKHGQCINTDGSYRCECPFGYILAGNECVDTDECSVGNPCGNGTCKNVIGGFECTCEEGFEPGPMMTCEDINECAQNPLLCAFRCVNTYGSYECKCPVGYVLREDRRMCKDEDECEEGKHDCTEKQMECKNLIGTYMCICGPGYQRRPDGEGCVDENECQTKPGICENGRCLNTRGSYTCECNDGFTASPNQDECLDNREGYCFTEVLQNMCQIGSSNRNPVTKSECCCDGGRGWGPHCEICPFQGTVAFKKLCPHGRGFMTNGADIDECKVIHDVCRNGECVNDRGSYHCICKTGYTPDITGTSCVDLNECNQAPKPCNFICKNTEGSYQCSCPKGYILQEDGRSCKDLDECATKQHNCQFLCVNTIGGFTCKCPPGFTQHHTSCIDNNECTSDINLCGSKGICQNTPGSFTCECQRGFSLDQTGSSCEDVDECEGNHRCQHGCQNIIGGYRCSCPQGYLQHYQWNQCVDENECLSAHICGGASCHNTLGSYKCMCPAGFQYEQFSGGCQDINECGSAQAPCSYGCSNTEGGYLCGCPPGYFRIGQGHCVSGMGMGRGNPEPPVSGEMDDNSLSPEACYECKINGYPKRGRKRRSTNETDASNIEDQSETEANVSLASWDVEKTAIFAFNISHVSNKVRILELLPALTTLTNHNRYLIESGNEDGFFKINQKEGISYLHFTKKKPVAGTYSLQISSTPLYKKKELNQLEDKYDKDYLSGELGDNLKMKIQVLLH</sequence>
<dbReference type="EMBL" id="L13923">
    <property type="protein sequence ID" value="AAB02036.1"/>
    <property type="molecule type" value="mRNA"/>
</dbReference>
<dbReference type="EMBL" id="AB177803">
    <property type="protein sequence ID" value="BAD16739.1"/>
    <property type="molecule type" value="Genomic_DNA"/>
</dbReference>
<dbReference type="EMBL" id="GU143398">
    <property type="protein sequence ID" value="ACZ58372.1"/>
    <property type="molecule type" value="Genomic_DNA"/>
</dbReference>
<dbReference type="EMBL" id="AC022467">
    <property type="status" value="NOT_ANNOTATED_CDS"/>
    <property type="molecule type" value="Genomic_DNA"/>
</dbReference>
<dbReference type="EMBL" id="AC084757">
    <property type="status" value="NOT_ANNOTATED_CDS"/>
    <property type="molecule type" value="Genomic_DNA"/>
</dbReference>
<dbReference type="EMBL" id="AC084758">
    <property type="status" value="NOT_ANNOTATED_CDS"/>
    <property type="molecule type" value="Genomic_DNA"/>
</dbReference>
<dbReference type="EMBL" id="CH471082">
    <property type="protein sequence ID" value="EAW77354.1"/>
    <property type="molecule type" value="Genomic_DNA"/>
</dbReference>
<dbReference type="EMBL" id="BC146854">
    <property type="protein sequence ID" value="AAI46855.1"/>
    <property type="molecule type" value="mRNA"/>
</dbReference>
<dbReference type="EMBL" id="L19896">
    <property type="status" value="NOT_ANNOTATED_CDS"/>
    <property type="molecule type" value="Genomic_DNA"/>
</dbReference>
<dbReference type="EMBL" id="X63556">
    <property type="protein sequence ID" value="CAA45118.1"/>
    <property type="status" value="ALT_INIT"/>
    <property type="molecule type" value="mRNA"/>
</dbReference>
<dbReference type="EMBL" id="X62008">
    <property type="status" value="NOT_ANNOTATED_CDS"/>
    <property type="molecule type" value="mRNA"/>
</dbReference>
<dbReference type="EMBL" id="S54426">
    <property type="protein sequence ID" value="AAB25244.1"/>
    <property type="molecule type" value="Genomic_DNA"/>
</dbReference>
<dbReference type="EMBL" id="S54425">
    <property type="protein sequence ID" value="AAB25244.1"/>
    <property type="status" value="JOINED"/>
    <property type="molecule type" value="Genomic_DNA"/>
</dbReference>
<dbReference type="CCDS" id="CCDS32232.1"/>
<dbReference type="PIR" id="A47221">
    <property type="entry name" value="A47221"/>
</dbReference>
<dbReference type="RefSeq" id="NP_000129.3">
    <property type="nucleotide sequence ID" value="NM_000138.4"/>
</dbReference>
<dbReference type="RefSeq" id="NP_001393645.1">
    <property type="nucleotide sequence ID" value="NM_001406716.1"/>
</dbReference>
<dbReference type="PDB" id="1APJ">
    <property type="method" value="NMR"/>
    <property type="chains" value="A=2052-2125"/>
</dbReference>
<dbReference type="PDB" id="1EMN">
    <property type="method" value="NMR"/>
    <property type="chains" value="A=2124-2205"/>
</dbReference>
<dbReference type="PDB" id="1EMO">
    <property type="method" value="NMR"/>
    <property type="chains" value="A=2124-2205"/>
</dbReference>
<dbReference type="PDB" id="1LMJ">
    <property type="method" value="NMR"/>
    <property type="chains" value="A=1069-1154"/>
</dbReference>
<dbReference type="PDB" id="1UZJ">
    <property type="method" value="X-ray"/>
    <property type="resolution" value="2.25 A"/>
    <property type="chains" value="A/B/C=1486-1647"/>
</dbReference>
<dbReference type="PDB" id="1UZK">
    <property type="method" value="X-ray"/>
    <property type="resolution" value="1.35 A"/>
    <property type="chains" value="A=1486-1647"/>
</dbReference>
<dbReference type="PDB" id="1UZP">
    <property type="method" value="X-ray"/>
    <property type="resolution" value="1.78 A"/>
    <property type="chains" value="A=1486-1647"/>
</dbReference>
<dbReference type="PDB" id="1UZQ">
    <property type="method" value="X-ray"/>
    <property type="resolution" value="2.40 A"/>
    <property type="chains" value="A=1486-1647"/>
</dbReference>
<dbReference type="PDB" id="2M74">
    <property type="method" value="NMR"/>
    <property type="chains" value="A=45-178"/>
</dbReference>
<dbReference type="PDB" id="2W86">
    <property type="method" value="X-ray"/>
    <property type="resolution" value="1.80 A"/>
    <property type="chains" value="A=807-951"/>
</dbReference>
<dbReference type="PDB" id="5MS9">
    <property type="method" value="NMR"/>
    <property type="chains" value="A=113-287"/>
</dbReference>
<dbReference type="PDBsum" id="1APJ"/>
<dbReference type="PDBsum" id="1EMN"/>
<dbReference type="PDBsum" id="1EMO"/>
<dbReference type="PDBsum" id="1LMJ"/>
<dbReference type="PDBsum" id="1UZJ"/>
<dbReference type="PDBsum" id="1UZK"/>
<dbReference type="PDBsum" id="1UZP"/>
<dbReference type="PDBsum" id="1UZQ"/>
<dbReference type="PDBsum" id="2M74"/>
<dbReference type="PDBsum" id="2W86"/>
<dbReference type="PDBsum" id="5MS9"/>
<dbReference type="BMRB" id="P35555"/>
<dbReference type="SASBDB" id="P35555"/>
<dbReference type="SMR" id="P35555"/>
<dbReference type="BioGRID" id="108494">
    <property type="interactions" value="32"/>
</dbReference>
<dbReference type="CORUM" id="P35555"/>
<dbReference type="DIP" id="DIP-29985N"/>
<dbReference type="ELM" id="P35555"/>
<dbReference type="FunCoup" id="P35555">
    <property type="interactions" value="549"/>
</dbReference>
<dbReference type="IntAct" id="P35555">
    <property type="interactions" value="40"/>
</dbReference>
<dbReference type="MINT" id="P35555"/>
<dbReference type="STRING" id="9606.ENSP00000325527"/>
<dbReference type="GlyConnect" id="1235">
    <property type="glycosylation" value="62 N-Linked glycans (12 sites)"/>
</dbReference>
<dbReference type="GlyCosmos" id="P35555">
    <property type="glycosylation" value="46 sites, 69 glycans"/>
</dbReference>
<dbReference type="GlyGen" id="P35555">
    <property type="glycosylation" value="50 sites, 108 N-linked glycans (14 sites), 2 O-linked glycans (3 sites)"/>
</dbReference>
<dbReference type="iPTMnet" id="P35555"/>
<dbReference type="PhosphoSitePlus" id="P35555"/>
<dbReference type="SwissPalm" id="P35555"/>
<dbReference type="BioMuta" id="FBN1"/>
<dbReference type="DMDM" id="311033452"/>
<dbReference type="CPTAC" id="CPTAC-5850"/>
<dbReference type="CPTAC" id="CPTAC-5851"/>
<dbReference type="CPTAC" id="CPTAC-5852"/>
<dbReference type="CPTAC" id="CPTAC-5875"/>
<dbReference type="CPTAC" id="CPTAC-5876"/>
<dbReference type="CPTAC" id="CPTAC-5877"/>
<dbReference type="jPOST" id="P35555"/>
<dbReference type="MassIVE" id="P35555"/>
<dbReference type="PaxDb" id="9606-ENSP00000325527"/>
<dbReference type="PeptideAtlas" id="P35555"/>
<dbReference type="ProteomicsDB" id="55081"/>
<dbReference type="Pumba" id="P35555"/>
<dbReference type="Antibodypedia" id="2908">
    <property type="antibodies" value="520 antibodies from 37 providers"/>
</dbReference>
<dbReference type="CPTC" id="P35555">
    <property type="antibodies" value="3 antibodies"/>
</dbReference>
<dbReference type="DNASU" id="2200"/>
<dbReference type="Ensembl" id="ENST00000316623.10">
    <property type="protein sequence ID" value="ENSP00000325527.5"/>
    <property type="gene ID" value="ENSG00000166147.16"/>
</dbReference>
<dbReference type="GeneID" id="2200"/>
<dbReference type="KEGG" id="hsa:2200"/>
<dbReference type="MANE-Select" id="ENST00000316623.10">
    <property type="protein sequence ID" value="ENSP00000325527.5"/>
    <property type="RefSeq nucleotide sequence ID" value="NM_000138.5"/>
    <property type="RefSeq protein sequence ID" value="NP_000129.3"/>
</dbReference>
<dbReference type="UCSC" id="uc001zwx.3">
    <property type="organism name" value="human"/>
</dbReference>
<dbReference type="AGR" id="HGNC:3603"/>
<dbReference type="CTD" id="2200"/>
<dbReference type="DisGeNET" id="2200"/>
<dbReference type="GeneCards" id="FBN1"/>
<dbReference type="GeneReviews" id="FBN1"/>
<dbReference type="HGNC" id="HGNC:3603">
    <property type="gene designation" value="FBN1"/>
</dbReference>
<dbReference type="HPA" id="ENSG00000166147">
    <property type="expression patterns" value="Tissue enhanced (adipose tissue, placenta)"/>
</dbReference>
<dbReference type="MalaCards" id="FBN1"/>
<dbReference type="MIM" id="102370">
    <property type="type" value="phenotype"/>
</dbReference>
<dbReference type="MIM" id="129600">
    <property type="type" value="phenotype"/>
</dbReference>
<dbReference type="MIM" id="134797">
    <property type="type" value="gene"/>
</dbReference>
<dbReference type="MIM" id="154700">
    <property type="type" value="phenotype"/>
</dbReference>
<dbReference type="MIM" id="184900">
    <property type="type" value="phenotype"/>
</dbReference>
<dbReference type="MIM" id="604308">
    <property type="type" value="phenotype"/>
</dbReference>
<dbReference type="MIM" id="608328">
    <property type="type" value="phenotype"/>
</dbReference>
<dbReference type="MIM" id="614185">
    <property type="type" value="phenotype"/>
</dbReference>
<dbReference type="MIM" id="616914">
    <property type="type" value="phenotype"/>
</dbReference>
<dbReference type="neXtProt" id="NX_P35555"/>
<dbReference type="OpenTargets" id="ENSG00000166147"/>
<dbReference type="Orphanet" id="969">
    <property type="disease" value="Acromicric dysplasia"/>
</dbReference>
<dbReference type="Orphanet" id="91387">
    <property type="disease" value="Familial thoracic aortic aneurysm and aortic dissection"/>
</dbReference>
<dbReference type="Orphanet" id="2623">
    <property type="disease" value="Geleophysic dysplasia"/>
</dbReference>
<dbReference type="Orphanet" id="2084">
    <property type="disease" value="Glaucoma-ectopia lentis-microspherophakia-stiff joints-short stature syndrome"/>
</dbReference>
<dbReference type="Orphanet" id="1885">
    <property type="disease" value="Isolated ectopia lentis"/>
</dbReference>
<dbReference type="Orphanet" id="284963">
    <property type="disease" value="Marfan syndrome type 1"/>
</dbReference>
<dbReference type="Orphanet" id="284979">
    <property type="disease" value="Neonatal Marfan syndrome"/>
</dbReference>
<dbReference type="Orphanet" id="300382">
    <property type="disease" value="Progeroid and marfanoid aspect-lipodystrophy syndrome"/>
</dbReference>
<dbReference type="Orphanet" id="2462">
    <property type="disease" value="Shprintzen-Goldberg syndrome"/>
</dbReference>
<dbReference type="Orphanet" id="2833">
    <property type="disease" value="Stiff skin syndrome"/>
</dbReference>
<dbReference type="Orphanet" id="3449">
    <property type="disease" value="Weill-Marchesani syndrome"/>
</dbReference>
<dbReference type="PharmGKB" id="PA28016"/>
<dbReference type="VEuPathDB" id="HostDB:ENSG00000166147"/>
<dbReference type="eggNOG" id="KOG1217">
    <property type="taxonomic scope" value="Eukaryota"/>
</dbReference>
<dbReference type="GeneTree" id="ENSGT00950000183158"/>
<dbReference type="HOGENOM" id="CLU_000233_0_0_1"/>
<dbReference type="InParanoid" id="P35555"/>
<dbReference type="OMA" id="DPKCHAG"/>
<dbReference type="OrthoDB" id="4062651at2759"/>
<dbReference type="PAN-GO" id="P35555">
    <property type="GO annotations" value="3 GO annotations based on evolutionary models"/>
</dbReference>
<dbReference type="PhylomeDB" id="P35555"/>
<dbReference type="TreeFam" id="TF316849"/>
<dbReference type="PathwayCommons" id="P35555"/>
<dbReference type="Reactome" id="R-HSA-1474228">
    <property type="pathway name" value="Degradation of the extracellular matrix"/>
</dbReference>
<dbReference type="Reactome" id="R-HSA-1566948">
    <property type="pathway name" value="Elastic fibre formation"/>
</dbReference>
<dbReference type="Reactome" id="R-HSA-2129379">
    <property type="pathway name" value="Molecules associated with elastic fibres"/>
</dbReference>
<dbReference type="Reactome" id="R-HSA-216083">
    <property type="pathway name" value="Integrin cell surface interactions"/>
</dbReference>
<dbReference type="Reactome" id="R-HSA-2173789">
    <property type="pathway name" value="TGF-beta receptor signaling activates SMADs"/>
</dbReference>
<dbReference type="Reactome" id="R-HSA-381426">
    <property type="pathway name" value="Regulation of Insulin-like Growth Factor (IGF) transport and uptake by Insulin-like Growth Factor Binding Proteins (IGFBPs)"/>
</dbReference>
<dbReference type="Reactome" id="R-HSA-8957275">
    <property type="pathway name" value="Post-translational protein phosphorylation"/>
</dbReference>
<dbReference type="SignaLink" id="P35555"/>
<dbReference type="SIGNOR" id="P35555"/>
<dbReference type="BioGRID-ORCS" id="2200">
    <property type="hits" value="8 hits in 1157 CRISPR screens"/>
</dbReference>
<dbReference type="CD-CODE" id="694DAD9E">
    <property type="entry name" value="Synthetic Condensate 000259"/>
</dbReference>
<dbReference type="ChiTaRS" id="FBN1">
    <property type="organism name" value="human"/>
</dbReference>
<dbReference type="EvolutionaryTrace" id="P35555"/>
<dbReference type="GeneWiki" id="FBN1"/>
<dbReference type="GenomeRNAi" id="2200"/>
<dbReference type="Pharos" id="P35555">
    <property type="development level" value="Tbio"/>
</dbReference>
<dbReference type="PRO" id="PR:P35555"/>
<dbReference type="Proteomes" id="UP000005640">
    <property type="component" value="Chromosome 15"/>
</dbReference>
<dbReference type="RNAct" id="P35555">
    <property type="molecule type" value="protein"/>
</dbReference>
<dbReference type="Bgee" id="ENSG00000166147">
    <property type="expression patterns" value="Expressed in synovial joint and 193 other cell types or tissues"/>
</dbReference>
<dbReference type="ExpressionAtlas" id="P35555">
    <property type="expression patterns" value="baseline and differential"/>
</dbReference>
<dbReference type="GO" id="GO:0005604">
    <property type="term" value="C:basement membrane"/>
    <property type="evidence" value="ECO:0000314"/>
    <property type="project" value="UniProtKB"/>
</dbReference>
<dbReference type="GO" id="GO:0062023">
    <property type="term" value="C:collagen-containing extracellular matrix"/>
    <property type="evidence" value="ECO:0007005"/>
    <property type="project" value="UniProtKB"/>
</dbReference>
<dbReference type="GO" id="GO:0005788">
    <property type="term" value="C:endoplasmic reticulum lumen"/>
    <property type="evidence" value="ECO:0000304"/>
    <property type="project" value="Reactome"/>
</dbReference>
<dbReference type="GO" id="GO:0031012">
    <property type="term" value="C:extracellular matrix"/>
    <property type="evidence" value="ECO:0000314"/>
    <property type="project" value="UniProtKB"/>
</dbReference>
<dbReference type="GO" id="GO:0005576">
    <property type="term" value="C:extracellular region"/>
    <property type="evidence" value="ECO:0000314"/>
    <property type="project" value="UniProtKB"/>
</dbReference>
<dbReference type="GO" id="GO:0005615">
    <property type="term" value="C:extracellular space"/>
    <property type="evidence" value="ECO:0000314"/>
    <property type="project" value="UniProtKB"/>
</dbReference>
<dbReference type="GO" id="GO:0001527">
    <property type="term" value="C:microfibril"/>
    <property type="evidence" value="ECO:0000314"/>
    <property type="project" value="UniProtKB"/>
</dbReference>
<dbReference type="GO" id="GO:0005509">
    <property type="term" value="F:calcium ion binding"/>
    <property type="evidence" value="ECO:0000314"/>
    <property type="project" value="UniProtKB"/>
</dbReference>
<dbReference type="GO" id="GO:0030023">
    <property type="term" value="F:extracellular matrix constituent conferring elasticity"/>
    <property type="evidence" value="ECO:0000305"/>
    <property type="project" value="UniProtKB"/>
</dbReference>
<dbReference type="GO" id="GO:0005201">
    <property type="term" value="F:extracellular matrix structural constituent"/>
    <property type="evidence" value="ECO:0000314"/>
    <property type="project" value="UniProtKB"/>
</dbReference>
<dbReference type="GO" id="GO:0008201">
    <property type="term" value="F:heparin binding"/>
    <property type="evidence" value="ECO:0000314"/>
    <property type="project" value="UniProtKB"/>
</dbReference>
<dbReference type="GO" id="GO:0005179">
    <property type="term" value="F:hormone activity"/>
    <property type="evidence" value="ECO:0007669"/>
    <property type="project" value="UniProtKB-KW"/>
</dbReference>
<dbReference type="GO" id="GO:0042802">
    <property type="term" value="F:identical protein binding"/>
    <property type="evidence" value="ECO:0000353"/>
    <property type="project" value="IntAct"/>
</dbReference>
<dbReference type="GO" id="GO:0005178">
    <property type="term" value="F:integrin binding"/>
    <property type="evidence" value="ECO:0000353"/>
    <property type="project" value="UniProtKB"/>
</dbReference>
<dbReference type="GO" id="GO:0044877">
    <property type="term" value="F:protein-containing complex binding"/>
    <property type="evidence" value="ECO:0000353"/>
    <property type="project" value="UniProtKB"/>
</dbReference>
<dbReference type="GO" id="GO:0009653">
    <property type="term" value="P:anatomical structure morphogenesis"/>
    <property type="evidence" value="ECO:0000318"/>
    <property type="project" value="GO_Central"/>
</dbReference>
<dbReference type="GO" id="GO:0043010">
    <property type="term" value="P:camera-type eye development"/>
    <property type="evidence" value="ECO:0000270"/>
    <property type="project" value="UniProtKB"/>
</dbReference>
<dbReference type="GO" id="GO:0033627">
    <property type="term" value="P:cell adhesion mediated by integrin"/>
    <property type="evidence" value="ECO:0000314"/>
    <property type="project" value="UniProtKB"/>
</dbReference>
<dbReference type="GO" id="GO:1990314">
    <property type="term" value="P:cellular response to insulin-like growth factor stimulus"/>
    <property type="evidence" value="ECO:0007669"/>
    <property type="project" value="Ensembl"/>
</dbReference>
<dbReference type="GO" id="GO:0071560">
    <property type="term" value="P:cellular response to transforming growth factor beta stimulus"/>
    <property type="evidence" value="ECO:0007669"/>
    <property type="project" value="Ensembl"/>
</dbReference>
<dbReference type="GO" id="GO:0048048">
    <property type="term" value="P:embryonic eye morphogenesis"/>
    <property type="evidence" value="ECO:0000270"/>
    <property type="project" value="UniProtKB"/>
</dbReference>
<dbReference type="GO" id="GO:0010467">
    <property type="term" value="P:gene expression"/>
    <property type="evidence" value="ECO:0007669"/>
    <property type="project" value="Ensembl"/>
</dbReference>
<dbReference type="GO" id="GO:0007507">
    <property type="term" value="P:heart development"/>
    <property type="evidence" value="ECO:0000315"/>
    <property type="project" value="UniProtKB"/>
</dbReference>
<dbReference type="GO" id="GO:0048286">
    <property type="term" value="P:lung alveolus development"/>
    <property type="evidence" value="ECO:0007669"/>
    <property type="project" value="Ensembl"/>
</dbReference>
<dbReference type="GO" id="GO:0001656">
    <property type="term" value="P:metanephros development"/>
    <property type="evidence" value="ECO:0007669"/>
    <property type="project" value="Ensembl"/>
</dbReference>
<dbReference type="GO" id="GO:2001205">
    <property type="term" value="P:negative regulation of osteoclast development"/>
    <property type="evidence" value="ECO:0000314"/>
    <property type="project" value="UniProtKB"/>
</dbReference>
<dbReference type="GO" id="GO:0045671">
    <property type="term" value="P:negative regulation of osteoclast differentiation"/>
    <property type="evidence" value="ECO:0000314"/>
    <property type="project" value="UniProtKB"/>
</dbReference>
<dbReference type="GO" id="GO:0048050">
    <property type="term" value="P:post-embryonic eye morphogenesis"/>
    <property type="evidence" value="ECO:0000270"/>
    <property type="project" value="UniProtKB"/>
</dbReference>
<dbReference type="GO" id="GO:0035582">
    <property type="term" value="P:sequestering of BMP in extracellular matrix"/>
    <property type="evidence" value="ECO:0000250"/>
    <property type="project" value="BHF-UCL"/>
</dbReference>
<dbReference type="GO" id="GO:0035583">
    <property type="term" value="P:sequestering of TGFbeta in extracellular matrix"/>
    <property type="evidence" value="ECO:0000250"/>
    <property type="project" value="BHF-UCL"/>
</dbReference>
<dbReference type="GO" id="GO:0001501">
    <property type="term" value="P:skeletal system development"/>
    <property type="evidence" value="ECO:0000315"/>
    <property type="project" value="UniProtKB"/>
</dbReference>
<dbReference type="CDD" id="cd00054">
    <property type="entry name" value="EGF_CA"/>
    <property type="match status" value="30"/>
</dbReference>
<dbReference type="FunFam" id="2.10.25.10:FF:000005">
    <property type="entry name" value="Fibrillin 2"/>
    <property type="match status" value="1"/>
</dbReference>
<dbReference type="FunFam" id="2.10.25.10:FF:000023">
    <property type="entry name" value="Fibrillin 2"/>
    <property type="match status" value="2"/>
</dbReference>
<dbReference type="FunFam" id="2.10.25.10:FF:000038">
    <property type="entry name" value="Fibrillin 2"/>
    <property type="match status" value="1"/>
</dbReference>
<dbReference type="FunFam" id="2.10.25.10:FF:000044">
    <property type="entry name" value="Fibrillin 2"/>
    <property type="match status" value="2"/>
</dbReference>
<dbReference type="FunFam" id="2.10.25.10:FF:000049">
    <property type="entry name" value="Fibrillin 2"/>
    <property type="match status" value="2"/>
</dbReference>
<dbReference type="FunFam" id="2.10.25.10:FF:000058">
    <property type="entry name" value="Fibrillin 2"/>
    <property type="match status" value="1"/>
</dbReference>
<dbReference type="FunFam" id="2.10.25.10:FF:000071">
    <property type="entry name" value="Fibrillin 2"/>
    <property type="match status" value="1"/>
</dbReference>
<dbReference type="FunFam" id="2.10.25.10:FF:000086">
    <property type="entry name" value="Fibrillin 2"/>
    <property type="match status" value="1"/>
</dbReference>
<dbReference type="FunFam" id="2.10.25.10:FF:000087">
    <property type="entry name" value="Fibrillin 2"/>
    <property type="match status" value="1"/>
</dbReference>
<dbReference type="FunFam" id="2.10.25.10:FF:000097">
    <property type="entry name" value="Fibrillin 2"/>
    <property type="match status" value="1"/>
</dbReference>
<dbReference type="FunFam" id="2.10.25.10:FF:000107">
    <property type="entry name" value="Fibrillin 2"/>
    <property type="match status" value="1"/>
</dbReference>
<dbReference type="FunFam" id="2.10.25.10:FF:000131">
    <property type="entry name" value="Fibrillin 2"/>
    <property type="match status" value="1"/>
</dbReference>
<dbReference type="FunFam" id="2.10.25.10:FF:000141">
    <property type="entry name" value="Fibrillin 2"/>
    <property type="match status" value="1"/>
</dbReference>
<dbReference type="FunFam" id="2.10.25.10:FF:000159">
    <property type="entry name" value="Fibrillin 2"/>
    <property type="match status" value="1"/>
</dbReference>
<dbReference type="FunFam" id="2.10.25.10:FF:000196">
    <property type="entry name" value="Fibrillin 2"/>
    <property type="match status" value="1"/>
</dbReference>
<dbReference type="FunFam" id="3.90.290.10:FF:000005">
    <property type="entry name" value="Fibrillin 2"/>
    <property type="match status" value="1"/>
</dbReference>
<dbReference type="FunFam" id="3.90.290.10:FF:000006">
    <property type="entry name" value="Fibrillin 2"/>
    <property type="match status" value="1"/>
</dbReference>
<dbReference type="FunFam" id="3.90.290.10:FF:000007">
    <property type="entry name" value="Fibrillin 2"/>
    <property type="match status" value="1"/>
</dbReference>
<dbReference type="FunFam" id="3.90.290.10:FF:000009">
    <property type="entry name" value="Fibrillin 2"/>
    <property type="match status" value="1"/>
</dbReference>
<dbReference type="FunFam" id="3.90.290.10:FF:000010">
    <property type="entry name" value="Fibrillin 2"/>
    <property type="match status" value="1"/>
</dbReference>
<dbReference type="FunFam" id="3.90.290.10:FF:000011">
    <property type="entry name" value="Fibrillin 2"/>
    <property type="match status" value="1"/>
</dbReference>
<dbReference type="FunFam" id="2.10.25.10:FF:000133">
    <property type="entry name" value="Fibrillin 3"/>
    <property type="match status" value="1"/>
</dbReference>
<dbReference type="FunFam" id="3.90.290.10:FF:000003">
    <property type="entry name" value="Fibrillin 3"/>
    <property type="match status" value="1"/>
</dbReference>
<dbReference type="FunFam" id="3.90.290.10:FF:000008">
    <property type="entry name" value="Fibrillin 3"/>
    <property type="match status" value="1"/>
</dbReference>
<dbReference type="FunFam" id="3.90.290.10:FF:000020">
    <property type="entry name" value="Fibrillin-1"/>
    <property type="match status" value="1"/>
</dbReference>
<dbReference type="FunFam" id="2.10.25.10:FF:000003">
    <property type="entry name" value="fibrillin-1 isoform X1"/>
    <property type="match status" value="13"/>
</dbReference>
<dbReference type="FunFam" id="2.10.25.10:FF:000019">
    <property type="entry name" value="latent-transforming growth factor beta-binding protein 1 isoform X2"/>
    <property type="match status" value="1"/>
</dbReference>
<dbReference type="FunFam" id="2.10.25.10:FF:000002">
    <property type="entry name" value="Latent-transforming growth factor beta-binding protein 3"/>
    <property type="match status" value="1"/>
</dbReference>
<dbReference type="FunFam" id="2.10.25.10:FF:000014">
    <property type="entry name" value="Latent-transforming growth factor beta-binding protein 3"/>
    <property type="match status" value="1"/>
</dbReference>
<dbReference type="FunFam" id="2.10.25.10:FF:000620">
    <property type="entry name" value="Mutant fibrillin-1"/>
    <property type="match status" value="1"/>
</dbReference>
<dbReference type="FunFam" id="2.10.25.10:FF:000010">
    <property type="entry name" value="Pro-epidermal growth factor"/>
    <property type="match status" value="2"/>
</dbReference>
<dbReference type="FunFam" id="2.10.25.10:FF:000096">
    <property type="entry name" value="Putative fibrillin 2"/>
    <property type="match status" value="1"/>
</dbReference>
<dbReference type="FunFam" id="2.10.25.10:FF:000024">
    <property type="entry name" value="Putative latent-transforming growth factor beta-binding protein 2"/>
    <property type="match status" value="1"/>
</dbReference>
<dbReference type="FunFam" id="2.10.25.10:FF:000008">
    <property type="entry name" value="Signal peptide, CUB domain, EGF-like 2"/>
    <property type="match status" value="1"/>
</dbReference>
<dbReference type="Gene3D" id="2.10.25.10">
    <property type="entry name" value="Laminin"/>
    <property type="match status" value="46"/>
</dbReference>
<dbReference type="Gene3D" id="3.90.290.10">
    <property type="entry name" value="TGF-beta binding (TB) domain"/>
    <property type="match status" value="9"/>
</dbReference>
<dbReference type="InterPro" id="IPR026823">
    <property type="entry name" value="cEGF"/>
</dbReference>
<dbReference type="InterPro" id="IPR001881">
    <property type="entry name" value="EGF-like_Ca-bd_dom"/>
</dbReference>
<dbReference type="InterPro" id="IPR013032">
    <property type="entry name" value="EGF-like_CS"/>
</dbReference>
<dbReference type="InterPro" id="IPR000742">
    <property type="entry name" value="EGF-like_dom"/>
</dbReference>
<dbReference type="InterPro" id="IPR000152">
    <property type="entry name" value="EGF-type_Asp/Asn_hydroxyl_site"/>
</dbReference>
<dbReference type="InterPro" id="IPR018097">
    <property type="entry name" value="EGF_Ca-bd_CS"/>
</dbReference>
<dbReference type="InterPro" id="IPR024731">
    <property type="entry name" value="EGF_dom"/>
</dbReference>
<dbReference type="InterPro" id="IPR049388">
    <property type="entry name" value="FBN_EGF_N"/>
</dbReference>
<dbReference type="InterPro" id="IPR040872">
    <property type="entry name" value="Fibrillin_U_N"/>
</dbReference>
<dbReference type="InterPro" id="IPR009030">
    <property type="entry name" value="Growth_fac_rcpt_cys_sf"/>
</dbReference>
<dbReference type="InterPro" id="IPR049883">
    <property type="entry name" value="NOTCH1_EGF-like"/>
</dbReference>
<dbReference type="InterPro" id="IPR017878">
    <property type="entry name" value="TB_dom"/>
</dbReference>
<dbReference type="InterPro" id="IPR036773">
    <property type="entry name" value="TB_dom_sf"/>
</dbReference>
<dbReference type="InterPro" id="IPR052080">
    <property type="entry name" value="vWF_C/EGF_Fibrillin"/>
</dbReference>
<dbReference type="PANTHER" id="PTHR47333:SF5">
    <property type="entry name" value="FIBRILLIN-3"/>
    <property type="match status" value="1"/>
</dbReference>
<dbReference type="PANTHER" id="PTHR47333">
    <property type="entry name" value="VON WILLEBRAND FACTOR C AND EGF DOMAIN-CONTAINING PROTEIN"/>
    <property type="match status" value="1"/>
</dbReference>
<dbReference type="Pfam" id="PF12662">
    <property type="entry name" value="cEGF"/>
    <property type="match status" value="5"/>
</dbReference>
<dbReference type="Pfam" id="PF12947">
    <property type="entry name" value="EGF_3"/>
    <property type="match status" value="1"/>
</dbReference>
<dbReference type="Pfam" id="PF07645">
    <property type="entry name" value="EGF_CA"/>
    <property type="match status" value="32"/>
</dbReference>
<dbReference type="Pfam" id="PF21364">
    <property type="entry name" value="EGF_FBN_1st"/>
    <property type="match status" value="1"/>
</dbReference>
<dbReference type="Pfam" id="PF18193">
    <property type="entry name" value="Fibrillin_U_N"/>
    <property type="match status" value="1"/>
</dbReference>
<dbReference type="Pfam" id="PF14670">
    <property type="entry name" value="FXa_inhibition"/>
    <property type="match status" value="1"/>
</dbReference>
<dbReference type="Pfam" id="PF12661">
    <property type="entry name" value="hEGF"/>
    <property type="match status" value="1"/>
</dbReference>
<dbReference type="Pfam" id="PF00683">
    <property type="entry name" value="TB"/>
    <property type="match status" value="9"/>
</dbReference>
<dbReference type="PIRSF" id="PIRSF036312">
    <property type="entry name" value="Fibrillin"/>
    <property type="match status" value="1"/>
</dbReference>
<dbReference type="SMART" id="SM00181">
    <property type="entry name" value="EGF"/>
    <property type="match status" value="47"/>
</dbReference>
<dbReference type="SMART" id="SM00179">
    <property type="entry name" value="EGF_CA"/>
    <property type="match status" value="44"/>
</dbReference>
<dbReference type="SUPFAM" id="SSF57196">
    <property type="entry name" value="EGF/Laminin"/>
    <property type="match status" value="11"/>
</dbReference>
<dbReference type="SUPFAM" id="SSF57184">
    <property type="entry name" value="Growth factor receptor domain"/>
    <property type="match status" value="11"/>
</dbReference>
<dbReference type="SUPFAM" id="SSF57581">
    <property type="entry name" value="TB module/8-cys domain"/>
    <property type="match status" value="9"/>
</dbReference>
<dbReference type="PROSITE" id="PS00010">
    <property type="entry name" value="ASX_HYDROXYL"/>
    <property type="match status" value="43"/>
</dbReference>
<dbReference type="PROSITE" id="PS00022">
    <property type="entry name" value="EGF_1"/>
    <property type="match status" value="2"/>
</dbReference>
<dbReference type="PROSITE" id="PS01186">
    <property type="entry name" value="EGF_2"/>
    <property type="match status" value="38"/>
</dbReference>
<dbReference type="PROSITE" id="PS50026">
    <property type="entry name" value="EGF_3"/>
    <property type="match status" value="45"/>
</dbReference>
<dbReference type="PROSITE" id="PS01187">
    <property type="entry name" value="EGF_CA"/>
    <property type="match status" value="43"/>
</dbReference>
<dbReference type="PROSITE" id="PS51364">
    <property type="entry name" value="TB"/>
    <property type="match status" value="9"/>
</dbReference>
<feature type="signal peptide" evidence="7">
    <location>
        <begin position="1"/>
        <end position="24"/>
    </location>
</feature>
<feature type="propeptide" id="PRO_0000436881" evidence="7">
    <location>
        <begin position="25"/>
        <end position="44"/>
    </location>
</feature>
<feature type="chain" id="PRO_0000007581" description="Fibrillin-1" evidence="106 109">
    <location>
        <begin position="45"/>
        <end position="2731"/>
    </location>
</feature>
<feature type="chain" id="PRO_0000436882" description="Asprosin" evidence="110 111">
    <location>
        <begin position="2732"/>
        <end position="2871"/>
    </location>
</feature>
<feature type="domain" description="EGF-like 1" evidence="3">
    <location>
        <begin position="81"/>
        <end position="112"/>
    </location>
</feature>
<feature type="domain" description="EGF-like 2" evidence="3">
    <location>
        <begin position="115"/>
        <end position="146"/>
    </location>
</feature>
<feature type="domain" description="EGF-like 3" evidence="3">
    <location>
        <begin position="147"/>
        <end position="178"/>
    </location>
</feature>
<feature type="domain" description="TB 1">
    <location>
        <begin position="184"/>
        <end position="236"/>
    </location>
</feature>
<feature type="domain" description="EGF-like 4; calcium-binding" evidence="3">
    <location>
        <begin position="246"/>
        <end position="287"/>
    </location>
</feature>
<feature type="domain" description="EGF-like 5; calcium-binding" evidence="3">
    <location>
        <begin position="288"/>
        <end position="329"/>
    </location>
</feature>
<feature type="domain" description="TB 2">
    <location>
        <begin position="334"/>
        <end position="389"/>
    </location>
</feature>
<feature type="domain" description="EGF-like 6" evidence="3">
    <location>
        <begin position="449"/>
        <end position="489"/>
    </location>
</feature>
<feature type="domain" description="EGF-like 7; calcium-binding" evidence="3">
    <location>
        <begin position="490"/>
        <end position="529"/>
    </location>
</feature>
<feature type="domain" description="EGF-like 8; calcium-binding" evidence="3">
    <location>
        <begin position="530"/>
        <end position="571"/>
    </location>
</feature>
<feature type="domain" description="EGF-like 9; calcium-binding" evidence="3">
    <location>
        <begin position="572"/>
        <end position="612"/>
    </location>
</feature>
<feature type="domain" description="EGF-like 10; calcium-binding" evidence="3">
    <location>
        <begin position="613"/>
        <end position="653"/>
    </location>
</feature>
<feature type="domain" description="TB 3">
    <location>
        <begin position="659"/>
        <end position="711"/>
    </location>
</feature>
<feature type="domain" description="EGF-like 11; calcium-binding" evidence="3">
    <location>
        <begin position="723"/>
        <end position="764"/>
    </location>
</feature>
<feature type="domain" description="EGF-like 12; calcium-binding" evidence="3">
    <location>
        <begin position="765"/>
        <end position="806"/>
    </location>
</feature>
<feature type="domain" description="EGF-like 13; calcium-binding" evidence="3">
    <location>
        <begin position="807"/>
        <end position="846"/>
    </location>
</feature>
<feature type="domain" description="TB 4">
    <location>
        <begin position="851"/>
        <end position="902"/>
    </location>
</feature>
<feature type="domain" description="EGF-like 14; calcium-binding" evidence="3">
    <location>
        <begin position="910"/>
        <end position="951"/>
    </location>
</feature>
<feature type="domain" description="TB 5">
    <location>
        <begin position="956"/>
        <end position="1008"/>
    </location>
</feature>
<feature type="domain" description="EGF-like 15; calcium-binding" evidence="3">
    <location>
        <begin position="1028"/>
        <end position="1069"/>
    </location>
</feature>
<feature type="domain" description="EGF-like 16; calcium-binding" evidence="3">
    <location>
        <begin position="1070"/>
        <end position="1112"/>
    </location>
</feature>
<feature type="domain" description="EGF-like 17; calcium-binding" evidence="3">
    <location>
        <begin position="1113"/>
        <end position="1154"/>
    </location>
</feature>
<feature type="domain" description="EGF-like 18; calcium-binding" evidence="3">
    <location>
        <begin position="1155"/>
        <end position="1196"/>
    </location>
</feature>
<feature type="domain" description="EGF-like 19; calcium-binding" evidence="3">
    <location>
        <begin position="1197"/>
        <end position="1237"/>
    </location>
</feature>
<feature type="domain" description="EGF-like 20; calcium-binding" evidence="3">
    <location>
        <begin position="1238"/>
        <end position="1279"/>
    </location>
</feature>
<feature type="domain" description="EGF-like 21; calcium-binding" evidence="3">
    <location>
        <begin position="1280"/>
        <end position="1321"/>
    </location>
</feature>
<feature type="domain" description="EGF-like 22; calcium-binding" evidence="3">
    <location>
        <begin position="1322"/>
        <end position="1362"/>
    </location>
</feature>
<feature type="domain" description="EGF-like 23; calcium-binding" evidence="3">
    <location>
        <begin position="1363"/>
        <end position="1403"/>
    </location>
</feature>
<feature type="domain" description="EGF-like 24; calcium-binding" evidence="3">
    <location>
        <begin position="1404"/>
        <end position="1445"/>
    </location>
</feature>
<feature type="domain" description="EGF-like 25; calcium-binding" evidence="3">
    <location>
        <begin position="1446"/>
        <end position="1486"/>
    </location>
</feature>
<feature type="domain" description="EGF-like 26; calcium-binding" evidence="3">
    <location>
        <begin position="1487"/>
        <end position="1527"/>
    </location>
</feature>
<feature type="domain" description="TB 6">
    <location>
        <begin position="1532"/>
        <end position="1589"/>
    </location>
</feature>
<feature type="domain" description="EGF-like 27; calcium-binding" evidence="3">
    <location>
        <begin position="1606"/>
        <end position="1647"/>
    </location>
</feature>
<feature type="domain" description="EGF-like 28; calcium-binding" evidence="3">
    <location>
        <begin position="1648"/>
        <end position="1688"/>
    </location>
</feature>
<feature type="domain" description="TB 7">
    <location>
        <begin position="1693"/>
        <end position="1748"/>
    </location>
</feature>
<feature type="domain" description="EGF-like 29; calcium-binding" evidence="3">
    <location>
        <begin position="1766"/>
        <end position="1807"/>
    </location>
</feature>
<feature type="domain" description="EGF-like 30; calcium-binding" evidence="3">
    <location>
        <begin position="1808"/>
        <end position="1848"/>
    </location>
</feature>
<feature type="domain" description="EGF-like 31; calcium-binding" evidence="3">
    <location>
        <begin position="1849"/>
        <end position="1890"/>
    </location>
</feature>
<feature type="domain" description="EGF-like 32; calcium-binding" evidence="3">
    <location>
        <begin position="1891"/>
        <end position="1929"/>
    </location>
</feature>
<feature type="domain" description="EGF-like 33; calcium-binding" evidence="3">
    <location>
        <begin position="1930"/>
        <end position="1972"/>
    </location>
</feature>
<feature type="domain" description="EGF-like 34; calcium-binding" evidence="3">
    <location>
        <begin position="1973"/>
        <end position="2012"/>
    </location>
</feature>
<feature type="domain" description="EGF-like 35; calcium-binding" evidence="3">
    <location>
        <begin position="2013"/>
        <end position="2054"/>
    </location>
</feature>
<feature type="domain" description="TB 8">
    <location>
        <begin position="2059"/>
        <end position="2111"/>
    </location>
</feature>
<feature type="domain" description="EGF-like 36; calcium-binding" evidence="3">
    <location>
        <begin position="2127"/>
        <end position="2165"/>
    </location>
</feature>
<feature type="domain" description="EGF-like 37; calcium-binding" evidence="3">
    <location>
        <begin position="2166"/>
        <end position="2205"/>
    </location>
</feature>
<feature type="domain" description="EGF-like 38; calcium-binding" evidence="3">
    <location>
        <begin position="2206"/>
        <end position="2246"/>
    </location>
</feature>
<feature type="domain" description="EGF-like 39; calcium-binding" evidence="3">
    <location>
        <begin position="2247"/>
        <end position="2290"/>
    </location>
</feature>
<feature type="domain" description="EGF-like 40; calcium-binding" evidence="3">
    <location>
        <begin position="2291"/>
        <end position="2332"/>
    </location>
</feature>
<feature type="domain" description="TB 9">
    <location>
        <begin position="2337"/>
        <end position="2390"/>
    </location>
</feature>
<feature type="domain" description="EGF-like 41; calcium-binding" evidence="3">
    <location>
        <begin position="2402"/>
        <end position="2443"/>
    </location>
</feature>
<feature type="domain" description="EGF-like 42; calcium-binding" evidence="3">
    <location>
        <begin position="2444"/>
        <end position="2484"/>
    </location>
</feature>
<feature type="domain" description="EGF-like 43; calcium-binding" evidence="3">
    <location>
        <begin position="2485"/>
        <end position="2523"/>
    </location>
</feature>
<feature type="domain" description="EGF-like 44; calcium-binding" evidence="3">
    <location>
        <begin position="2524"/>
        <end position="2566"/>
    </location>
</feature>
<feature type="domain" description="EGF-like 45; calcium-binding" evidence="3">
    <location>
        <begin position="2567"/>
        <end position="2606"/>
    </location>
</feature>
<feature type="domain" description="EGF-like 46; calcium-binding" evidence="3">
    <location>
        <begin position="2607"/>
        <end position="2647"/>
    </location>
</feature>
<feature type="domain" description="EGF-like 47; calcium-binding" evidence="3">
    <location>
        <begin position="2648"/>
        <end position="2687"/>
    </location>
</feature>
<feature type="region of interest" description="N-terminal domain" evidence="9">
    <location>
        <begin position="45"/>
        <end position="450"/>
    </location>
</feature>
<feature type="region of interest" description="Fibrillin unique N-terminal (FUN) domain" evidence="108">
    <location>
        <begin position="45"/>
        <end position="81"/>
    </location>
</feature>
<feature type="region of interest" description="Interaction with MFAP4" evidence="63">
    <location>
        <begin position="119"/>
        <end position="329"/>
    </location>
</feature>
<feature type="region of interest" description="Hybrid domain 1" evidence="107">
    <location>
        <begin position="195"/>
        <end position="221"/>
    </location>
</feature>
<feature type="region of interest" description="Hybrid domain 2" evidence="107">
    <location>
        <begin position="862"/>
        <end position="887"/>
    </location>
</feature>
<feature type="region of interest" description="C-terminal domain" evidence="9">
    <location>
        <begin position="1528"/>
        <end position="2731"/>
    </location>
</feature>
<feature type="region of interest" description="Disordered" evidence="4">
    <location>
        <begin position="2726"/>
        <end position="2746"/>
    </location>
</feature>
<feature type="short sequence motif" description="Cell attachment site" evidence="17">
    <location>
        <begin position="1541"/>
        <end position="1543"/>
    </location>
</feature>
<feature type="compositionally biased region" description="Polar residues" evidence="4">
    <location>
        <begin position="2735"/>
        <end position="2746"/>
    </location>
</feature>
<feature type="site" description="Cleavage; by furin" evidence="106">
    <location>
        <begin position="44"/>
        <end position="45"/>
    </location>
</feature>
<feature type="site" description="Cleavage; by furin" evidence="61 99">
    <location>
        <begin position="2731"/>
        <end position="2732"/>
    </location>
</feature>
<feature type="modified residue" description="Phosphoserine; by FAM20C" evidence="62 113">
    <location>
        <position position="2702"/>
    </location>
</feature>
<feature type="modified residue" description="Phosphoserine" evidence="1">
    <location>
        <position position="2709"/>
    </location>
</feature>
<feature type="glycosylation site" description="O-linked (Glc) serine" evidence="72">
    <location>
        <position position="268"/>
    </location>
</feature>
<feature type="glycosylation site" description="N-linked (GlcNAc...) asparagine" evidence="37">
    <location>
        <position position="448"/>
    </location>
</feature>
<feature type="glycosylation site" description="O-linked (Glc) serine" evidence="72">
    <location>
        <position position="471"/>
    </location>
</feature>
<feature type="glycosylation site" description="O-linked (Glc) serine" evidence="72">
    <location>
        <position position="510"/>
    </location>
</feature>
<feature type="glycosylation site" description="O-linked (Glc) serine" evidence="72">
    <location>
        <position position="552"/>
    </location>
</feature>
<feature type="glycosylation site" description="O-linked (Glc) serine" evidence="72">
    <location>
        <position position="593"/>
    </location>
</feature>
<feature type="glycosylation site" description="O-linked (Glc) serine" evidence="72">
    <location>
        <position position="634"/>
    </location>
</feature>
<feature type="glycosylation site" description="O-linked (Glc) serine" evidence="72">
    <location>
        <position position="787"/>
    </location>
</feature>
<feature type="glycosylation site" description="O-linked (Glc) serine" evidence="72">
    <location>
        <position position="827"/>
    </location>
</feature>
<feature type="glycosylation site" description="O-linked (Glc) serine" evidence="72">
    <location>
        <position position="1050"/>
    </location>
</feature>
<feature type="glycosylation site" description="N-linked (GlcNAc...) asparagine" evidence="37">
    <location>
        <position position="1067"/>
    </location>
</feature>
<feature type="glycosylation site" description="O-linked (Glc) serine" evidence="72">
    <location>
        <position position="1135"/>
    </location>
</feature>
<feature type="glycosylation site" description="N-linked (GlcNAc...) asparagine" evidence="2">
    <location>
        <position position="1149"/>
    </location>
</feature>
<feature type="glycosylation site" description="O-linked (Glc) serine" evidence="72">
    <location>
        <position position="1218"/>
    </location>
</feature>
<feature type="glycosylation site" description="O-linked (Glc) serine" evidence="72">
    <location>
        <position position="1302"/>
    </location>
</feature>
<feature type="glycosylation site" description="O-linked (Glc) serine" evidence="72">
    <location>
        <position position="1345"/>
    </location>
</feature>
<feature type="glycosylation site" description="N-linked (GlcNAc...) asparagine" evidence="2">
    <location>
        <position position="1369"/>
    </location>
</feature>
<feature type="glycosylation site" description="O-linked (Glc) serine" evidence="72">
    <location>
        <position position="1386"/>
    </location>
</feature>
<feature type="glycosylation site" description="N-linked (GlcNAc...) asparagine" evidence="37">
    <location>
        <position position="1484"/>
    </location>
</feature>
<feature type="glycosylation site" description="O-linked (Glc) serine" evidence="72">
    <location>
        <position position="1508"/>
    </location>
</feature>
<feature type="glycosylation site" description="N-linked (GlcNAc...) asparagine" evidence="37">
    <location>
        <position position="1581"/>
    </location>
</feature>
<feature type="glycosylation site" description="O-linked (Glc) serine" evidence="72">
    <location>
        <position position="1628"/>
    </location>
</feature>
<feature type="glycosylation site" description="N-linked (GlcNAc...) asparagine" evidence="2">
    <location>
        <position position="1669"/>
    </location>
</feature>
<feature type="glycosylation site" description="N-linked (GlcNAc...) asparagine" evidence="2">
    <location>
        <position position="1703"/>
    </location>
</feature>
<feature type="glycosylation site" description="N-linked (GlcNAc...) asparagine" evidence="2">
    <location>
        <position position="1713"/>
    </location>
</feature>
<feature type="glycosylation site" description="O-linked (Glc) serine" evidence="72">
    <location>
        <position position="1830"/>
    </location>
</feature>
<feature type="glycosylation site" description="O-linked (Glc) serine" evidence="72">
    <location>
        <position position="1871"/>
    </location>
</feature>
<feature type="glycosylation site" description="N-linked (GlcNAc...) asparagine" evidence="2">
    <location>
        <position position="1902"/>
    </location>
</feature>
<feature type="glycosylation site" description="O-linked (Glc) serine" evidence="72">
    <location>
        <position position="1911"/>
    </location>
</feature>
<feature type="glycosylation site" description="O-linked (Glc) serine" evidence="72">
    <location>
        <position position="1953"/>
    </location>
</feature>
<feature type="glycosylation site" description="O-linked (Glc) serine" evidence="72">
    <location>
        <position position="2035"/>
    </location>
</feature>
<feature type="glycosylation site" description="N-linked (GlcNAc...) asparagine" evidence="2">
    <location>
        <position position="2077"/>
    </location>
</feature>
<feature type="glycosylation site" description="O-linked (Glc) serine" evidence="72">
    <location>
        <position position="2148"/>
    </location>
</feature>
<feature type="glycosylation site" description="N-linked (GlcNAc...) asparagine" evidence="2">
    <location>
        <position position="2178"/>
    </location>
</feature>
<feature type="glycosylation site" description="O-linked (Glc) serine" evidence="72">
    <location>
        <position position="2227"/>
    </location>
</feature>
<feature type="glycosylation site" description="O-linked (Glc) serine" evidence="72">
    <location>
        <position position="2313"/>
    </location>
</feature>
<feature type="glycosylation site" description="O-linked (Glc) serine" evidence="72">
    <location>
        <position position="2465"/>
    </location>
</feature>
<feature type="glycosylation site" description="O-linked (Glc) serine" evidence="72">
    <location>
        <position position="2547"/>
    </location>
</feature>
<feature type="glycosylation site" description="O-linked (Glc) serine" evidence="72">
    <location>
        <position position="2628"/>
    </location>
</feature>
<feature type="glycosylation site" description="N-linked (GlcNAc...) asparagine" evidence="2">
    <location>
        <position position="2734"/>
    </location>
</feature>
<feature type="glycosylation site" description="N-linked (GlcNAc...) asparagine" evidence="2">
    <location>
        <position position="2750"/>
    </location>
</feature>
<feature type="glycosylation site" description="N-linked (GlcNAc...) asparagine" evidence="2">
    <location>
        <position position="2767"/>
    </location>
</feature>
<feature type="disulfide bond" evidence="56">
    <location>
        <begin position="59"/>
        <end position="68"/>
    </location>
</feature>
<feature type="disulfide bond" evidence="56">
    <location>
        <begin position="67"/>
        <end position="80"/>
    </location>
</feature>
<feature type="disulfide bond" evidence="3 56">
    <location>
        <begin position="85"/>
        <end position="94"/>
    </location>
</feature>
<feature type="disulfide bond" evidence="3 56">
    <location>
        <begin position="89"/>
        <end position="100"/>
    </location>
</feature>
<feature type="disulfide bond" evidence="3 56">
    <location>
        <begin position="102"/>
        <end position="111"/>
    </location>
</feature>
<feature type="disulfide bond" evidence="3 56">
    <location>
        <begin position="119"/>
        <end position="129"/>
    </location>
</feature>
<feature type="disulfide bond" evidence="3 56">
    <location>
        <begin position="123"/>
        <end position="134"/>
    </location>
</feature>
<feature type="disulfide bond" evidence="3 56">
    <location>
        <begin position="136"/>
        <end position="145"/>
    </location>
</feature>
<feature type="disulfide bond" evidence="3 56">
    <location>
        <begin position="150"/>
        <end position="160"/>
    </location>
</feature>
<feature type="disulfide bond" evidence="3 56">
    <location>
        <begin position="154"/>
        <end position="166"/>
    </location>
</feature>
<feature type="disulfide bond" evidence="3 56">
    <location>
        <begin position="168"/>
        <end position="177"/>
    </location>
</feature>
<feature type="disulfide bond" evidence="3">
    <location>
        <begin position="250"/>
        <end position="262"/>
    </location>
</feature>
<feature type="disulfide bond" evidence="3">
    <location>
        <begin position="257"/>
        <end position="271"/>
    </location>
</feature>
<feature type="disulfide bond" evidence="3">
    <location>
        <begin position="273"/>
        <end position="286"/>
    </location>
</feature>
<feature type="disulfide bond" evidence="3">
    <location>
        <begin position="292"/>
        <end position="304"/>
    </location>
</feature>
<feature type="disulfide bond" evidence="3">
    <location>
        <begin position="299"/>
        <end position="313"/>
    </location>
</feature>
<feature type="disulfide bond" evidence="3">
    <location>
        <begin position="315"/>
        <end position="328"/>
    </location>
</feature>
<feature type="disulfide bond" evidence="3">
    <location>
        <begin position="453"/>
        <end position="465"/>
    </location>
</feature>
<feature type="disulfide bond" evidence="3">
    <location>
        <begin position="460"/>
        <end position="474"/>
    </location>
</feature>
<feature type="disulfide bond" evidence="3">
    <location>
        <begin position="476"/>
        <end position="488"/>
    </location>
</feature>
<feature type="disulfide bond" evidence="3">
    <location>
        <begin position="494"/>
        <end position="504"/>
    </location>
</feature>
<feature type="disulfide bond" evidence="3">
    <location>
        <begin position="499"/>
        <end position="513"/>
    </location>
</feature>
<feature type="disulfide bond" evidence="3">
    <location>
        <begin position="515"/>
        <end position="528"/>
    </location>
</feature>
<feature type="disulfide bond" evidence="3">
    <location>
        <begin position="534"/>
        <end position="546"/>
    </location>
</feature>
<feature type="disulfide bond" evidence="3">
    <location>
        <begin position="541"/>
        <end position="555"/>
    </location>
</feature>
<feature type="disulfide bond" evidence="3">
    <location>
        <begin position="557"/>
        <end position="570"/>
    </location>
</feature>
<feature type="disulfide bond" evidence="3">
    <location>
        <begin position="576"/>
        <end position="587"/>
    </location>
</feature>
<feature type="disulfide bond" evidence="3">
    <location>
        <begin position="582"/>
        <end position="596"/>
    </location>
</feature>
<feature type="disulfide bond" evidence="3">
    <location>
        <begin position="598"/>
        <end position="611"/>
    </location>
</feature>
<feature type="disulfide bond" evidence="3">
    <location>
        <begin position="617"/>
        <end position="628"/>
    </location>
</feature>
<feature type="disulfide bond" evidence="3">
    <location>
        <begin position="623"/>
        <end position="637"/>
    </location>
</feature>
<feature type="disulfide bond" evidence="3">
    <location>
        <begin position="639"/>
        <end position="652"/>
    </location>
</feature>
<feature type="disulfide bond" evidence="3">
    <location>
        <begin position="727"/>
        <end position="739"/>
    </location>
</feature>
<feature type="disulfide bond" evidence="3">
    <location>
        <begin position="734"/>
        <end position="748"/>
    </location>
</feature>
<feature type="disulfide bond" evidence="3">
    <location>
        <begin position="750"/>
        <end position="763"/>
    </location>
</feature>
<feature type="disulfide bond" evidence="3">
    <location>
        <begin position="769"/>
        <end position="781"/>
    </location>
</feature>
<feature type="disulfide bond" evidence="3">
    <location>
        <begin position="776"/>
        <end position="790"/>
    </location>
</feature>
<feature type="disulfide bond" evidence="3">
    <location>
        <begin position="792"/>
        <end position="805"/>
    </location>
</feature>
<feature type="disulfide bond" evidence="3 40">
    <location>
        <begin position="811"/>
        <end position="821"/>
    </location>
</feature>
<feature type="disulfide bond" evidence="3 40">
    <location>
        <begin position="816"/>
        <end position="830"/>
    </location>
</feature>
<feature type="disulfide bond" evidence="3 40">
    <location>
        <begin position="832"/>
        <end position="845"/>
    </location>
</feature>
<feature type="disulfide bond" evidence="3 40">
    <location>
        <begin position="853"/>
        <end position="875"/>
    </location>
</feature>
<feature type="disulfide bond" evidence="3 40">
    <location>
        <begin position="862"/>
        <end position="887"/>
    </location>
</feature>
<feature type="disulfide bond" evidence="3 40">
    <location>
        <begin position="876"/>
        <end position="890"/>
    </location>
</feature>
<feature type="disulfide bond" evidence="3 40">
    <location>
        <begin position="896"/>
        <end position="908"/>
    </location>
</feature>
<feature type="disulfide bond" evidence="3 40">
    <location>
        <begin position="914"/>
        <end position="926"/>
    </location>
</feature>
<feature type="disulfide bond" evidence="3 40">
    <location>
        <begin position="921"/>
        <end position="935"/>
    </location>
</feature>
<feature type="disulfide bond" evidence="3 40">
    <location>
        <begin position="937"/>
        <end position="950"/>
    </location>
</feature>
<feature type="disulfide bond" evidence="3">
    <location>
        <begin position="1032"/>
        <end position="1044"/>
    </location>
</feature>
<feature type="disulfide bond" evidence="3">
    <location>
        <begin position="1039"/>
        <end position="1053"/>
    </location>
</feature>
<feature type="disulfide bond" evidence="3">
    <location>
        <begin position="1055"/>
        <end position="1068"/>
    </location>
</feature>
<feature type="disulfide bond" evidence="3 15">
    <location>
        <begin position="1074"/>
        <end position="1086"/>
    </location>
</feature>
<feature type="disulfide bond" evidence="3 15">
    <location>
        <begin position="1081"/>
        <end position="1095"/>
    </location>
</feature>
<feature type="disulfide bond" evidence="3 15">
    <location>
        <begin position="1097"/>
        <end position="1111"/>
    </location>
</feature>
<feature type="disulfide bond" evidence="3 15">
    <location>
        <begin position="1117"/>
        <end position="1129"/>
    </location>
</feature>
<feature type="disulfide bond" evidence="3 15">
    <location>
        <begin position="1124"/>
        <end position="1138"/>
    </location>
</feature>
<feature type="disulfide bond" evidence="3">
    <location>
        <begin position="1140"/>
        <end position="1153"/>
    </location>
</feature>
<feature type="disulfide bond" evidence="3">
    <location>
        <begin position="1159"/>
        <end position="1171"/>
    </location>
</feature>
<feature type="disulfide bond" evidence="3">
    <location>
        <begin position="1166"/>
        <end position="1180"/>
    </location>
</feature>
<feature type="disulfide bond" evidence="3">
    <location>
        <begin position="1182"/>
        <end position="1195"/>
    </location>
</feature>
<feature type="disulfide bond" evidence="3">
    <location>
        <begin position="1201"/>
        <end position="1212"/>
    </location>
</feature>
<feature type="disulfide bond" evidence="3">
    <location>
        <begin position="1208"/>
        <end position="1221"/>
    </location>
</feature>
<feature type="disulfide bond" evidence="3">
    <location>
        <begin position="1223"/>
        <end position="1236"/>
    </location>
</feature>
<feature type="disulfide bond" evidence="3">
    <location>
        <begin position="1242"/>
        <end position="1254"/>
    </location>
</feature>
<feature type="disulfide bond" evidence="3">
    <location>
        <begin position="1249"/>
        <end position="1263"/>
    </location>
</feature>
<feature type="disulfide bond" evidence="3">
    <location>
        <begin position="1265"/>
        <end position="1278"/>
    </location>
</feature>
<feature type="disulfide bond" evidence="3">
    <location>
        <begin position="1284"/>
        <end position="1296"/>
    </location>
</feature>
<feature type="disulfide bond" evidence="3">
    <location>
        <begin position="1291"/>
        <end position="1305"/>
    </location>
</feature>
<feature type="disulfide bond" evidence="3">
    <location>
        <begin position="1307"/>
        <end position="1320"/>
    </location>
</feature>
<feature type="disulfide bond" evidence="3">
    <location>
        <begin position="1326"/>
        <end position="1339"/>
    </location>
</feature>
<feature type="disulfide bond" evidence="3">
    <location>
        <begin position="1333"/>
        <end position="1348"/>
    </location>
</feature>
<feature type="disulfide bond" evidence="3">
    <location>
        <begin position="1350"/>
        <end position="1361"/>
    </location>
</feature>
<feature type="disulfide bond" evidence="3">
    <location>
        <begin position="1367"/>
        <end position="1380"/>
    </location>
</feature>
<feature type="disulfide bond" evidence="3">
    <location>
        <begin position="1374"/>
        <end position="1389"/>
    </location>
</feature>
<feature type="disulfide bond" evidence="3">
    <location>
        <begin position="1391"/>
        <end position="1402"/>
    </location>
</feature>
<feature type="disulfide bond" evidence="3">
    <location>
        <begin position="1408"/>
        <end position="1420"/>
    </location>
</feature>
<feature type="disulfide bond" evidence="3">
    <location>
        <begin position="1415"/>
        <end position="1429"/>
    </location>
</feature>
<feature type="disulfide bond" evidence="3">
    <location>
        <begin position="1431"/>
        <end position="1444"/>
    </location>
</feature>
<feature type="disulfide bond" evidence="3">
    <location>
        <begin position="1450"/>
        <end position="1461"/>
    </location>
</feature>
<feature type="disulfide bond" evidence="3">
    <location>
        <begin position="1456"/>
        <end position="1470"/>
    </location>
</feature>
<feature type="disulfide bond" evidence="3">
    <location>
        <begin position="1472"/>
        <end position="1485"/>
    </location>
</feature>
<feature type="disulfide bond" evidence="3 20">
    <location>
        <begin position="1491"/>
        <end position="1502"/>
    </location>
</feature>
<feature type="disulfide bond" evidence="3 20">
    <location>
        <begin position="1497"/>
        <end position="1511"/>
    </location>
</feature>
<feature type="disulfide bond" evidence="3 20">
    <location>
        <begin position="1513"/>
        <end position="1526"/>
    </location>
</feature>
<feature type="disulfide bond" evidence="3 20">
    <location>
        <begin position="1534"/>
        <end position="1562"/>
    </location>
</feature>
<feature type="disulfide bond" evidence="3 20">
    <location>
        <begin position="1549"/>
        <end position="1574"/>
    </location>
</feature>
<feature type="disulfide bond" evidence="3 20">
    <location>
        <begin position="1563"/>
        <end position="1577"/>
    </location>
</feature>
<feature type="disulfide bond" evidence="3 20">
    <location>
        <begin position="1564"/>
        <end position="1589"/>
    </location>
</feature>
<feature type="disulfide bond" evidence="3 20">
    <location>
        <begin position="1610"/>
        <end position="1622"/>
    </location>
</feature>
<feature type="disulfide bond" evidence="3 20">
    <location>
        <begin position="1617"/>
        <end position="1631"/>
    </location>
</feature>
<feature type="disulfide bond" evidence="3 20">
    <location>
        <begin position="1633"/>
        <end position="1646"/>
    </location>
</feature>
<feature type="disulfide bond" evidence="3">
    <location>
        <begin position="1652"/>
        <end position="1663"/>
    </location>
</feature>
<feature type="disulfide bond" evidence="3">
    <location>
        <begin position="1658"/>
        <end position="1672"/>
    </location>
</feature>
<feature type="disulfide bond" evidence="3">
    <location>
        <begin position="1674"/>
        <end position="1687"/>
    </location>
</feature>
<feature type="disulfide bond" evidence="3">
    <location>
        <begin position="1770"/>
        <end position="1782"/>
    </location>
</feature>
<feature type="disulfide bond" evidence="3">
    <location>
        <begin position="1777"/>
        <end position="1791"/>
    </location>
</feature>
<feature type="disulfide bond" evidence="3">
    <location>
        <begin position="1793"/>
        <end position="1806"/>
    </location>
</feature>
<feature type="disulfide bond" evidence="3">
    <location>
        <begin position="1812"/>
        <end position="1824"/>
    </location>
</feature>
<feature type="disulfide bond" evidence="3">
    <location>
        <begin position="1818"/>
        <end position="1833"/>
    </location>
</feature>
<feature type="disulfide bond" evidence="3">
    <location>
        <begin position="1835"/>
        <end position="1847"/>
    </location>
</feature>
<feature type="disulfide bond" evidence="3">
    <location>
        <begin position="1853"/>
        <end position="1865"/>
    </location>
</feature>
<feature type="disulfide bond" evidence="3">
    <location>
        <begin position="1860"/>
        <end position="1874"/>
    </location>
</feature>
<feature type="disulfide bond" evidence="3">
    <location>
        <begin position="1876"/>
        <end position="1889"/>
    </location>
</feature>
<feature type="disulfide bond" evidence="3">
    <location>
        <begin position="1895"/>
        <end position="1905"/>
    </location>
</feature>
<feature type="disulfide bond" evidence="3">
    <location>
        <begin position="1900"/>
        <end position="1914"/>
    </location>
</feature>
<feature type="disulfide bond" evidence="3">
    <location>
        <begin position="1916"/>
        <end position="1928"/>
    </location>
</feature>
<feature type="disulfide bond" evidence="3">
    <location>
        <begin position="1934"/>
        <end position="1947"/>
    </location>
</feature>
<feature type="disulfide bond" evidence="3">
    <location>
        <begin position="1942"/>
        <end position="1956"/>
    </location>
</feature>
<feature type="disulfide bond" evidence="3">
    <location>
        <begin position="1958"/>
        <end position="1971"/>
    </location>
</feature>
<feature type="disulfide bond" evidence="3">
    <location>
        <begin position="1977"/>
        <end position="1989"/>
    </location>
</feature>
<feature type="disulfide bond" evidence="3">
    <location>
        <begin position="1984"/>
        <end position="1998"/>
    </location>
</feature>
<feature type="disulfide bond" evidence="3">
    <location>
        <begin position="2000"/>
        <end position="2011"/>
    </location>
</feature>
<feature type="disulfide bond" evidence="3">
    <location>
        <begin position="2017"/>
        <end position="2029"/>
    </location>
</feature>
<feature type="disulfide bond" evidence="3">
    <location>
        <begin position="2024"/>
        <end position="2038"/>
    </location>
</feature>
<feature type="disulfide bond" evidence="3">
    <location>
        <begin position="2040"/>
        <end position="2053"/>
    </location>
</feature>
<feature type="disulfide bond" evidence="3 96">
    <location>
        <begin position="2061"/>
        <end position="2083"/>
    </location>
</feature>
<feature type="disulfide bond" evidence="3 96">
    <location>
        <begin position="2070"/>
        <end position="2096"/>
    </location>
</feature>
<feature type="disulfide bond" evidence="3 96">
    <location>
        <begin position="2084"/>
        <end position="2099"/>
    </location>
</feature>
<feature type="disulfide bond" evidence="3 96">
    <location>
        <begin position="2085"/>
        <end position="2111"/>
    </location>
</feature>
<feature type="disulfide bond" evidence="3">
    <location>
        <begin position="2131"/>
        <end position="2142"/>
    </location>
</feature>
<feature type="disulfide bond" evidence="3">
    <location>
        <begin position="2137"/>
        <end position="2151"/>
    </location>
</feature>
<feature type="disulfide bond" evidence="3">
    <location>
        <begin position="2153"/>
        <end position="2164"/>
    </location>
</feature>
<feature type="disulfide bond" evidence="3">
    <location>
        <begin position="2170"/>
        <end position="2181"/>
    </location>
</feature>
<feature type="disulfide bond" evidence="3">
    <location>
        <begin position="2176"/>
        <end position="2190"/>
    </location>
</feature>
<feature type="disulfide bond" evidence="3">
    <location>
        <begin position="2192"/>
        <end position="2204"/>
    </location>
</feature>
<feature type="disulfide bond" evidence="3">
    <location>
        <begin position="2210"/>
        <end position="2221"/>
    </location>
</feature>
<feature type="disulfide bond" evidence="3">
    <location>
        <begin position="2217"/>
        <end position="2230"/>
    </location>
</feature>
<feature type="disulfide bond" evidence="3">
    <location>
        <begin position="2232"/>
        <end position="2245"/>
    </location>
</feature>
<feature type="disulfide bond" evidence="3">
    <location>
        <begin position="2251"/>
        <end position="2265"/>
    </location>
</feature>
<feature type="disulfide bond" evidence="3">
    <location>
        <begin position="2258"/>
        <end position="2274"/>
    </location>
</feature>
<feature type="disulfide bond" evidence="3">
    <location>
        <begin position="2276"/>
        <end position="2289"/>
    </location>
</feature>
<feature type="disulfide bond" evidence="3">
    <location>
        <begin position="2295"/>
        <end position="2307"/>
    </location>
</feature>
<feature type="disulfide bond" evidence="3">
    <location>
        <begin position="2302"/>
        <end position="2316"/>
    </location>
</feature>
<feature type="disulfide bond" evidence="3">
    <location>
        <begin position="2318"/>
        <end position="2331"/>
    </location>
</feature>
<feature type="disulfide bond" evidence="3">
    <location>
        <begin position="2406"/>
        <end position="2418"/>
    </location>
</feature>
<feature type="disulfide bond" evidence="3">
    <location>
        <begin position="2413"/>
        <end position="2427"/>
    </location>
</feature>
<feature type="disulfide bond" evidence="3">
    <location>
        <begin position="2429"/>
        <end position="2442"/>
    </location>
</feature>
<feature type="disulfide bond" evidence="3">
    <location>
        <begin position="2448"/>
        <end position="2459"/>
    </location>
</feature>
<feature type="disulfide bond" evidence="3">
    <location>
        <begin position="2455"/>
        <end position="2468"/>
    </location>
</feature>
<feature type="disulfide bond" evidence="3">
    <location>
        <begin position="2470"/>
        <end position="2483"/>
    </location>
</feature>
<feature type="disulfide bond" evidence="3">
    <location>
        <begin position="2489"/>
        <end position="2500"/>
    </location>
</feature>
<feature type="disulfide bond" evidence="3">
    <location>
        <begin position="2496"/>
        <end position="2509"/>
    </location>
</feature>
<feature type="disulfide bond" evidence="3">
    <location>
        <begin position="2511"/>
        <end position="2522"/>
    </location>
</feature>
<feature type="disulfide bond" evidence="3">
    <location>
        <begin position="2528"/>
        <end position="2541"/>
    </location>
</feature>
<feature type="disulfide bond" evidence="3">
    <location>
        <begin position="2535"/>
        <end position="2550"/>
    </location>
</feature>
<feature type="disulfide bond" evidence="3">
    <location>
        <begin position="2552"/>
        <end position="2565"/>
    </location>
</feature>
<feature type="disulfide bond" evidence="3">
    <location>
        <begin position="2571"/>
        <end position="2581"/>
    </location>
</feature>
<feature type="disulfide bond" evidence="3">
    <location>
        <begin position="2577"/>
        <end position="2590"/>
    </location>
</feature>
<feature type="disulfide bond" evidence="3">
    <location>
        <begin position="2592"/>
        <end position="2605"/>
    </location>
</feature>
<feature type="disulfide bond" evidence="3">
    <location>
        <begin position="2611"/>
        <end position="2622"/>
    </location>
</feature>
<feature type="disulfide bond" evidence="3">
    <location>
        <begin position="2617"/>
        <end position="2631"/>
    </location>
</feature>
<feature type="disulfide bond" evidence="3">
    <location>
        <begin position="2633"/>
        <end position="2646"/>
    </location>
</feature>
<feature type="disulfide bond" evidence="3">
    <location>
        <begin position="2652"/>
        <end position="2663"/>
    </location>
</feature>
<feature type="disulfide bond" evidence="3">
    <location>
        <begin position="2659"/>
        <end position="2672"/>
    </location>
</feature>
<feature type="disulfide bond" evidence="3">
    <location>
        <begin position="2674"/>
        <end position="2686"/>
    </location>
</feature>
<feature type="sequence variant" id="VAR_023859" description="In MFS; uncertain significance; dbSNP:rs201309310." evidence="28">
    <original>Y</original>
    <variation>C</variation>
    <location>
        <position position="20"/>
    </location>
</feature>
<feature type="sequence variant" id="VAR_014663" description="In dbSNP:rs25397.">
    <original>A</original>
    <variation>T</variation>
    <location>
        <position position="27"/>
    </location>
</feature>
<feature type="sequence variant" id="VAR_075984" description="Found in a patient with Marfan-like syndrome; likely pathogenic." evidence="34">
    <original>A</original>
    <variation>P</variation>
    <location>
        <position position="39"/>
    </location>
</feature>
<feature type="sequence variant" id="VAR_075985" description="In MFS; dbSNP:rs2140787387." evidence="54">
    <original>G</original>
    <variation>E</variation>
    <location>
        <position position="55"/>
    </location>
</feature>
<feature type="sequence variant" id="VAR_075986" description="In MFS; dbSNP:rs2044669685." evidence="41">
    <original>N</original>
    <variation>D</variation>
    <location>
        <position position="57"/>
    </location>
</feature>
<feature type="sequence variant" id="VAR_017967" description="In MFS; also in a patient with ectopia lentis and retinal detachment; dbSNP:rs25403." evidence="13">
    <original>R</original>
    <variation>C</variation>
    <location>
        <position position="62"/>
    </location>
</feature>
<feature type="sequence variant" id="VAR_075987" description="In ECTOL1; uncertain significance; dbSNP:rs1303389437." evidence="32">
    <original>Y</original>
    <variation>C</variation>
    <location>
        <position position="63"/>
    </location>
</feature>
<feature type="sequence variant" id="VAR_075988" description="In ECTOL1; dbSNP:rs113604459." evidence="32">
    <original>C</original>
    <variation>S</variation>
    <location>
        <position position="68"/>
    </location>
</feature>
<feature type="sequence variant" id="VAR_065981" description="In MFS; dbSNP:rs111764111." evidence="50">
    <original>C</original>
    <variation>G</variation>
    <location>
        <position position="80"/>
    </location>
</feature>
<feature type="sequence variant" id="VAR_017968" description="In MFS; dbSNP:rs112660651." evidence="10">
    <original>C</original>
    <variation>F</variation>
    <location>
        <position position="89"/>
    </location>
</feature>
<feature type="sequence variant" id="VAR_075989" description="In MFS; dbSNP:rs397515782." evidence="41">
    <original>C</original>
    <variation>Y</variation>
    <location>
        <position position="100"/>
    </location>
</feature>
<feature type="sequence variant" id="VAR_002276" description="In MFS." evidence="94">
    <original>C</original>
    <variation>R</variation>
    <location>
        <position position="111"/>
    </location>
</feature>
<feature type="sequence variant" id="VAR_017969" description="In MFS." evidence="11">
    <original>R</original>
    <variation>C</variation>
    <location>
        <position position="114"/>
    </location>
</feature>
<feature type="sequence variant" id="VAR_017970" description="In ECTOL1." evidence="13">
    <original>S</original>
    <variation>C</variation>
    <location>
        <position position="115"/>
    </location>
</feature>
<feature type="sequence variant" id="VAR_002277" description="In MFS; dbSNP:rs137854467." evidence="10 32 81 98">
    <original>R</original>
    <variation>C</variation>
    <location>
        <position position="122"/>
    </location>
</feature>
<feature type="sequence variant" id="VAR_023860" description="In MFS; dbSNP:rs397515794." evidence="28 34">
    <original>C</original>
    <variation>Y</variation>
    <location>
        <position position="123"/>
    </location>
</feature>
<feature type="sequence variant" id="VAR_075990" description="Found in a patient with Marfan-like syndrome; likely pathogenic; dbSNP:rs1566935524." evidence="32">
    <original>G</original>
    <variation>D</variation>
    <location>
        <position position="127"/>
    </location>
</feature>
<feature type="sequence variant" id="VAR_002278" description="In MFS; severe neonatal; dbSNP:rs1566935517." evidence="41 73">
    <original>C</original>
    <variation>Y</variation>
    <location>
        <position position="129"/>
    </location>
</feature>
<feature type="sequence variant" id="VAR_055723" description="In dbSNP:rs363850.">
    <original>H</original>
    <variation>Q</variation>
    <location>
        <position position="133"/>
    </location>
</feature>
<feature type="sequence variant" id="VAR_075991" description="In MFS; dbSNP:rs1555405041." evidence="34">
    <original>C</original>
    <variation>S</variation>
    <location>
        <position position="136"/>
    </location>
</feature>
<feature type="sequence variant" id="VAR_017971" description="In MFS; dbSNP:rs1057521103." evidence="19">
    <original>C</original>
    <variation>S</variation>
    <location>
        <position position="154"/>
    </location>
</feature>
<feature type="sequence variant" id="VAR_075992" description="Found in a patient with Marfan-like syndrome; likely pathogenic; dbSNP:rs1057518973." evidence="32">
    <original>C</original>
    <variation>R</variation>
    <location>
        <position position="160"/>
    </location>
</feature>
<feature type="sequence variant" id="VAR_075993" description="Found in a patient with Marfan-like syndrome; likely pathogenic; dbSNP:rs749490298." evidence="32">
    <original>N</original>
    <variation>S</variation>
    <location>
        <position position="164"/>
    </location>
</feature>
<feature type="sequence variant" id="VAR_002279" description="In MFS." evidence="73">
    <original>C</original>
    <variation>F</variation>
    <location>
        <position position="166"/>
    </location>
</feature>
<feature type="sequence variant" id="VAR_002280" description="In MFS; dbSNP:rs397515818 and dbSNP:rs363852." evidence="19">
    <original>C</original>
    <variation>S</variation>
    <location>
        <position position="166"/>
    </location>
</feature>
<feature type="sequence variant" id="VAR_023861" description="In MFS; dbSNP:rs363853." evidence="28">
    <original>C</original>
    <variation>R</variation>
    <location>
        <position position="177"/>
    </location>
</feature>
<feature type="sequence variant" id="VAR_075994" description="In MFS." evidence="34">
    <original>C</original>
    <variation>S</variation>
    <location>
        <position position="177"/>
    </location>
</feature>
<feature type="sequence variant" id="VAR_075995" description="In MFS; dbSNP:rs113695103." evidence="34">
    <original>C</original>
    <variation>Y</variation>
    <location>
        <position position="177"/>
    </location>
</feature>
<feature type="sequence variant" id="VAR_075996" description="In MFS; dbSNP:rs794728162." evidence="32 34">
    <original>G</original>
    <variation>S</variation>
    <location>
        <position position="214"/>
    </location>
</feature>
<feature type="sequence variant" id="VAR_075997" description="Found in a patient with Marfan-like syndrome; likely pathogenic." evidence="32">
    <location>
        <begin position="215"/>
        <end position="2871"/>
    </location>
</feature>
<feature type="sequence variant" id="VAR_002281" description="In MFS; dbSNP:rs193922224." evidence="79 83">
    <original>W</original>
    <variation>G</variation>
    <location>
        <position position="217"/>
    </location>
</feature>
<feature type="sequence variant" id="VAR_075998" description="In MFS; dbSNP:rs774754863." evidence="54">
    <original>H</original>
    <variation>Q</variation>
    <location>
        <position position="219"/>
    </location>
</feature>
<feature type="sequence variant" id="VAR_023862" description="In MFS; dbSNP:rs1555401676." evidence="28">
    <original>C</original>
    <variation>R</variation>
    <location>
        <position position="224"/>
    </location>
</feature>
<feature type="sequence variant" id="VAR_017972" description="In MFS and ECTOL1; dbSNP:rs137854480." evidence="10 11 19 32">
    <original>R</original>
    <variation>C</variation>
    <location>
        <position position="240"/>
    </location>
</feature>
<feature type="sequence variant" id="VAR_075999" description="In MFS." evidence="32">
    <location>
        <begin position="248"/>
        <end position="2871"/>
    </location>
</feature>
<feature type="sequence variant" id="VAR_055724" description="In dbSNP:rs12324002.">
    <original>I</original>
    <variation>T</variation>
    <location>
        <position position="329"/>
    </location>
</feature>
<feature type="sequence variant" id="VAR_076000" description="In MFS." evidence="34">
    <location>
        <begin position="348"/>
        <end position="2871"/>
    </location>
</feature>
<feature type="sequence variant" id="VAR_076001" description="In MFS." evidence="32">
    <location>
        <begin position="351"/>
        <end position="2871"/>
    </location>
</feature>
<feature type="sequence variant" id="VAR_055725" description="In dbSNP:rs363855.">
    <original>G</original>
    <variation>S</variation>
    <location>
        <position position="363"/>
    </location>
</feature>
<feature type="sequence variant" id="VAR_076002" description="Found in a patient with Marfan-like syndrome; likely pathogenic." evidence="32">
    <location>
        <begin position="364"/>
        <end position="2871"/>
    </location>
</feature>
<feature type="sequence variant" id="VAR_076003" description="In MFS." evidence="32">
    <original>C</original>
    <variation>R</variation>
    <location>
        <position position="365"/>
    </location>
</feature>
<feature type="sequence variant" id="VAR_076004" description="In ECTOL1." evidence="32">
    <original>C</original>
    <variation>W</variation>
    <location>
        <position position="365"/>
    </location>
</feature>
<feature type="sequence variant" id="VAR_076005" description="In MFS." evidence="32">
    <location>
        <begin position="366"/>
        <end position="2871"/>
    </location>
</feature>
<feature type="sequence variant" id="VAR_017973" description="In MFS; dbSNP:rs1555400595." evidence="10">
    <original>W</original>
    <variation>C</variation>
    <location>
        <position position="366"/>
    </location>
</feature>
<feature type="sequence variant" id="VAR_076006" description="In MFS." evidence="14 34">
    <location>
        <begin position="429"/>
        <end position="2871"/>
    </location>
</feature>
<feature type="sequence variant" id="VAR_023863" description="In MFS." evidence="28">
    <original>R</original>
    <variation>G</variation>
    <location>
        <position position="439"/>
    </location>
</feature>
<feature type="sequence variant" id="VAR_076007" description="In MFS; dbSNP:rs139058991." evidence="14">
    <original>V</original>
    <variation>I</variation>
    <location>
        <position position="449"/>
    </location>
</feature>
<feature type="sequence variant" id="VAR_058090" description="In dbSNP:rs4775765." evidence="24">
    <original>Y</original>
    <variation>C</variation>
    <location>
        <position position="472"/>
    </location>
</feature>
<feature type="sequence variant" id="VAR_076008" description="In MFS; dbSNP:rs1555400378." evidence="32">
    <original>C</original>
    <variation>W</variation>
    <location>
        <position position="474"/>
    </location>
</feature>
<feature type="sequence variant" id="VAR_002282" description="In MFS; dbSNP:rs794728326." evidence="78">
    <original>C</original>
    <variation>G</variation>
    <location>
        <position position="476"/>
    </location>
</feature>
<feature type="sequence variant" id="VAR_076009" description="In MFS; dbSNP:rs1555400373." evidence="34">
    <original>C</original>
    <variation>R</variation>
    <location>
        <position position="488"/>
    </location>
</feature>
<feature type="sequence variant" id="VAR_002283" description="In MFS; dbSNP:rs1555400371." evidence="50">
    <original>D</original>
    <variation>Y</variation>
    <location>
        <position position="490"/>
    </location>
</feature>
<feature type="sequence variant" id="VAR_065982" description="In MFS; dbSNP:rs587782944." evidence="50">
    <original>C</original>
    <variation>Y</variation>
    <location>
        <position position="499"/>
    </location>
</feature>
<feature type="sequence variant" id="VAR_010776" description="In MFS; dbSNP:rs1156747241." evidence="5">
    <original>C</original>
    <variation>F</variation>
    <location>
        <position position="504"/>
    </location>
</feature>
<feature type="sequence variant" id="VAR_076010" description="Found in a patient with Marfan-like syndrome; likely pathogenic; dbSNP:rs1555400288." evidence="32">
    <original>C</original>
    <variation>R</variation>
    <location>
        <position position="504"/>
    </location>
</feature>
<feature type="sequence variant" id="VAR_023864" description="In MFS." evidence="27">
    <location>
        <position position="507"/>
    </location>
</feature>
<feature type="sequence variant" id="VAR_080327" description="In MFS." evidence="43">
    <original>CR</original>
    <variation>WG</variation>
    <location>
        <begin position="515"/>
        <end position="516"/>
    </location>
</feature>
<feature type="sequence variant" id="VAR_023865" description="In MFS; dbSNP:rs1555400064." evidence="27">
    <original>C</original>
    <variation>Y</variation>
    <location>
        <position position="541"/>
    </location>
</feature>
<feature type="sequence variant" id="VAR_002284" description="In MFS and ECTOL1; dbSNP:rs730880099." evidence="10 32 94">
    <original>R</original>
    <variation>C</variation>
    <location>
        <position position="545"/>
    </location>
</feature>
<feature type="sequence variant" id="VAR_076011" description="In MFS." evidence="32">
    <original>C</original>
    <variation>W</variation>
    <location>
        <position position="546"/>
    </location>
</feature>
<feature type="sequence variant" id="VAR_002285" description="In MFS; dbSNP:rs137854462." evidence="86">
    <original>N</original>
    <variation>I</variation>
    <location>
        <position position="548"/>
    </location>
</feature>
<feature type="sequence variant" id="VAR_017974" description="In MFS; dbSNP:rs1064794283." evidence="10">
    <original>G</original>
    <variation>S</variation>
    <location>
        <position position="560"/>
    </location>
</feature>
<feature type="sequence variant" id="VAR_076012" description="In MFS." evidence="32">
    <location>
        <begin position="565"/>
        <end position="2871"/>
    </location>
</feature>
<feature type="sequence variant" id="VAR_017975" description="In MFS; dbSNP:rs1555400049." evidence="10">
    <original>C</original>
    <variation>Y</variation>
    <location>
        <position position="570"/>
    </location>
</feature>
<feature type="sequence variant" id="VAR_076013" description="In MFS; dbSNP:rs1555399974." evidence="34">
    <original>C</original>
    <variation>Y</variation>
    <location>
        <position position="576"/>
    </location>
</feature>
<feature type="sequence variant" id="VAR_076014" description="In MFS; dbSNP:rs2141321636." evidence="34">
    <original>C</original>
    <variation>R</variation>
    <location>
        <position position="582"/>
    </location>
</feature>
<feature type="sequence variant" id="VAR_002286" description="In MFS; dbSNP:rs1555399963." evidence="13 93">
    <original>C</original>
    <variation>Y</variation>
    <location>
        <position position="587"/>
    </location>
</feature>
<feature type="sequence variant" id="VAR_017976" description="In MFS; dbSNP:rs1555399959." evidence="10">
    <original>G</original>
    <variation>D</variation>
    <location>
        <position position="592"/>
    </location>
</feature>
<feature type="sequence variant" id="VAR_076015" description="In ECTOL1; dbSNP:rs1057520131." evidence="32">
    <original>C</original>
    <variation>R</variation>
    <location>
        <position position="596"/>
    </location>
</feature>
<feature type="sequence variant" id="VAR_017977" description="In MFS; dbSNP:rs2043732180." evidence="13">
    <original>C</original>
    <variation>Y</variation>
    <location>
        <position position="596"/>
    </location>
</feature>
<feature type="sequence variant" id="VAR_017978" description="In MFS; dbSNP:rs1555399954." evidence="10">
    <original>C</original>
    <variation>W</variation>
    <location>
        <position position="598"/>
    </location>
</feature>
<feature type="sequence variant" id="VAR_065983" description="In MFS; dbSNP:rs1555399944." evidence="50">
    <original>C</original>
    <variation>R</variation>
    <location>
        <position position="611"/>
    </location>
</feature>
<feature type="sequence variant" id="VAR_065984" description="In MFS; dbSNP:rs1060501017." evidence="50">
    <original>C</original>
    <variation>G</variation>
    <location>
        <position position="617"/>
    </location>
</feature>
<feature type="sequence variant" id="VAR_076016" description="In MFS; dbSNP:rs1566914030." evidence="34">
    <original>C</original>
    <variation>F</variation>
    <location>
        <position position="623"/>
    </location>
</feature>
<feature type="sequence variant" id="VAR_002287" description="In MFS; enhances proteolytic degradation; dbSNP:rs727503057." evidence="12 22 27 80 94">
    <original>R</original>
    <variation>C</variation>
    <location>
        <position position="627"/>
    </location>
</feature>
<feature type="sequence variant" id="VAR_023867" description="In MFS." evidence="28">
    <location>
        <begin position="629"/>
        <end position="633"/>
    </location>
</feature>
<feature type="sequence variant" id="VAR_076017" description="In ECTOL1; dbSNP:rs1566914005." evidence="32">
    <original>S</original>
    <variation>P</variation>
    <location>
        <position position="634"/>
    </location>
</feature>
<feature type="sequence variant" id="VAR_023868" description="In MFS; dbSNP:rs1555399816." evidence="28 34">
    <original>Y</original>
    <variation>C</variation>
    <location>
        <position position="635"/>
    </location>
</feature>
<feature type="sequence variant" id="VAR_023869" description="In MFS." evidence="28">
    <original>R</original>
    <variation>I</variation>
    <location>
        <position position="636"/>
    </location>
</feature>
<feature type="sequence variant" id="VAR_017979" description="In MFS." evidence="19">
    <original>C</original>
    <variation>S</variation>
    <location>
        <position position="652"/>
    </location>
</feature>
<feature type="sequence variant" id="VAR_076018" description="Found in a patient with Marfan-like syndrome; likely pathogenic; dbSNP:rs2043696418." evidence="32">
    <original>C</original>
    <variation>Y</variation>
    <location>
        <position position="652"/>
    </location>
</feature>
<feature type="sequence variant" id="VAR_076019" description="Found in a patient with Marfan-like syndrome; likely pathogenic." evidence="32">
    <location>
        <begin position="653"/>
        <end position="2871"/>
    </location>
</feature>
<feature type="sequence variant" id="VAR_017980" description="In MFS." evidence="12 13">
    <original>D</original>
    <variation>N</variation>
    <location>
        <position position="654"/>
    </location>
</feature>
<feature type="sequence variant" id="VAR_002288" description="In MFS." evidence="91">
    <original>C</original>
    <variation>R</variation>
    <location>
        <position position="661"/>
    </location>
</feature>
<feature type="sequence variant" id="VAR_017981" description="In ECTOL1; patient presenting also mitral valve prolapse; dbSNP:rs1060501086." evidence="13">
    <original>C</original>
    <variation>Y</variation>
    <location>
        <position position="661"/>
    </location>
</feature>
<feature type="sequence variant" id="VAR_017982" description="In MFS; dbSNP:rs1555399766." evidence="13">
    <original>S</original>
    <variation>Y</variation>
    <location>
        <position position="681"/>
    </location>
</feature>
<feature type="sequence variant" id="VAR_017983" description="In MFS." evidence="13">
    <original>C</original>
    <variation>R</variation>
    <location>
        <position position="683"/>
    </location>
</feature>
<feature type="sequence variant" id="VAR_076020" description="In MFS; dbSNP:rs1555399763." evidence="34">
    <original>C</original>
    <variation>Y</variation>
    <location>
        <position position="684"/>
    </location>
</feature>
<feature type="sequence variant" id="VAR_017984" description="In MFS; dbSNP:rs140603." evidence="13 50">
    <original>C</original>
    <variation>W</variation>
    <location>
        <position position="685"/>
    </location>
</feature>
<feature type="sequence variant" id="VAR_065985" description="In MFS; dbSNP:rs1555399761." evidence="50">
    <original>C</original>
    <variation>Y</variation>
    <location>
        <position position="685"/>
    </location>
</feature>
<feature type="sequence variant" id="VAR_076021" description="In MFS; dbSNP:rs2043684108." evidence="54">
    <original>C</original>
    <variation>S</variation>
    <location>
        <position position="699"/>
    </location>
</feature>
<feature type="sequence variant" id="VAR_002289" description="In MFS; dbSNP:rs1597574156." evidence="19 88">
    <original>A</original>
    <variation>T</variation>
    <location>
        <position position="705"/>
    </location>
</feature>
<feature type="sequence variant" id="VAR_002290" description="In MFS." evidence="19 88">
    <original>C</original>
    <variation>Y</variation>
    <location>
        <position position="711"/>
    </location>
</feature>
<feature type="sequence variant" id="VAR_076022" description="In MFS." evidence="34">
    <original>G</original>
    <variation>C</variation>
    <location>
        <position position="721"/>
    </location>
</feature>
<feature type="sequence variant" id="VAR_002291" description="In MFS; dbSNP:rs137854463." evidence="86">
    <original>D</original>
    <variation>A</variation>
    <location>
        <position position="723"/>
    </location>
</feature>
<feature type="sequence variant" id="VAR_017985" description="In MFS." evidence="13">
    <original>D</original>
    <variation>V</variation>
    <location>
        <position position="723"/>
    </location>
</feature>
<feature type="sequence variant" id="VAR_076023" description="In MFS; dbSNP:rs1555399381." evidence="32">
    <original>C</original>
    <variation>Y</variation>
    <location>
        <position position="727"/>
    </location>
</feature>
<feature type="sequence variant" id="VAR_017986" description="In MFS; dbSNP:rs794728187." evidence="13">
    <original>C</original>
    <variation>F</variation>
    <location>
        <position position="734"/>
    </location>
</feature>
<feature type="sequence variant" id="VAR_002292" description="In MFS; dbSNP:rs1555399372." evidence="73">
    <original>Y</original>
    <variation>C</variation>
    <location>
        <position position="746"/>
    </location>
</feature>
<feature type="sequence variant" id="VAR_017987" description="In MFS; dbSNP:rs1064794282." evidence="12 13">
    <original>C</original>
    <variation>Y</variation>
    <location>
        <position position="748"/>
    </location>
</feature>
<feature type="sequence variant" id="VAR_002293" description="In MFS; enhances proteolytic degradation." evidence="22 94">
    <original>C</original>
    <variation>G</variation>
    <location>
        <position position="750"/>
    </location>
</feature>
<feature type="sequence variant" id="VAR_076024" description="Found in a patient with Marfan-like syndrome; likely pathogenic; dbSNP:rs2043616319." evidence="32">
    <location>
        <begin position="752"/>
        <end position="2871"/>
    </location>
</feature>
<feature type="sequence variant" id="VAR_017988" description="In MFS." evidence="13">
    <original>C</original>
    <variation>G</variation>
    <location>
        <position position="776"/>
    </location>
</feature>
<feature type="sequence variant" id="VAR_017989" description="In MFS; dbSNP:rs1555399273." evidence="10">
    <original>C</original>
    <variation>Y</variation>
    <location>
        <position position="776"/>
    </location>
</feature>
<feature type="sequence variant" id="VAR_017990" description="In MFS; dbSNP:rs397515766." evidence="10 13">
    <original>C</original>
    <variation>R</variation>
    <location>
        <position position="781"/>
    </location>
</feature>
<feature type="sequence variant" id="VAR_023870" description="In MFS; dbSNP:rs1555399271." evidence="27">
    <original>C</original>
    <variation>Y</variation>
    <location>
        <position position="781"/>
    </location>
</feature>
<feature type="sequence variant" id="VAR_065986" description="In MFS; dbSNP:rs193922188." evidence="50">
    <original>C</original>
    <variation>Y</variation>
    <location>
        <position position="790"/>
    </location>
</feature>
<feature type="sequence variant" id="VAR_065987" description="In MFS; dbSNP:rs1555399210." evidence="50">
    <original>C</original>
    <variation>Y</variation>
    <location>
        <position position="811"/>
    </location>
</feature>
<feature type="sequence variant" id="VAR_076025" description="In MFS; dbSNP:rs1555399206." evidence="34">
    <original>C</original>
    <variation>R</variation>
    <location>
        <position position="816"/>
    </location>
</feature>
<feature type="sequence variant" id="VAR_017991" description="In MFS; dbSNP:rs397515770." evidence="19">
    <original>C</original>
    <variation>S</variation>
    <location>
        <position position="816"/>
    </location>
</feature>
<feature type="sequence variant" id="VAR_076026" description="In MFS." evidence="32">
    <original>F</original>
    <variation>C</variation>
    <location>
        <position position="828"/>
    </location>
</feature>
<feature type="sequence variant" id="VAR_023871" description="In MFS; dbSNP:rs397515775." evidence="28 32">
    <original>C</original>
    <variation>Y</variation>
    <location>
        <position position="832"/>
    </location>
</feature>
<feature type="sequence variant" id="VAR_065988" description="In MFS; dbSNP:rs1555399165." evidence="50">
    <original>C</original>
    <variation>S</variation>
    <location>
        <position position="853"/>
    </location>
</feature>
<feature type="sequence variant" id="VAR_076027" description="In MFS." evidence="32 41">
    <location>
        <begin position="861"/>
        <end position="2871"/>
    </location>
</feature>
<feature type="sequence variant" id="VAR_002294" description="In MFS; dbSNP:rs2043595650." evidence="85">
    <original>C</original>
    <variation>R</variation>
    <location>
        <position position="862"/>
    </location>
</feature>
<feature type="sequence variant" id="VAR_076028" description="In MFS; dbSNP:rs794728194." evidence="14 34 54">
    <original>G</original>
    <variation>S</variation>
    <location>
        <position position="880"/>
    </location>
</feature>
<feature type="sequence variant" id="VAR_076029" description="In MFS and ECTOL1; dbSNP:rs794728195." evidence="32">
    <original>A</original>
    <variation>V</variation>
    <location>
        <position position="882"/>
    </location>
</feature>
<feature type="sequence variant" id="VAR_076030" description="In MFS; dbSNP:rs1555399149." evidence="34">
    <original>G</original>
    <variation>E</variation>
    <location>
        <position position="884"/>
    </location>
</feature>
<feature type="sequence variant" id="VAR_023872" description="In MFS; dbSNP:rs1555399145." evidence="28">
    <original>C</original>
    <variation>G</variation>
    <location>
        <position position="890"/>
    </location>
</feature>
<feature type="sequence variant" id="VAR_017992" description="In MFS." evidence="11">
    <original>C</original>
    <variation>R</variation>
    <location>
        <position position="890"/>
    </location>
</feature>
<feature type="sequence variant" id="VAR_017993" description="In MFS; dbSNP:rs1060501021." evidence="13">
    <original>C</original>
    <variation>R</variation>
    <location>
        <position position="908"/>
    </location>
</feature>
<feature type="sequence variant" id="VAR_076031" description="In MFS; dbSNP:rs1057523406." evidence="54">
    <original>C</original>
    <variation>Y</variation>
    <location>
        <position position="908"/>
    </location>
</feature>
<feature type="sequence variant" id="VAR_076032" description="In MFS." evidence="41">
    <original>D</original>
    <variation>H</variation>
    <location>
        <position position="910"/>
    </location>
</feature>
<feature type="sequence variant" id="VAR_017994" description="In MFS; dbSNP:rs1555398995." evidence="10">
    <original>E</original>
    <variation>G</variation>
    <location>
        <position position="913"/>
    </location>
</feature>
<feature type="sequence variant" id="VAR_076033" description="In MFS." evidence="41">
    <location>
        <begin position="921"/>
        <end position="2871"/>
    </location>
</feature>
<feature type="sequence variant" id="VAR_017995" description="In MFS." evidence="13">
    <original>C</original>
    <variation>G</variation>
    <location>
        <position position="921"/>
    </location>
</feature>
<feature type="sequence variant" id="VAR_002295" description="In MFS; enhances proteolytic degradation; dbSNP:rs2141300401." evidence="22 73">
    <original>C</original>
    <variation>R</variation>
    <location>
        <position position="926"/>
    </location>
</feature>
<feature type="sequence variant" id="VAR_065989" description="In MFS; dbSNP:rs1555398989." evidence="50">
    <original>C</original>
    <variation>Y</variation>
    <location>
        <position position="926"/>
    </location>
</feature>
<feature type="sequence variant" id="VAR_076034" description="Found in a patient with Marfan-like syndrome; likely pathogenic." evidence="34">
    <original>C</original>
    <variation>R</variation>
    <location>
        <position position="937"/>
    </location>
</feature>
<feature type="sequence variant" id="VAR_076035" description="Found in a patient with Marfan-like syndrome; likely pathogenic; dbSNP:rs1555398835." evidence="32">
    <original>R</original>
    <variation>C</variation>
    <location>
        <position position="954"/>
    </location>
</feature>
<feature type="sequence variant" id="VAR_076036" description="Found in a patient with Marfan-like syndrome; likely pathogenic." evidence="32">
    <location>
        <begin position="966"/>
        <end position="2871"/>
    </location>
</feature>
<feature type="sequence variant" id="VAR_076037" description="In MFS; dbSNP:rs397514558." evidence="32">
    <original>R</original>
    <variation>C</variation>
    <location>
        <position position="974"/>
    </location>
</feature>
<feature type="sequence variant" id="VAR_076038" description="In MFS; dbSNP:rs140954477." evidence="32">
    <original>R</original>
    <variation>H</variation>
    <location>
        <position position="976"/>
    </location>
</feature>
<feature type="sequence variant" id="VAR_002296" description="In MFS; dbSNP:rs747713929." evidence="8">
    <original>V</original>
    <variation>I</variation>
    <location>
        <position position="984"/>
    </location>
</feature>
<feature type="sequence variant" id="VAR_018319" description="In MFS; atypical; dbSNP:rs137854477." evidence="6">
    <original>G</original>
    <variation>E</variation>
    <location>
        <position position="985"/>
    </location>
</feature>
<feature type="sequence variant" id="VAR_017996" description="In MFS; dbSNP:rs794728199." evidence="10 27">
    <original>G</original>
    <variation>R</variation>
    <location>
        <position position="985"/>
    </location>
</feature>
<feature type="sequence variant" id="VAR_076039" description="Found in a patient with Marfan-like syndrome; likely pathogenic." evidence="32">
    <location>
        <begin position="988"/>
        <end position="2871"/>
    </location>
</feature>
<feature type="sequence variant" id="VAR_076040" description="In MFS." evidence="32">
    <location>
        <begin position="994"/>
        <end position="2871"/>
    </location>
</feature>
<feature type="sequence variant" id="VAR_002297" description="In MFS; dbSNP:rs140592." evidence="97">
    <original>C</original>
    <variation>R</variation>
    <location>
        <position position="996"/>
    </location>
</feature>
<feature type="sequence variant" id="VAR_076041" description="In MFS." evidence="34">
    <original>C</original>
    <variation>Y</variation>
    <location>
        <position position="1008"/>
    </location>
</feature>
<feature type="sequence variant" id="VAR_002298" description="In MFS; severe neonatal; dbSNP:rs140593." evidence="10 19 27 73">
    <original>G</original>
    <variation>R</variation>
    <location>
        <position position="1013"/>
    </location>
</feature>
<feature type="sequence variant" id="VAR_076042" description="Found in a patient with Marfan-like syndrome; likely benign; dbSNP:rs111801777." evidence="34">
    <original>T</original>
    <variation>A</variation>
    <location>
        <position position="1020"/>
    </location>
</feature>
<feature type="sequence variant" id="VAR_002299" description="In MFS; severe neonatal." evidence="83">
    <original>K</original>
    <variation>N</variation>
    <location>
        <position position="1023"/>
    </location>
</feature>
<feature type="sequence variant" id="VAR_076043" description="Found in a patient with Marfan-like syndrome; likely pathogenic; dbSNP:rs1131691317." evidence="32">
    <original>D</original>
    <variation>G</variation>
    <location>
        <position position="1028"/>
    </location>
</feature>
<feature type="sequence variant" id="VAR_076044" description="In MFS; severe neonatal; dbSNP:rs137854481." evidence="32">
    <original>C</original>
    <variation>Y</variation>
    <location>
        <position position="1032"/>
    </location>
</feature>
<feature type="sequence variant" id="VAR_076045" description="In MFS; dbSNP:rs1555398681." evidence="34">
    <original>G</original>
    <variation>S</variation>
    <location>
        <position position="1042"/>
    </location>
</feature>
<feature type="sequence variant" id="VAR_002300" description="In MFS; dbSNP:rs137854472." evidence="91">
    <original>K</original>
    <variation>R</variation>
    <location>
        <position position="1043"/>
    </location>
</feature>
<feature type="sequence variant" id="VAR_017997" description="In MFS; dbSNP:rs730880100." evidence="19">
    <original>C</original>
    <variation>Y</variation>
    <location>
        <position position="1044"/>
    </location>
</feature>
<feature type="sequence variant" id="VAR_002301" description="In MFS; severe neonatal; dbSNP:rs1555398673." evidence="32 97">
    <original>I</original>
    <variation>T</variation>
    <location>
        <position position="1048"/>
    </location>
</feature>
<feature type="sequence variant" id="VAR_055726" description="In dbSNP:rs2229324.">
    <original>I</original>
    <variation>V</variation>
    <location>
        <position position="1048"/>
    </location>
</feature>
<feature type="sequence variant" id="VAR_002302" description="In MFS." evidence="97">
    <location>
        <position position="1048"/>
    </location>
</feature>
<feature type="sequence variant" id="VAR_002303" description="In MFS." evidence="89">
    <original>C</original>
    <variation>R</variation>
    <location>
        <position position="1053"/>
    </location>
</feature>
<feature type="sequence variant" id="VAR_002304" description="In MFS; neonatal; dbSNP:rs1597564258." evidence="19 88">
    <original>C</original>
    <variation>G</variation>
    <location>
        <position position="1055"/>
    </location>
</feature>
<feature type="sequence variant" id="VAR_017998" description="In MFS; dbSNP:rs1060501040." evidence="10">
    <original>C</original>
    <variation>W</variation>
    <location>
        <position position="1055"/>
    </location>
</feature>
<feature type="sequence variant" id="VAR_017999" description="In MFS; dbSNP:rs397515786." evidence="10">
    <original>C</original>
    <variation>Y</variation>
    <location>
        <position position="1055"/>
    </location>
</feature>
<feature type="sequence variant" id="VAR_023873" description="In MFS; dbSNP:rs794728202." evidence="28">
    <original>G</original>
    <variation>D</variation>
    <location>
        <position position="1058"/>
    </location>
</feature>
<feature type="sequence variant" id="VAR_002305" description="In MFS." evidence="97">
    <original>G</original>
    <variation>GC</variation>
    <location>
        <position position="1058"/>
    </location>
</feature>
<feature type="sequence variant" id="VAR_064503" description="In MFS; neonatal form; dbSNP:rs1293095681." evidence="46">
    <original>C</original>
    <variation>G</variation>
    <location>
        <position position="1068"/>
    </location>
</feature>
<feature type="sequence variant" id="VAR_002306" description="In MFS." evidence="89">
    <original>D</original>
    <variation>G</variation>
    <location>
        <position position="1072"/>
    </location>
</feature>
<feature type="sequence variant" id="VAR_002307" description="In MFS; severe neonatal; dbSNP:rs137854478." evidence="73 89">
    <original>E</original>
    <variation>K</variation>
    <location>
        <position position="1073"/>
    </location>
</feature>
<feature type="sequence variant" id="VAR_002308" description="In MFS; severe neonatal; dbSNP:rs137854465." evidence="83 94">
    <original>C</original>
    <variation>R</variation>
    <location>
        <position position="1074"/>
    </location>
</feature>
<feature type="sequence variant" id="VAR_076046" description="In MFS; severe neonatal; dbSNP:rs1555398645." evidence="32">
    <original>C</original>
    <variation>Y</variation>
    <location>
        <position position="1074"/>
    </location>
</feature>
<feature type="sequence variant" id="VAR_076047" description="In ECTOL1." evidence="32">
    <location>
        <begin position="1086"/>
        <end position="2871"/>
    </location>
</feature>
<feature type="sequence variant" id="VAR_002309" description="In MFS." evidence="97">
    <original>C</original>
    <variation>W</variation>
    <location>
        <position position="1086"/>
    </location>
</feature>
<feature type="sequence variant" id="VAR_076048" description="In MFS; severe neonatal." evidence="32">
    <original>N</original>
    <variation>I</variation>
    <location>
        <position position="1088"/>
    </location>
</feature>
<feature type="sequence variant" id="VAR_065990" description="In MFS; dbSNP:rs1555398633." evidence="50">
    <original>P</original>
    <variation>S</variation>
    <location>
        <position position="1090"/>
    </location>
</feature>
<feature type="sequence variant" id="VAR_018000" description="In MFS; dbSNP:rs1555398625." evidence="10 14 19">
    <original>Y</original>
    <variation>C</variation>
    <location>
        <position position="1101"/>
    </location>
</feature>
<feature type="sequence variant" id="VAR_055727" description="In dbSNP:rs140597.">
    <original>D</original>
    <variation>G</variation>
    <location>
        <position position="1113"/>
    </location>
</feature>
<feature type="sequence variant" id="VAR_023874" description="In MFS." evidence="27">
    <original>D</original>
    <variation>V</variation>
    <location>
        <position position="1113"/>
    </location>
</feature>
<feature type="sequence variant" id="VAR_002310" description="In MFS." evidence="89">
    <original>C</original>
    <variation>G</variation>
    <location>
        <position position="1117"/>
    </location>
</feature>
<feature type="sequence variant" id="VAR_076049" description="In MFS; dbSNP:rs2141293770." evidence="54">
    <original>C</original>
    <variation>R</variation>
    <location>
        <position position="1117"/>
    </location>
</feature>
<feature type="sequence variant" id="VAR_002311" description="In MFS; dbSNP:rs137854470." evidence="19 85">
    <original>C</original>
    <variation>Y</variation>
    <location>
        <position position="1117"/>
    </location>
</feature>
<feature type="sequence variant" id="VAR_076050" description="In MFS." evidence="32 34">
    <location>
        <begin position="1125"/>
        <end position="2871"/>
    </location>
</feature>
<feature type="sequence variant" id="VAR_002312" description="In MFS; mild form; dbSNP:rs137854468." evidence="75">
    <original>G</original>
    <variation>S</variation>
    <location>
        <position position="1127"/>
    </location>
</feature>
<feature type="sequence variant" id="VAR_018001" description="In a patient with mitral valve prolapse." evidence="10">
    <original>V</original>
    <variation>I</variation>
    <location>
        <position position="1128"/>
    </location>
</feature>
<feature type="sequence variant" id="VAR_010777" description="In MFS; dbSNP:rs137854482." evidence="5">
    <original>C</original>
    <variation>Y</variation>
    <location>
        <position position="1129"/>
    </location>
</feature>
<feature type="sequence variant" id="VAR_076051" description="In MFS." evidence="41">
    <original>H</original>
    <variation>P</variation>
    <location>
        <position position="1130"/>
    </location>
</feature>
<feature type="sequence variant" id="VAR_002313" description="In dbSNP:rs137854473.">
    <original>N</original>
    <variation>Y</variation>
    <location>
        <position position="1131"/>
    </location>
</feature>
<feature type="sequence variant" id="VAR_076052" description="In MFS." evidence="34">
    <location>
        <begin position="1136"/>
        <end position="2871"/>
    </location>
</feature>
<feature type="sequence variant" id="VAR_002314" description="In MFS; dbSNP:rs137854456." evidence="35 85">
    <original>R</original>
    <variation>P</variation>
    <location>
        <position position="1137"/>
    </location>
</feature>
<feature type="sequence variant" id="VAR_076053" description="In MFS; dbSNP:rs397515791." evidence="32">
    <original>C</original>
    <variation>Y</variation>
    <location>
        <position position="1138"/>
    </location>
</feature>
<feature type="sequence variant" id="VAR_076054" description="In MFS." evidence="32">
    <location>
        <begin position="1140"/>
        <end position="2871"/>
    </location>
</feature>
<feature type="sequence variant" id="VAR_002315" description="In dbSNP:rs140598." evidence="45 85 90 92 95">
    <original>P</original>
    <variation>A</variation>
    <location>
        <position position="1148"/>
    </location>
</feature>
<feature type="sequence variant" id="VAR_023875" description="In MFS." evidence="28">
    <original>C</original>
    <variation>S</variation>
    <location>
        <position position="1153"/>
    </location>
</feature>
<feature type="sequence variant" id="VAR_002316" description="In MFS; severe; dbSNP:rs140599." evidence="19 88">
    <original>C</original>
    <variation>Y</variation>
    <location>
        <position position="1153"/>
    </location>
</feature>
<feature type="sequence variant" id="VAR_002317" description="In MFS and ECTOL1; dbSNP:rs794728204." evidence="19 32">
    <original>D</original>
    <variation>N</variation>
    <location>
        <position position="1155"/>
    </location>
</feature>
<feature type="sequence variant" id="VAR_076055" description="In MFS; dbSNP:rs1597562926." evidence="32">
    <original>E</original>
    <variation>G</variation>
    <location>
        <position position="1158"/>
    </location>
</feature>
<feature type="sequence variant" id="VAR_002318" description="In MFS; benign; dbSNP:rs137854475." evidence="32 76 94">
    <original>R</original>
    <variation>H</variation>
    <location>
        <position position="1170"/>
    </location>
</feature>
<feature type="sequence variant" id="VAR_002319" description="In MFS; dbSNP:rs775417975." evidence="94">
    <original>C</original>
    <variation>W</variation>
    <location>
        <position position="1171"/>
    </location>
</feature>
<feature type="sequence variant" id="VAR_002320" description="In MFS." evidence="94">
    <original>N</original>
    <variation>K</variation>
    <location>
        <position position="1173"/>
    </location>
</feature>
<feature type="sequence variant" id="VAR_076056" description="In MFS." evidence="34">
    <original>C</original>
    <variation>W</variation>
    <location>
        <position position="1182"/>
    </location>
</feature>
<feature type="sequence variant" id="VAR_065991" description="In MFS; dbSNP:rs1555398512." evidence="50">
    <original>G</original>
    <variation>D</variation>
    <location>
        <position position="1185"/>
    </location>
</feature>
<feature type="sequence variant" id="VAR_076057" description="In MFS." evidence="54">
    <original>D</original>
    <variation>A</variation>
    <location>
        <position position="1199"/>
    </location>
</feature>
<feature type="sequence variant" id="VAR_018002" description="In MFS." evidence="11">
    <original>E</original>
    <variation>G</variation>
    <location>
        <position position="1200"/>
    </location>
</feature>
<feature type="sequence variant" id="VAR_023876" description="In MFS." evidence="28">
    <location>
        <position position="1211"/>
    </location>
</feature>
<feature type="sequence variant" id="VAR_023877" description="In MFS; dbSNP:rs1555398394." evidence="28">
    <original>Y</original>
    <variation>C</variation>
    <location>
        <position position="1219"/>
    </location>
</feature>
<feature type="sequence variant" id="VAR_076058" description="In MFS; severe neonatal." evidence="32">
    <original>C</original>
    <variation>R</variation>
    <location>
        <position position="1223"/>
    </location>
</feature>
<feature type="sequence variant" id="VAR_002321" description="In MFS; also found in a patient with Shprintzen-Goldberg craniosynostosis syndrome; dbSNP:rs137854469." evidence="82 101">
    <original>C</original>
    <variation>Y</variation>
    <location>
        <position position="1223"/>
    </location>
</feature>
<feature type="sequence variant" id="VAR_002322" description="In MFS; dbSNP:rs137854471." evidence="83">
    <original>C</original>
    <variation>Y</variation>
    <location>
        <position position="1242"/>
    </location>
</feature>
<feature type="sequence variant" id="VAR_076059" description="In MFS." evidence="32">
    <original>C</original>
    <variation>R</variation>
    <location>
        <position position="1249"/>
    </location>
</feature>
<feature type="sequence variant" id="VAR_002323" description="In MFS; dbSNP:rs137854458." evidence="18">
    <original>C</original>
    <variation>S</variation>
    <location>
        <position position="1249"/>
    </location>
</feature>
<feature type="sequence variant" id="VAR_010778" description="In MFS." evidence="5">
    <original>Y</original>
    <variation>C</variation>
    <location>
        <position position="1261"/>
    </location>
</feature>
<feature type="sequence variant" id="VAR_023878" description="In MFS." evidence="28">
    <original>Y</original>
    <variation>D</variation>
    <location>
        <position position="1261"/>
    </location>
</feature>
<feature type="sequence variant" id="VAR_018320" description="In MFS; dbSNP:rs137854474." evidence="100">
    <original>C</original>
    <variation>R</variation>
    <location>
        <position position="1265"/>
    </location>
</feature>
<feature type="sequence variant" id="VAR_076060" description="In MFS." evidence="34">
    <original>C</original>
    <variation>Y</variation>
    <location>
        <position position="1265"/>
    </location>
</feature>
<feature type="sequence variant" id="VAR_023879" description="In MFS." evidence="28">
    <original>C</original>
    <variation>S</variation>
    <location>
        <position position="1278"/>
    </location>
</feature>
<feature type="sequence variant" id="VAR_055728" description="In dbSNP:rs140647.">
    <original>N</original>
    <variation>S</variation>
    <location>
        <position position="1282"/>
    </location>
</feature>
<feature type="sequence variant" id="VAR_023880" description="In MFS." evidence="27">
    <original>C</original>
    <variation>G</variation>
    <location>
        <position position="1284"/>
    </location>
</feature>
<feature type="sequence variant" id="VAR_065992" description="In MFS; dbSNP:rs1555398173." evidence="50">
    <original>C</original>
    <variation>Y</variation>
    <location>
        <position position="1284"/>
    </location>
</feature>
<feature type="sequence variant" id="VAR_076061" description="In MFS; severe neonatal." evidence="32">
    <original>C</original>
    <variation>Y</variation>
    <location>
        <position position="1307"/>
    </location>
</feature>
<feature type="sequence variant" id="VAR_076062" description="In MFS; dbSNP:rs1597558920." evidence="34">
    <original>C</original>
    <variation>R</variation>
    <location>
        <position position="1320"/>
    </location>
</feature>
<feature type="sequence variant" id="VAR_018003" description="In MFS." evidence="19">
    <original>E</original>
    <variation>Q</variation>
    <location>
        <position position="1325"/>
    </location>
</feature>
<feature type="sequence variant" id="VAR_076063" description="In MFS; severe neonatal; dbSNP:rs2043405278." evidence="32">
    <original>C</original>
    <variation>R</variation>
    <location>
        <position position="1326"/>
    </location>
</feature>
<feature type="sequence variant" id="VAR_023881" description="In MFS; dbSNP:rs2043405073." evidence="28">
    <original>C</original>
    <variation>S</variation>
    <location>
        <position position="1333"/>
    </location>
</feature>
<feature type="sequence variant" id="VAR_018004" description="In MFS; neonatal; dbSNP:rs753648789." evidence="10">
    <original>A</original>
    <variation>P</variation>
    <location>
        <position position="1337"/>
    </location>
</feature>
<feature type="sequence variant" id="VAR_018005" description="In MFS; dbSNP:rs397515798." evidence="10">
    <original>C</original>
    <variation>Y</variation>
    <location>
        <position position="1339"/>
    </location>
</feature>
<feature type="sequence variant" id="VAR_076064" description="In MFS." evidence="32">
    <original>F</original>
    <variation>L</variation>
    <location>
        <position position="1346"/>
    </location>
</feature>
<feature type="sequence variant" id="VAR_065993" description="In MFS; dbSNP:rs1555397718." evidence="50">
    <original>C</original>
    <variation>F</variation>
    <location>
        <position position="1350"/>
    </location>
</feature>
<feature type="sequence variant" id="VAR_018006" description="In MFS; dbSNP:rs763449629." evidence="19 32">
    <original>E</original>
    <variation>K</variation>
    <location>
        <position position="1366"/>
    </location>
</feature>
<feature type="sequence variant" id="VAR_018007" description="In MFS." evidence="19">
    <original>C</original>
    <variation>S</variation>
    <location>
        <position position="1374"/>
    </location>
</feature>
<feature type="sequence variant" id="VAR_002324" description="In MFS." evidence="73">
    <original>N</original>
    <variation>S</variation>
    <location>
        <position position="1382"/>
    </location>
</feature>
<feature type="sequence variant" id="VAR_018008" description="In MFS; dbSNP:rs193922203." evidence="19">
    <original>C</original>
    <variation>R</variation>
    <location>
        <position position="1389"/>
    </location>
</feature>
<feature type="sequence variant" id="VAR_018009" description="In MFS." evidence="19">
    <location>
        <begin position="1394"/>
        <end position="1396"/>
    </location>
</feature>
<feature type="sequence variant" id="VAR_065994" description="In MFS; dbSNP:rs1420739555." evidence="50">
    <original>T</original>
    <variation>A</variation>
    <location>
        <position position="1401"/>
    </location>
</feature>
<feature type="sequence variant" id="VAR_023882" description="In MFS." evidence="28">
    <original>C</original>
    <variation>R</variation>
    <location>
        <position position="1402"/>
    </location>
</feature>
<feature type="sequence variant" id="VAR_076065" description="In MFS; dbSNP:rs1555397646." evidence="32">
    <original>C</original>
    <variation>Y</variation>
    <location>
        <position position="1402"/>
    </location>
</feature>
<feature type="sequence variant" id="VAR_002325" description="In MFS." evidence="94">
    <original>D</original>
    <variation>Y</variation>
    <location>
        <position position="1404"/>
    </location>
</feature>
<feature type="sequence variant" id="VAR_076066" description="Found in a patient with Marfan-like syndrome; likely pathogenic; dbSNP:rs2043386794." evidence="32">
    <original>D</original>
    <variation>G</variation>
    <location>
        <position position="1406"/>
    </location>
</feature>
<feature type="sequence variant" id="VAR_018010" description="In MFS; dbSNP:rs201273753." evidence="19 32">
    <original>P</original>
    <variation>A</variation>
    <location>
        <position position="1424"/>
    </location>
</feature>
<feature type="sequence variant" id="VAR_023883" description="In MFS; dbSNP:rs201273753." evidence="28">
    <original>P</original>
    <variation>S</variation>
    <location>
        <position position="1424"/>
    </location>
</feature>
<feature type="sequence variant" id="VAR_076067" description="In MFS." evidence="32">
    <original>Y</original>
    <variation>D</variation>
    <location>
        <position position="1427"/>
    </location>
</feature>
<feature type="sequence variant" id="VAR_018011" description="In MFS; dbSNP:rs1555397546." evidence="10">
    <original>C</original>
    <variation>S</variation>
    <location>
        <position position="1429"/>
    </location>
</feature>
<feature type="sequence variant" id="VAR_065995" description="In MFS; dbSNP:rs112375043." evidence="50">
    <original>C</original>
    <variation>W</variation>
    <location>
        <position position="1431"/>
    </location>
</feature>
<feature type="sequence variant" id="VAR_065996" description="In MFS; dbSNP:rs1555397540." evidence="50">
    <original>C</original>
    <variation>Y</variation>
    <location>
        <position position="1431"/>
    </location>
</feature>
<feature type="sequence variant" id="VAR_023884" description="In MFS." evidence="27">
    <original>G</original>
    <variation>E</variation>
    <location>
        <position position="1475"/>
    </location>
</feature>
<feature type="sequence variant" id="VAR_023885" description="In MFS." evidence="27">
    <original>G</original>
    <variation>S</variation>
    <location>
        <position position="1475"/>
    </location>
</feature>
<feature type="sequence variant" id="VAR_065997" description="In dbSNP:rs61730054." evidence="50">
    <original>S</original>
    <variation>G</variation>
    <location>
        <position position="1481"/>
    </location>
</feature>
<feature type="sequence variant" id="VAR_076068" description="In MFS; dbSNP:rs730880101." evidence="32">
    <original>C</original>
    <variation>R</variation>
    <location>
        <position position="1485"/>
    </location>
</feature>
<feature type="sequence variant" id="VAR_065998" description="In MFS; dbSNP:rs1555397216." evidence="50">
    <original>D</original>
    <variation>A</variation>
    <location>
        <position position="1487"/>
    </location>
</feature>
<feature type="sequence variant" id="VAR_065999" description="In MFS; dbSNP:rs193922205." evidence="50">
    <original>N</original>
    <variation>K</variation>
    <location>
        <position position="1489"/>
    </location>
</feature>
<feature type="sequence variant" id="VAR_002326" description="In MFS; dbSNP:rs112723282." evidence="83">
    <original>C</original>
    <variation>R</variation>
    <location>
        <position position="1513"/>
    </location>
</feature>
<feature type="sequence variant" id="VAR_076069" description="In MFS." evidence="32">
    <original>D</original>
    <variation>Y</variation>
    <location>
        <position position="1528"/>
    </location>
</feature>
<feature type="sequence variant" id="VAR_018012" description="In MFS and ECTOL1; dbSNP:rs111401431." evidence="10 19 43">
    <original>R</original>
    <variation>C</variation>
    <location>
        <position position="1530"/>
    </location>
</feature>
<feature type="sequence variant" id="VAR_076070" description="In MFS." evidence="34">
    <location>
        <begin position="1534"/>
        <end position="2871"/>
    </location>
</feature>
<feature type="sequence variant" id="VAR_076071" description="In MFS." evidence="34 54">
    <location>
        <begin position="1539"/>
        <end position="2871"/>
    </location>
</feature>
<feature type="sequence variant" id="VAR_076072" description="In MFS." evidence="12 32 34">
    <location>
        <begin position="1541"/>
        <end position="2871"/>
    </location>
</feature>
<feature type="sequence variant" id="VAR_023886" description="In MFS." evidence="28">
    <original>C</original>
    <variation>F</variation>
    <location>
        <position position="1564"/>
    </location>
</feature>
<feature type="sequence variant" id="VAR_064046" description="In SSKS; dbSNP:rs267606800." evidence="44">
    <original>C</original>
    <variation>S</variation>
    <location>
        <position position="1564"/>
    </location>
</feature>
<feature type="sequence variant" id="VAR_018013" description="In MFS; dbSNP:rs267606800." evidence="19">
    <original>C</original>
    <variation>Y</variation>
    <location>
        <position position="1564"/>
    </location>
</feature>
<feature type="sequence variant" id="VAR_064047" description="In SSKS; dbSNP:rs267606799." evidence="44">
    <original>W</original>
    <variation>C</variation>
    <location>
        <position position="1570"/>
    </location>
</feature>
<feature type="sequence variant" id="VAR_023887" description="In MFS; dbSNP:rs776625874." evidence="27">
    <original>M</original>
    <variation>T</variation>
    <location>
        <position position="1576"/>
    </location>
</feature>
<feature type="sequence variant" id="VAR_064048" description="In SSKS; dbSNP:rs267606801." evidence="44">
    <original>C</original>
    <variation>G</variation>
    <location>
        <position position="1577"/>
    </location>
</feature>
<feature type="sequence variant" id="VAR_002327" description="In MFS; dbSNP:rs1555397024." evidence="85">
    <original>C</original>
    <variation>F</variation>
    <location>
        <position position="1589"/>
    </location>
</feature>
<feature type="sequence variant" id="VAR_064049" description="In SSKS; dbSNP:rs267606798." evidence="44">
    <original>G</original>
    <variation>D</variation>
    <location>
        <position position="1594"/>
    </location>
</feature>
<feature type="sequence variant" id="VAR_002328" description="In MFS." evidence="94">
    <original>C</original>
    <variation>G</variation>
    <location>
        <position position="1610"/>
    </location>
</feature>
<feature type="sequence variant" id="VAR_076073" description="In MFS." evidence="32">
    <original>C</original>
    <variation>R</variation>
    <location>
        <position position="1622"/>
    </location>
</feature>
<feature type="sequence variant" id="VAR_023888" description="In MFS." evidence="28 34">
    <original>C</original>
    <variation>G</variation>
    <location>
        <position position="1631"/>
    </location>
</feature>
<feature type="sequence variant" id="VAR_076074" description="Found in a patient with Marfan-like syndrome; likely pathogenic." evidence="32">
    <original>C</original>
    <variation>S</variation>
    <location>
        <position position="1633"/>
    </location>
</feature>
<feature type="sequence variant" id="VAR_076075" description="In MFS; dbSNP:rs1597546984." evidence="54">
    <original>D</original>
    <variation>G</variation>
    <location>
        <position position="1642"/>
    </location>
</feature>
<feature type="sequence variant" id="VAR_076076" description="Found in a patient with Marfan-like syndrome; likely pathogenic." evidence="32">
    <location>
        <begin position="1644"/>
        <end position="2871"/>
    </location>
</feature>
<feature type="sequence variant" id="VAR_002329" description="In MFS; dbSNP:rs137854459." evidence="18">
    <original>C</original>
    <variation>R</variation>
    <location>
        <position position="1663"/>
    </location>
</feature>
<feature type="sequence variant" id="VAR_023889" description="In MFS." evidence="28">
    <original>C</original>
    <variation>Y</variation>
    <location>
        <position position="1663"/>
    </location>
</feature>
<feature type="sequence variant" id="VAR_055729" description="In dbSNP:rs140627.">
    <original>C</original>
    <variation>F</variation>
    <location>
        <position position="1672"/>
    </location>
</feature>
<feature type="sequence variant" id="VAR_076077" description="In MFS." evidence="34">
    <original>C</original>
    <variation>R</variation>
    <location>
        <position position="1672"/>
    </location>
</feature>
<feature type="sequence variant" id="VAR_076078" description="In MFS; dbSNP:rs140627." evidence="34">
    <original>C</original>
    <variation>Y</variation>
    <location>
        <position position="1672"/>
    </location>
</feature>
<feature type="sequence variant" id="VAR_076079" description="In MFS." evidence="34">
    <original>C</original>
    <variation>G</variation>
    <location>
        <position position="1674"/>
    </location>
</feature>
<feature type="sequence variant" id="VAR_018014" description="In WMS2." evidence="16">
    <location>
        <begin position="1692"/>
        <end position="1699"/>
    </location>
</feature>
<feature type="sequence variant" id="VAR_076080" description="In ECTOL1." evidence="32">
    <location>
        <position position="1692"/>
    </location>
</feature>
<feature type="sequence variant" id="VAR_066527" description="In GPHYSD2; dbSNP:rs387906625." evidence="53">
    <original>Y</original>
    <variation>C</variation>
    <location>
        <position position="1696"/>
    </location>
</feature>
<feature type="sequence variant" id="VAR_066528" description="In GPHYSD2 and ACMICD; dbSNP:rs387906622." evidence="53">
    <original>Y</original>
    <variation>C</variation>
    <location>
        <position position="1699"/>
    </location>
</feature>
<feature type="sequence variant" id="VAR_066529" description="In GPHYSD2." evidence="53">
    <original>Y</original>
    <variation>D</variation>
    <location>
        <position position="1699"/>
    </location>
</feature>
<feature type="sequence variant" id="VAR_066530" description="In ACMICD; dbSNP:rs387906626." evidence="53">
    <original>Y</original>
    <variation>C</variation>
    <location>
        <position position="1700"/>
    </location>
</feature>
<feature type="sequence variant" id="VAR_066531" description="In GPHYSD2." evidence="53">
    <original>C</original>
    <variation>Y</variation>
    <location>
        <position position="1706"/>
    </location>
</feature>
<feature type="sequence variant" id="VAR_066532" description="In ACMICD." evidence="53">
    <original>M</original>
    <variation>R</variation>
    <location>
        <position position="1714"/>
    </location>
</feature>
<feature type="sequence variant" id="VAR_066533" description="In GPHYSD2." evidence="53">
    <original>C</original>
    <variation>W</variation>
    <location>
        <position position="1719"/>
    </location>
</feature>
<feature type="sequence variant" id="VAR_076081" description="In MFS." evidence="32">
    <original>C</original>
    <variation>Y</variation>
    <location>
        <position position="1720"/>
    </location>
</feature>
<feature type="sequence variant" id="VAR_066534" description="In ACMICD." evidence="53">
    <original>S</original>
    <variation>C</variation>
    <location>
        <position position="1722"/>
    </location>
</feature>
<feature type="sequence variant" id="VAR_066535" description="In ACMICD; dbSNP:rs1064797059." evidence="53">
    <original>G</original>
    <variation>V</variation>
    <location>
        <position position="1726"/>
    </location>
</feature>
<feature type="sequence variant" id="VAR_066536" description="In GPHYSD2 and ACMICD; dbSNP:rs387906624." evidence="53">
    <original>A</original>
    <variation>T</variation>
    <location>
        <position position="1728"/>
    </location>
</feature>
<feature type="sequence variant" id="VAR_066537" description="In GPHYSD2; dbSNP:rs1131691804." evidence="53">
    <original>A</original>
    <variation>V</variation>
    <location>
        <position position="1728"/>
    </location>
</feature>
<feature type="sequence variant" id="VAR_066538" description="In GPHYSD2." evidence="53">
    <original>C</original>
    <variation>Y</variation>
    <location>
        <position position="1733"/>
    </location>
</feature>
<feature type="sequence variant" id="VAR_076082" description="In MFS." evidence="34">
    <location>
        <begin position="1735"/>
        <end position="2871"/>
    </location>
</feature>
<feature type="sequence variant" id="VAR_066539" description="In ACMICD." evidence="53">
    <original>Q</original>
    <variation>QQ</variation>
    <location>
        <position position="1735"/>
    </location>
</feature>
<feature type="sequence variant" id="VAR_066540" description="In ACMICD; dbSNP:rs1131692052." evidence="53">
    <original>S</original>
    <variation>R</variation>
    <location>
        <position position="1750"/>
    </location>
</feature>
<feature type="sequence variant" id="VAR_066541" description="In ACMICD." evidence="53">
    <original>D</original>
    <variation>V</variation>
    <location>
        <position position="1758"/>
    </location>
</feature>
<feature type="sequence variant" id="VAR_066542" description="In GPHYSD2; dbSNP:rs387906623." evidence="53">
    <original>G</original>
    <variation>S</variation>
    <location>
        <position position="1762"/>
    </location>
</feature>
<feature type="sequence variant" id="VAR_018015" description="In MFS." evidence="19">
    <original>C</original>
    <variation>F</variation>
    <location>
        <position position="1770"/>
    </location>
</feature>
<feature type="sequence variant" id="VAR_076083" description="Found in a patient with Marfan-like syndrome; likely pathogenic." evidence="32">
    <original>C</original>
    <variation>F</variation>
    <location>
        <position position="1777"/>
    </location>
</feature>
<feature type="sequence variant" id="VAR_076084" description="In MFS." evidence="41">
    <location>
        <begin position="1790"/>
        <end position="2871"/>
    </location>
</feature>
<feature type="sequence variant" id="VAR_018016" description="In MFS; dbSNP:rs1555396428." evidence="10 13">
    <original>R</original>
    <variation>P</variation>
    <location>
        <position position="1790"/>
    </location>
</feature>
<feature type="sequence variant" id="VAR_023890" description="In MFS; dbSNP:rs1555396427." evidence="27">
    <original>C</original>
    <variation>R</variation>
    <location>
        <position position="1791"/>
    </location>
</feature>
<feature type="sequence variant" id="VAR_018017" description="In MFS; dbSNP:rs886038848." evidence="10">
    <original>C</original>
    <variation>Y</variation>
    <location>
        <position position="1791"/>
    </location>
</feature>
<feature type="sequence variant" id="VAR_018018" description="In MFS." evidence="19">
    <original>C</original>
    <variation>W</variation>
    <location>
        <position position="1793"/>
    </location>
</feature>
<feature type="sequence variant" id="VAR_076085" description="In MFS; dbSNP:rs1597540854." evidence="32">
    <original>C</original>
    <variation>Y</variation>
    <location>
        <position position="1793"/>
    </location>
</feature>
<feature type="sequence variant" id="VAR_076086" description="Found in a patient with Marfan-like syndrome; likely pathogenic." evidence="32">
    <location>
        <begin position="1796"/>
        <end position="2871"/>
    </location>
</feature>
<feature type="sequence variant" id="VAR_018019" description="In MFS." evidence="19">
    <original>G</original>
    <variation>E</variation>
    <location>
        <position position="1796"/>
    </location>
</feature>
<feature type="sequence variant" id="VAR_076087" description="In MFS; dbSNP:rs2043240309." evidence="32">
    <original>G</original>
    <variation>V</variation>
    <location>
        <position position="1796"/>
    </location>
</feature>
<feature type="sequence variant" id="VAR_018020" description="In MFS." evidence="13 32">
    <original>C</original>
    <variation>S</variation>
    <location>
        <position position="1806"/>
    </location>
</feature>
<feature type="sequence variant" id="VAR_023891" description="In MFS." evidence="14">
    <original>C</original>
    <variation>Y</variation>
    <location>
        <position position="1806"/>
    </location>
</feature>
<feature type="sequence variant" id="VAR_076088" description="In MFS; dbSNP:rs761857514." evidence="32 34">
    <original>E</original>
    <variation>K</variation>
    <location>
        <position position="1811"/>
    </location>
</feature>
<feature type="sequence variant" id="VAR_076089" description="In MFS; dbSNP:rs1597537935." evidence="41">
    <original>C</original>
    <variation>R</variation>
    <location>
        <position position="1812"/>
    </location>
</feature>
<feature type="sequence variant" id="VAR_076090" description="Found in a patient with Marfan-like syndrome; likely pathogenic; dbSNP:rs1555396213." evidence="32">
    <original>C</original>
    <variation>Y</variation>
    <location>
        <position position="1812"/>
    </location>
</feature>
<feature type="sequence variant" id="VAR_076091" description="In MFS; dbSNP:rs2043210015." evidence="41">
    <original>N</original>
    <variation>S</variation>
    <location>
        <position position="1826"/>
    </location>
</feature>
<feature type="sequence variant" id="VAR_076092" description="In MFS." evidence="32">
    <original>S</original>
    <variation>C</variation>
    <location>
        <position position="1830"/>
    </location>
</feature>
<feature type="sequence variant" id="VAR_010779" description="In MFS." evidence="5">
    <original>C</original>
    <variation>S</variation>
    <location>
        <position position="1833"/>
    </location>
</feature>
<feature type="sequence variant" id="VAR_076093" description="In MFS; dbSNP:rs111929350." evidence="32">
    <original>C</original>
    <variation>F</variation>
    <location>
        <position position="1835"/>
    </location>
</feature>
<feature type="sequence variant" id="VAR_018021" description="In MFS; dbSNP:rs111929350." evidence="10 11 12">
    <original>C</original>
    <variation>Y</variation>
    <location>
        <position position="1835"/>
    </location>
</feature>
<feature type="sequence variant" id="VAR_002330" description="In MFS; dbSNP:rs755430984." evidence="97">
    <original>P</original>
    <variation>S</variation>
    <location>
        <position position="1837"/>
    </location>
</feature>
<feature type="sequence variant" id="VAR_066000" description="In MFS; dbSNP:rs397515823." evidence="50">
    <original>G</original>
    <variation>C</variation>
    <location>
        <position position="1838"/>
    </location>
</feature>
<feature type="sequence variant" id="VAR_076094" description="In MFS; dbSNP:rs1555396186." evidence="34">
    <original>C</original>
    <variation>R</variation>
    <location>
        <position position="1847"/>
    </location>
</feature>
<feature type="sequence variant" id="VAR_076095" description="In MFS." evidence="32">
    <original>C</original>
    <variation>W</variation>
    <location>
        <position position="1847"/>
    </location>
</feature>
<feature type="sequence variant" id="VAR_076096" description="In MFS; dbSNP:rs1597535300." evidence="34">
    <original>C</original>
    <variation>Y</variation>
    <location>
        <position position="1860"/>
    </location>
</feature>
<feature type="sequence variant" id="VAR_076097" description="In MFS; dbSNP:rs1555395984." evidence="54">
    <original>C</original>
    <variation>R</variation>
    <location>
        <position position="1865"/>
    </location>
</feature>
<feature type="sequence variant" id="VAR_023892" description="In MFS; dbSNP:rs112728248." evidence="28">
    <original>C</original>
    <variation>Y</variation>
    <location>
        <position position="1876"/>
    </location>
</feature>
<feature type="sequence variant" id="VAR_076098" description="In MFS; dbSNP:rs2043178850." evidence="32">
    <original>G</original>
    <variation>D</variation>
    <location>
        <position position="1879"/>
    </location>
</feature>
<feature type="sequence variant" id="VAR_023893" description="In MFS; dbSNP:rs2043178514." evidence="28">
    <original>T</original>
    <variation>I</variation>
    <location>
        <position position="1887"/>
    </location>
</feature>
<feature type="sequence variant" id="VAR_002331" description="In MFS; dbSNP:rs1597533706." evidence="94">
    <original>N</original>
    <variation>K</variation>
    <location>
        <position position="1893"/>
    </location>
</feature>
<feature type="sequence variant" id="VAR_076099" description="In MFS; dbSNP:rs1057521101." evidence="34">
    <original>E</original>
    <variation>K</variation>
    <location>
        <position position="1894"/>
    </location>
</feature>
<feature type="sequence variant" id="VAR_023894" description="In MFS; dbSNP:rs878853686." evidence="28">
    <original>C</original>
    <variation>R</variation>
    <location>
        <position position="1895"/>
    </location>
</feature>
<feature type="sequence variant" id="VAR_023895" description="In MFS; dbSNP:rs794728237." evidence="28 34 50">
    <original>C</original>
    <variation>Y</variation>
    <location>
        <position position="1900"/>
    </location>
</feature>
<feature type="sequence variant" id="VAR_076100" description="Found in a patient with Marfan-like syndrome; likely pathogenic; dbSNP:rs1060501087." evidence="32">
    <original>N</original>
    <variation>S</variation>
    <location>
        <position position="1907"/>
    </location>
</feature>
<feature type="sequence variant" id="VAR_076101" description="In MFS; dbSNP:rs1304811982." evidence="14">
    <original>T</original>
    <variation>I</variation>
    <location>
        <position position="1908"/>
    </location>
</feature>
<feature type="sequence variant" id="VAR_018022" description="In MFS; dbSNP:rs794728333." evidence="10 50">
    <original>I</original>
    <variation>T</variation>
    <location>
        <position position="1909"/>
    </location>
</feature>
<feature type="sequence variant" id="VAR_018023" description="In MFS; dbSNP:rs1555395826." evidence="10">
    <original>R</original>
    <variation>S</variation>
    <location>
        <position position="1915"/>
    </location>
</feature>
<feature type="sequence variant" id="VAR_076102" description="In MFS." evidence="14">
    <original>G</original>
    <variation>D</variation>
    <location>
        <position position="1919"/>
    </location>
</feature>
<feature type="sequence variant" id="VAR_023896" description="In MFS." evidence="27">
    <original>C</original>
    <variation>G</variation>
    <location>
        <position position="1928"/>
    </location>
</feature>
<feature type="sequence variant" id="VAR_002332" description="In MFS; dbSNP:rs2043162224." evidence="73">
    <original>C</original>
    <variation>R</variation>
    <location>
        <position position="1928"/>
    </location>
</feature>
<feature type="sequence variant" id="VAR_023897" description="In MFS; dbSNP:rs587782947." evidence="27">
    <original>C</original>
    <variation>Y</variation>
    <location>
        <position position="1928"/>
    </location>
</feature>
<feature type="sequence variant" id="VAR_076103" description="Found in a patient with Marfan-like syndrome; likely pathogenic; dbSNP:rs1555395820." evidence="32">
    <original>D</original>
    <variation>H</variation>
    <location>
        <position position="1930"/>
    </location>
</feature>
<feature type="sequence variant" id="VAR_018024" description="In MFS." evidence="13">
    <location>
        <position position="1931"/>
    </location>
</feature>
<feature type="sequence variant" id="VAR_076104" description="In MFS." evidence="34">
    <original>C</original>
    <variation>G</variation>
    <location>
        <position position="1934"/>
    </location>
</feature>
<feature type="sequence variant" id="VAR_066001" description="In MFS; dbSNP:rs1555395767 and dbSNP:rs794728240." evidence="50">
    <original>C</original>
    <variation>S</variation>
    <location>
        <position position="1934"/>
    </location>
</feature>
<feature type="sequence variant" id="VAR_018025" description="In MFS; dbSNP:rs111239111." evidence="10">
    <original>C</original>
    <variation>Y</variation>
    <location>
        <position position="1971"/>
    </location>
</feature>
<feature type="sequence variant" id="VAR_066002" description="In MFS; dbSNP:rs1555395665." evidence="50">
    <original>E</original>
    <variation>G</variation>
    <location>
        <position position="1976"/>
    </location>
</feature>
<feature type="sequence variant" id="VAR_076105" description="In MFS." evidence="12">
    <original>C</original>
    <variation>R</variation>
    <location>
        <position position="1977"/>
    </location>
</feature>
<feature type="sequence variant" id="VAR_076106" description="In MFS." evidence="34">
    <original>C</original>
    <variation>W</variation>
    <location>
        <position position="1977"/>
    </location>
</feature>
<feature type="sequence variant" id="VAR_018026" description="In MFS; dbSNP:rs1555395663." evidence="10">
    <original>C</original>
    <variation>Y</variation>
    <location>
        <position position="1977"/>
    </location>
</feature>
<feature type="sequence variant" id="VAR_066003" description="In MFS; dbSNP:rs1555395659." evidence="50">
    <original>C</original>
    <variation>R</variation>
    <location>
        <position position="1984"/>
    </location>
</feature>
<feature type="sequence variant" id="VAR_076107" description="In MFS; dbSNP:rs727504642." evidence="32">
    <original>G</original>
    <variation>R</variation>
    <location>
        <position position="1987"/>
    </location>
</feature>
<feature type="sequence variant" id="VAR_018027" description="In MFS; dbSNP:rs1085307531." evidence="13">
    <original>C</original>
    <variation>Y</variation>
    <location>
        <position position="1998"/>
    </location>
</feature>
<feature type="sequence variant" id="VAR_055730" description="In dbSNP:rs363802.">
    <original>V</original>
    <variation>I</variation>
    <location>
        <position position="2018"/>
    </location>
</feature>
<feature type="sequence variant" id="VAR_023898" description="In MFS; dbSNP:rs363804." evidence="27">
    <original>C</original>
    <variation>Y</variation>
    <location>
        <position position="2038"/>
    </location>
</feature>
<feature type="sequence variant" id="VAR_076108" description="In MFS." evidence="32">
    <location>
        <begin position="2053"/>
        <end position="2871"/>
    </location>
</feature>
<feature type="sequence variant" id="VAR_055731" description="In dbSNP:rs363805.">
    <original>C</original>
    <variation>F</variation>
    <location>
        <position position="2053"/>
    </location>
</feature>
<feature type="sequence variant" id="VAR_076109" description="In MFS." evidence="34">
    <location>
        <begin position="2057"/>
        <end position="2871"/>
    </location>
</feature>
<feature type="sequence variant" id="VAR_076110" description="In MFS." evidence="34">
    <location>
        <begin position="2062"/>
        <end position="2871"/>
    </location>
</feature>
<feature type="sequence variant" id="VAR_076111" description="In MFS." evidence="34">
    <location>
        <begin position="2064"/>
        <end position="2871"/>
    </location>
</feature>
<feature type="sequence variant" id="VAR_076112" description="In MFS." evidence="54">
    <location>
        <begin position="2081"/>
        <end position="2871"/>
    </location>
</feature>
<feature type="sequence variant" id="VAR_076113" description="In MFS." evidence="41">
    <original>C</original>
    <variation>W</variation>
    <location>
        <position position="2084"/>
    </location>
</feature>
<feature type="sequence variant" id="VAR_076114" description="In MFS; dbSNP:rs794728245." evidence="34">
    <original>C</original>
    <variation>Y</variation>
    <location>
        <position position="2084"/>
    </location>
</feature>
<feature type="sequence variant" id="VAR_023899" description="In MFS." evidence="27">
    <original>C</original>
    <variation>R</variation>
    <location>
        <position position="2085"/>
    </location>
</feature>
<feature type="sequence variant" id="VAR_002333" description="In MFS." evidence="94">
    <original>C</original>
    <variation>W</variation>
    <location>
        <position position="2099"/>
    </location>
</feature>
<feature type="sequence variant" id="VAR_018028" description="In dbSNP:rs200816828." evidence="13">
    <original>T</original>
    <variation>M</variation>
    <location>
        <position position="2101"/>
    </location>
</feature>
<feature type="sequence variant" id="VAR_076115" description="Found in a patient with Marfan-like syndrome; likely pathogenic; dbSNP:rs794728247." evidence="32">
    <original>E</original>
    <variation>K</variation>
    <location>
        <position position="2105"/>
    </location>
</feature>
<feature type="sequence variant" id="VAR_018029" description="In MFS; dbSNP:rs363815." evidence="11">
    <original>C</original>
    <variation>R</variation>
    <location>
        <position position="2111"/>
    </location>
</feature>
<feature type="sequence variant" id="VAR_002334" description="In MFS; dbSNP:rs1131691467." evidence="94">
    <original>C</original>
    <variation>Y</variation>
    <location>
        <position position="2111"/>
    </location>
</feature>
<feature type="sequence variant" id="VAR_055732" description="In dbSNP:rs363816.">
    <original>Y</original>
    <variation>F</variation>
    <location>
        <position position="2113"/>
    </location>
</feature>
<feature type="sequence variant" id="VAR_076116" description="In MFS; dbSNP:rs112989722." evidence="32">
    <original>I</original>
    <variation>M</variation>
    <location>
        <position position="2118"/>
    </location>
</feature>
<feature type="sequence variant" id="VAR_002335" description="In MFS." evidence="32 83">
    <original>D</original>
    <variation>E</variation>
    <location>
        <position position="2127"/>
    </location>
</feature>
<feature type="sequence variant" id="VAR_076117" description="In MFS; dbSNP:rs794728334." evidence="34 41">
    <original>E</original>
    <variation>K</variation>
    <location>
        <position position="2130"/>
    </location>
</feature>
<feature type="sequence variant" id="VAR_076118" description="Found in a patient with Marfan-like syndrome; likely pathogenic." evidence="32">
    <original>V</original>
    <variation>D</variation>
    <location>
        <position position="2136"/>
    </location>
</feature>
<feature type="sequence variant" id="VAR_010780" description="In MFS; dbSNP:rs794728335." evidence="5">
    <original>C</original>
    <variation>Y</variation>
    <location>
        <position position="2142"/>
    </location>
</feature>
<feature type="sequence variant" id="VAR_076119" description="In MFS." evidence="32">
    <original>N</original>
    <variation>D</variation>
    <location>
        <position position="2144"/>
    </location>
</feature>
<feature type="sequence variant" id="VAR_002336" description="In MFS; dbSNP:rs137854461." evidence="27 41 87">
    <original>N</original>
    <variation>S</variation>
    <location>
        <position position="2144"/>
    </location>
</feature>
<feature type="sequence variant" id="VAR_076120" description="In MFS." evidence="32">
    <original>T</original>
    <variation>P</variation>
    <location>
        <position position="2145"/>
    </location>
</feature>
<feature type="sequence variant" id="VAR_002337" description="In MFS; dbSNP:rs794728251." evidence="83">
    <original>C</original>
    <variation>W</variation>
    <location>
        <position position="2151"/>
    </location>
</feature>
<feature type="sequence variant" id="VAR_076121" description="In MFS." evidence="32">
    <original>C</original>
    <variation>Y</variation>
    <location>
        <position position="2153"/>
    </location>
</feature>
<feature type="sequence variant" id="VAR_018030" description="In ECTOL1; dbSNP:rs756219617." evidence="10">
    <original>P</original>
    <variation>R</variation>
    <location>
        <position position="2154"/>
    </location>
</feature>
<feature type="sequence variant" id="VAR_023900" description="In MFS." evidence="28">
    <original>A</original>
    <variation>P</variation>
    <location>
        <position position="2160"/>
    </location>
</feature>
<feature type="sequence variant" id="VAR_066004" description="In MFS; dbSNP:rs794728252." evidence="50">
    <original>D</original>
    <variation>N</variation>
    <location>
        <position position="2166"/>
    </location>
</feature>
<feature type="sequence variant" id="VAR_076122" description="Found in a patient with Marfan-like syndrome; likely pathogenic." evidence="32">
    <location>
        <begin position="2169"/>
        <end position="2871"/>
    </location>
</feature>
<feature type="sequence variant" id="VAR_055733" description="In dbSNP:rs363821.">
    <original>C</original>
    <variation>F</variation>
    <location>
        <position position="2170"/>
    </location>
</feature>
<feature type="sequence variant" id="VAR_066005" description="In MFS; dbSNP:rs910656654." evidence="32 50">
    <original>I</original>
    <variation>T</variation>
    <location>
        <position position="2185"/>
    </location>
</feature>
<feature type="sequence variant" id="VAR_076123" description="Found in a patient with Marfan-like syndrome; likely pathogenic; dbSNP:rs886038976." evidence="32">
    <original>G</original>
    <variation>R</variation>
    <location>
        <position position="2195"/>
    </location>
</feature>
<feature type="sequence variant" id="VAR_076124" description="In MFS." evidence="32 54">
    <location>
        <begin position="2220"/>
        <end position="2871"/>
    </location>
</feature>
<feature type="sequence variant" id="VAR_023901" description="In MFS; dbSNP:rs137854460." evidence="28">
    <original>C</original>
    <variation>F</variation>
    <location>
        <position position="2221"/>
    </location>
</feature>
<feature type="sequence variant" id="VAR_018031" description="In MFS." evidence="13">
    <original>C</original>
    <variation>G</variation>
    <location>
        <position position="2221"/>
    </location>
</feature>
<feature type="sequence variant" id="VAR_076125" description="In MFS; dbSNP:rs113543334." evidence="34">
    <original>C</original>
    <variation>R</variation>
    <location>
        <position position="2221"/>
    </location>
</feature>
<feature type="sequence variant" id="VAR_002338" description="In MFS; dbSNP:rs137854460." evidence="18">
    <original>C</original>
    <variation>S</variation>
    <location>
        <position position="2221"/>
    </location>
</feature>
<feature type="sequence variant" id="VAR_018032" description="In MFS; dbSNP:rs1555394919." evidence="10">
    <original>N</original>
    <variation>H</variation>
    <location>
        <position position="2223"/>
    </location>
</feature>
<feature type="sequence variant" id="VAR_076126" description="Found in a patient with Marfan-like syndrome; likely pathogenic." evidence="32">
    <original>T</original>
    <variation>P</variation>
    <location>
        <position position="2224"/>
    </location>
</feature>
<feature type="sequence variant" id="VAR_076127" description="Found in a patient with Marfan-like syndrome; likely pathogenic." evidence="32">
    <location>
        <begin position="2229"/>
        <end position="2871"/>
    </location>
</feature>
<feature type="sequence variant" id="VAR_076128" description="In MFS; dbSNP:rs1060501054." evidence="34">
    <original>C</original>
    <variation>Y</variation>
    <location>
        <position position="2232"/>
    </location>
</feature>
<feature type="sequence variant" id="VAR_076129" description="Found in a patient with Marfan-like syndrome; likely pathogenic; dbSNP:rs112084407." evidence="32">
    <original>V</original>
    <variation>M</variation>
    <location>
        <position position="2234"/>
    </location>
</feature>
<feature type="sequence variant" id="VAR_066006" description="In MFS; dbSNP:rs1060501032." evidence="50">
    <original>D</original>
    <variation>G</variation>
    <location>
        <position position="2247"/>
    </location>
</feature>
<feature type="sequence variant" id="VAR_076130" description="In ECTOL1." evidence="32">
    <original>E</original>
    <variation>G</variation>
    <location>
        <position position="2250"/>
    </location>
</feature>
<feature type="sequence variant" id="VAR_023902" description="In MFS; dbSNP:rs112836174." evidence="14">
    <original>C</original>
    <variation>R</variation>
    <location>
        <position position="2251"/>
    </location>
</feature>
<feature type="sequence variant" id="VAR_002339" description="In MFS; dbSNP:rs1057520617." evidence="94">
    <original>C</original>
    <variation>R</variation>
    <location>
        <position position="2258"/>
    </location>
</feature>
<feature type="sequence variant" id="VAR_076131" description="In MFS; dbSNP:rs886039047." evidence="12">
    <original>C</original>
    <variation>Y</variation>
    <location>
        <position position="2258"/>
    </location>
</feature>
<feature type="sequence variant" id="VAR_018033" description="In MFS; dbSNP:rs193922228." evidence="13 32 34">
    <original>I</original>
    <variation>T</variation>
    <location>
        <position position="2269"/>
    </location>
</feature>
<feature type="sequence variant" id="VAR_076132" description="In ECTOL1; dbSNP:rs2141232534." evidence="32">
    <original>Y</original>
    <variation>C</variation>
    <location>
        <position position="2272"/>
    </location>
</feature>
<feature type="sequence variant" id="VAR_076133" description="Found in a patient with Marfan-like syndrome; likely pathogenic; dbSNP:rs754270535." evidence="32">
    <original>M</original>
    <variation>T</variation>
    <location>
        <position position="2273"/>
    </location>
</feature>
<feature type="sequence variant" id="VAR_076134" description="In MFS." evidence="32">
    <original>C</original>
    <variation>W</variation>
    <location>
        <position position="2274"/>
    </location>
</feature>
<feature type="sequence variant" id="VAR_055734" description="In dbSNP:rs363835.">
    <original>P</original>
    <variation>S</variation>
    <location>
        <position position="2278"/>
    </location>
</feature>
<feature type="sequence variant" id="VAR_002340" description="In MFS; dbSNP:rs765205164." evidence="10 94">
    <original>R</original>
    <variation>W</variation>
    <location>
        <position position="2282"/>
    </location>
</feature>
<feature type="sequence variant" id="VAR_076135" description="In MFS." evidence="34">
    <original>P</original>
    <variation>T</variation>
    <location>
        <position position="2284"/>
    </location>
</feature>
<feature type="sequence variant" id="VAR_076136" description="Found in a patient with Marfan-like syndrome; likely pathogenic." evidence="32">
    <original>C</original>
    <variation>W</variation>
    <location>
        <position position="2289"/>
    </location>
</feature>
<feature type="sequence variant" id="VAR_076137" description="In MFS." evidence="41">
    <location>
        <begin position="2298"/>
        <end position="2871"/>
    </location>
</feature>
<feature type="sequence variant" id="VAR_076138" description="Found in a patient with Marfan-like syndrome; likely pathogenic; dbSNP:rs2042998789." evidence="32">
    <original>C</original>
    <variation>Y</variation>
    <location>
        <position position="2302"/>
    </location>
</feature>
<feature type="sequence variant" id="VAR_002341" description="In MFS; dbSNP:rs137854457." evidence="18 25">
    <original>C</original>
    <variation>S</variation>
    <location>
        <position position="2307"/>
    </location>
</feature>
<feature type="sequence variant" id="VAR_066007" description="In MFS; dbSNP:rs111588631." evidence="50">
    <original>C</original>
    <variation>R</variation>
    <location>
        <position position="2318"/>
    </location>
</feature>
<feature type="sequence variant" id="VAR_055735" description="In dbSNP:rs363831.">
    <original>D</original>
    <variation>E</variation>
    <location>
        <position position="2329"/>
    </location>
</feature>
<feature type="sequence variant" id="VAR_018034" description="In MFS; dbSNP:rs794728262." evidence="13">
    <original>R</original>
    <variation>W</variation>
    <location>
        <position position="2335"/>
    </location>
</feature>
<feature type="sequence variant" id="VAR_018035" description="In ECTOL1; patient presenting also flat corneas; dbSNP:rs1555394580." evidence="13">
    <original>C</original>
    <variation>Y</variation>
    <location>
        <position position="2339"/>
    </location>
</feature>
<feature type="sequence variant" id="VAR_076139" description="Found in a patient with Marfan-like syndrome; likely pathogenic; dbSNP:rs397515845." evidence="32">
    <original>C</original>
    <variation>Y</variation>
    <location>
        <position position="2365"/>
    </location>
</feature>
<feature type="sequence variant" id="VAR_023903" description="In MFS." evidence="28">
    <original>A</original>
    <variation>T</variation>
    <location>
        <position position="2385"/>
    </location>
</feature>
<feature type="sequence variant" id="VAR_076140" description="In MFS." evidence="12">
    <location>
        <begin position="2394"/>
        <end position="2871"/>
    </location>
</feature>
<feature type="sequence variant" id="VAR_018036" description="In MFS; dbSNP:rs1131691479." evidence="10 50">
    <original>C</original>
    <variation>Y</variation>
    <location>
        <position position="2406"/>
    </location>
</feature>
<feature type="sequence variant" id="VAR_066008" description="In MFS; dbSNP:rs1555394435." evidence="50">
    <original>C</original>
    <variation>S</variation>
    <location>
        <position position="2442"/>
    </location>
</feature>
<feature type="sequence variant" id="VAR_018037" description="In MFS." evidence="19">
    <original>C</original>
    <variation>W</variation>
    <location>
        <position position="2442"/>
    </location>
</feature>
<feature type="sequence variant" id="VAR_002342" description="In ECTOL1 and MFS; dbSNP:rs137854464." evidence="32 83 84">
    <original>E</original>
    <variation>K</variation>
    <location>
        <position position="2447"/>
    </location>
</feature>
<feature type="sequence variant" id="VAR_076141" description="In ECTOL1; dbSNP:rs1566892757." evidence="32">
    <original>C</original>
    <variation>R</variation>
    <location>
        <position position="2448"/>
    </location>
</feature>
<feature type="sequence variant" id="VAR_076142" description="In MFS." evidence="12">
    <location>
        <begin position="2466"/>
        <end position="2871"/>
    </location>
</feature>
<feature type="sequence variant" id="VAR_076143" description="In MFS." evidence="12">
    <location>
        <begin position="2467"/>
        <end position="2871"/>
    </location>
</feature>
<feature type="sequence variant" id="VAR_076144" description="Found in a patient with Marfan-like syndrome; likely pathogenic; dbSNP:rs1555394397." evidence="32">
    <original>C</original>
    <variation>W</variation>
    <location>
        <position position="2470"/>
    </location>
</feature>
<feature type="sequence variant" id="VAR_076145" description="In MFS; dbSNP:rs1555394398." evidence="34">
    <original>C</original>
    <variation>Y</variation>
    <location>
        <position position="2470"/>
    </location>
</feature>
<feature type="sequence variant" id="VAR_018038" description="In MFS; dbSNP:rs869025415." evidence="11">
    <original>Y</original>
    <variation>C</variation>
    <location>
        <position position="2474"/>
    </location>
</feature>
<feature type="sequence variant" id="VAR_002343" description="In MFS; dbSNP:rs1057520728." evidence="32 94">
    <original>C</original>
    <variation>R</variation>
    <location>
        <position position="2489"/>
    </location>
</feature>
<feature type="sequence variant" id="VAR_023904" description="In MFS; dbSNP:rs363810." evidence="28">
    <original>C</original>
    <variation>R</variation>
    <location>
        <position position="2500"/>
    </location>
</feature>
<feature type="sequence variant" id="VAR_023905" description="In MFS; dbSNP:rs794728160." evidence="28">
    <original>C</original>
    <variation>Y</variation>
    <location>
        <position position="2500"/>
    </location>
</feature>
<feature type="sequence variant" id="VAR_002344" description="In MFS; dbSNP:rs794728272." evidence="50 83 91">
    <original>C</original>
    <variation>R</variation>
    <location>
        <position position="2511"/>
    </location>
</feature>
<feature type="sequence variant" id="VAR_076146" description="Found in a patient with Marfan-like syndrome; likely pathogenic; dbSNP:rs2042946390." evidence="32">
    <original>T</original>
    <variation>I</variation>
    <location>
        <position position="2516"/>
    </location>
</feature>
<feature type="sequence variant" id="VAR_076147" description="In MFS; dbSNP:rs763759308." evidence="32">
    <original>T</original>
    <variation>M</variation>
    <location>
        <position position="2520"/>
    </location>
</feature>
<feature type="sequence variant" id="VAR_076148" description="In MFS." evidence="41">
    <original>C</original>
    <variation>Y</variation>
    <location>
        <position position="2522"/>
    </location>
</feature>
<feature type="sequence variant" id="VAR_076149" description="Found in a patient with Marfan-like syndrome; likely pathogenic; dbSNP:rs794728336." evidence="32">
    <original>N</original>
    <variation>S</variation>
    <location>
        <position position="2526"/>
    </location>
</feature>
<feature type="sequence variant" id="VAR_023906" description="In MFS; dbSNP:rs113544411." evidence="28">
    <original>C</original>
    <variation>W</variation>
    <location>
        <position position="2535"/>
    </location>
</feature>
<feature type="sequence variant" id="VAR_023907" description="In MFS; dbSNP:rs397515854." evidence="27 32">
    <original>G</original>
    <variation>R</variation>
    <location>
        <position position="2536"/>
    </location>
</feature>
<feature type="sequence variant" id="VAR_076150" description="Found in a patient with Marfan-like syndrome; likely pathogenic." evidence="32">
    <original>C</original>
    <variation>F</variation>
    <location>
        <position position="2541"/>
    </location>
</feature>
<feature type="sequence variant" id="VAR_076151" description="In MFS." evidence="32">
    <location>
        <begin position="2542"/>
        <end position="2871"/>
    </location>
</feature>
<feature type="sequence variant" id="VAR_076152" description="Found in a patient with Marfan-like syndrome; likely pathogenic; dbSNP:rs369294972." evidence="32">
    <original>R</original>
    <variation>W</variation>
    <location>
        <position position="2554"/>
    </location>
</feature>
<feature type="sequence variant" id="VAR_076153" description="In MFS; dbSNP:rs1566891654." evidence="32">
    <original>G</original>
    <variation>V</variation>
    <location>
        <position position="2555"/>
    </location>
</feature>
<feature type="sequence variant" id="VAR_076154" description="In MFS." evidence="34">
    <original>T</original>
    <variation>P</variation>
    <location>
        <position position="2561"/>
    </location>
</feature>
<feature type="sequence variant" id="VAR_023908" description="In MFS; dbSNP:rs886038786." evidence="28 34">
    <original>E</original>
    <variation>K</variation>
    <location>
        <position position="2570"/>
    </location>
</feature>
<feature type="sequence variant" id="VAR_076155" description="In MFS." evidence="32">
    <location>
        <begin position="2571"/>
        <end position="2871"/>
    </location>
</feature>
<feature type="sequence variant" id="VAR_023909" description="In MFS; dbSNP:rs2042934926." evidence="28">
    <original>C</original>
    <variation>R</variation>
    <location>
        <position position="2571"/>
    </location>
</feature>
<feature type="sequence variant" id="VAR_076156" description="In MFS." evidence="34">
    <original>C</original>
    <variation>R</variation>
    <location>
        <position position="2577"/>
    </location>
</feature>
<feature type="sequence variant" id="VAR_076157" description="In MFS." evidence="32">
    <original>C</original>
    <variation>Y</variation>
    <location>
        <position position="2577"/>
    </location>
</feature>
<feature type="sequence variant" id="VAR_018039" description="In MFS; dbSNP:rs1555394149." evidence="10">
    <original>C</original>
    <variation>F</variation>
    <location>
        <position position="2581"/>
    </location>
</feature>
<feature type="sequence variant" id="VAR_018040" description="In MFS; dbSNP:rs727503054." evidence="10 19 32">
    <original>I</original>
    <variation>T</variation>
    <location>
        <position position="2585"/>
    </location>
</feature>
<feature type="sequence variant" id="VAR_023910" description="In MFS." evidence="28">
    <original>C</original>
    <variation>S</variation>
    <location>
        <position position="2592"/>
    </location>
</feature>
<feature type="sequence variant" id="VAR_023912" description="In MFS." evidence="27">
    <original>C</original>
    <variation>Y</variation>
    <location>
        <position position="2605"/>
    </location>
</feature>
<feature type="sequence variant" id="VAR_066009" description="In MFS." evidence="50">
    <location>
        <position position="2606"/>
    </location>
</feature>
<feature type="sequence variant" id="VAR_023913" description="In MFS; dbSNP:rs111984349." evidence="28 32 50">
    <original>E</original>
    <variation>K</variation>
    <location>
        <position position="2610"/>
    </location>
</feature>
<feature type="sequence variant" id="VAR_018041" description="In MFS; uncertain significance; dbSNP:rs141133182." evidence="10 32">
    <original>G</original>
    <variation>R</variation>
    <location>
        <position position="2618"/>
    </location>
</feature>
<feature type="sequence variant" id="VAR_002345" description="In MFS." evidence="19">
    <original>H</original>
    <variation>P</variation>
    <location>
        <position position="2623"/>
    </location>
</feature>
<feature type="sequence variant" id="VAR_018042" description="In MFS." evidence="10">
    <original>N</original>
    <variation>K</variation>
    <location>
        <position position="2624"/>
    </location>
</feature>
<feature type="sequence variant" id="VAR_002346" description="In MFS; dbSNP:rs193922239." evidence="79">
    <original>G</original>
    <variation>R</variation>
    <location>
        <position position="2627"/>
    </location>
</feature>
<feature type="sequence variant" id="VAR_023914" description="In MFS." evidence="28">
    <original>Y</original>
    <variation>C</variation>
    <location>
        <position position="2629"/>
    </location>
</feature>
<feature type="sequence variant" id="VAR_066010" description="In MFS; dbSNP:rs1555393863." evidence="50">
    <original>C</original>
    <variation>R</variation>
    <location>
        <position position="2646"/>
    </location>
</feature>
<feature type="sequence variant" id="VAR_018043" description="In MFS." evidence="11">
    <original>C</original>
    <variation>G</variation>
    <location>
        <position position="2652"/>
    </location>
</feature>
<feature type="sequence variant" id="VAR_023915" description="In MFS; dbSNP:rs1597509631." evidence="24">
    <original>C</original>
    <variation>S</variation>
    <location>
        <position position="2663"/>
    </location>
</feature>
<feature type="sequence variant" id="VAR_018044" description="In MFS; dbSNP:rs1057521100." evidence="10">
    <original>G</original>
    <variation>C</variation>
    <location>
        <position position="2668"/>
    </location>
</feature>
<feature type="sequence variant" id="VAR_002347" description="In MFS; dbSNP:rs794728283." evidence="97">
    <original>R</original>
    <variation>C</variation>
    <location>
        <position position="2680"/>
    </location>
</feature>
<feature type="sequence variant" id="VAR_076158" description="In MFS." evidence="34">
    <location>
        <begin position="2694"/>
        <end position="2871"/>
    </location>
</feature>
<feature type="sequence variant" id="VAR_076159" description="In MFS; dbSNP:rs759494825." evidence="41">
    <original>N</original>
    <variation>S</variation>
    <location>
        <position position="2708"/>
    </location>
</feature>
<feature type="sequence variant" id="VAR_002348" description="Found in a patient with Marfan-like syndrome; likely pathogenic; defects in protein processing; dbSNP:rs61746008." evidence="32 34 74 99">
    <original>R</original>
    <variation>W</variation>
    <location>
        <position position="2726"/>
    </location>
</feature>
<feature type="sequence variant" id="VAR_076160" description="In MFLS; dbSNP:rs1409931715." evidence="60">
    <original>I</original>
    <variation>T</variation>
    <location>
        <position position="2741"/>
    </location>
</feature>
<feature type="sequence variant" id="VAR_076161" description="Found in a patient with Marfan-like syndrome; likely pathogenic." evidence="34">
    <location>
        <begin position="2774"/>
        <end position="2871"/>
    </location>
</feature>
<feature type="sequence variant" id="VAR_076162" description="Found in a patient with Marfan-like syndrome; likely pathogenic; prevents secretion into the extracellular matrix." evidence="61 77">
    <location>
        <begin position="2776"/>
        <end position="2781"/>
    </location>
</feature>
<feature type="sequence variant" id="VAR_076163" description="Found in a patient with Marfan-like syndrome; likely pathogenic; prevents secretion into the extracellular matrix; dbSNP:rs869025417." evidence="12 61">
    <original>L</original>
    <variation>P</variation>
    <location>
        <position position="2780"/>
    </location>
</feature>
<feature type="sequence variant" id="VAR_066011" description="Found in a patient with Marfan-like syndrome; likely pathogenic; dbSNP:rs113722038." evidence="50">
    <original>Y</original>
    <variation>H</variation>
    <location>
        <position position="2793"/>
    </location>
</feature>
<feature type="sequence variant" id="VAR_076164" description="Found in a patient with Marfan-like syndrome; likely pathogenic." evidence="32">
    <location>
        <begin position="2840"/>
        <end position="2871"/>
    </location>
</feature>
<feature type="sequence variant" id="VAR_076165" description="Found in a patient with Marfan-like syndrome; likely pathogenic; prevents secretion into the extracellular matrix." evidence="48 61">
    <location>
        <begin position="2849"/>
        <end position="2871"/>
    </location>
</feature>
<feature type="sequence variant" id="VAR_076166" description="Found in a patient with Marfan-like syndrome; likely pathogenic; prevents secretion into the extracellular matrix." evidence="38 61">
    <location>
        <begin position="2867"/>
        <end position="2871"/>
    </location>
</feature>
<feature type="mutagenesis site" description="Loss of integrin-mediated cell adhesion." evidence="17">
    <original>G</original>
    <variation>D</variation>
    <location>
        <position position="1542"/>
    </location>
</feature>
<feature type="mutagenesis site" description="Abolishes furin cleavage site, leading to defects in protein processing at the C-terminus." evidence="99">
    <original>R</original>
    <variation>A</variation>
    <location>
        <position position="2728"/>
    </location>
</feature>
<feature type="mutagenesis site" description="Abolishes furin cleavage site, leading to defects in protein processing at the C-terminus." evidence="99">
    <original>R</original>
    <variation>K</variation>
    <location>
        <position position="2731"/>
    </location>
</feature>
<feature type="mutagenesis site" description="Defects in protein processing at the C-terminus." evidence="99">
    <original>S</original>
    <variation>T</variation>
    <location>
        <position position="2732"/>
    </location>
</feature>
<feature type="sequence conflict" description="In Ref. 1; AAB02036." evidence="105" ref="1">
    <original>T</original>
    <variation>Q</variation>
    <location>
        <position position="207"/>
    </location>
</feature>
<feature type="sequence conflict" description="In Ref. 1; AAB02036 and 7; CAA45118." evidence="105" ref="1 7">
    <original>I</original>
    <variation>T</variation>
    <location>
        <position position="2158"/>
    </location>
</feature>
<feature type="strand" evidence="120">
    <location>
        <begin position="50"/>
        <end position="52"/>
    </location>
</feature>
<feature type="strand" evidence="120">
    <location>
        <begin position="54"/>
        <end position="56"/>
    </location>
</feature>
<feature type="strand" evidence="120">
    <location>
        <begin position="58"/>
        <end position="60"/>
    </location>
</feature>
<feature type="strand" evidence="120">
    <location>
        <begin position="92"/>
        <end position="96"/>
    </location>
</feature>
<feature type="strand" evidence="120">
    <location>
        <begin position="99"/>
        <end position="101"/>
    </location>
</feature>
<feature type="strand" evidence="120">
    <location>
        <begin position="107"/>
        <end position="110"/>
    </location>
</feature>
<feature type="turn" evidence="120">
    <location>
        <begin position="118"/>
        <end position="120"/>
    </location>
</feature>
<feature type="strand" evidence="122">
    <location>
        <begin position="128"/>
        <end position="130"/>
    </location>
</feature>
<feature type="strand" evidence="122">
    <location>
        <begin position="133"/>
        <end position="135"/>
    </location>
</feature>
<feature type="turn" evidence="120">
    <location>
        <begin position="142"/>
        <end position="145"/>
    </location>
</feature>
<feature type="strand" evidence="120">
    <location>
        <begin position="155"/>
        <end position="157"/>
    </location>
</feature>
<feature type="strand" evidence="120">
    <location>
        <begin position="159"/>
        <end position="162"/>
    </location>
</feature>
<feature type="strand" evidence="120">
    <location>
        <begin position="165"/>
        <end position="167"/>
    </location>
</feature>
<feature type="strand" evidence="122">
    <location>
        <begin position="170"/>
        <end position="172"/>
    </location>
</feature>
<feature type="strand" evidence="120">
    <location>
        <begin position="174"/>
        <end position="176"/>
    </location>
</feature>
<feature type="strand" evidence="122">
    <location>
        <begin position="184"/>
        <end position="187"/>
    </location>
</feature>
<feature type="strand" evidence="122">
    <location>
        <begin position="191"/>
        <end position="193"/>
    </location>
</feature>
<feature type="helix" evidence="122">
    <location>
        <begin position="206"/>
        <end position="211"/>
    </location>
</feature>
<feature type="strand" evidence="122">
    <location>
        <begin position="215"/>
        <end position="217"/>
    </location>
</feature>
<feature type="turn" evidence="122">
    <location>
        <begin position="218"/>
        <end position="221"/>
    </location>
</feature>
<feature type="strand" evidence="122">
    <location>
        <begin position="229"/>
        <end position="231"/>
    </location>
</feature>
<feature type="strand" evidence="122">
    <location>
        <begin position="235"/>
        <end position="237"/>
    </location>
</feature>
<feature type="turn" evidence="122">
    <location>
        <begin position="239"/>
        <end position="241"/>
    </location>
</feature>
<feature type="strand" evidence="122">
    <location>
        <begin position="244"/>
        <end position="246"/>
    </location>
</feature>
<feature type="helix" evidence="122">
    <location>
        <begin position="249"/>
        <end position="252"/>
    </location>
</feature>
<feature type="turn" evidence="122">
    <location>
        <begin position="253"/>
        <end position="255"/>
    </location>
</feature>
<feature type="strand" evidence="122">
    <location>
        <begin position="258"/>
        <end position="265"/>
    </location>
</feature>
<feature type="strand" evidence="122">
    <location>
        <begin position="268"/>
        <end position="272"/>
    </location>
</feature>
<feature type="turn" evidence="122">
    <location>
        <begin position="281"/>
        <end position="284"/>
    </location>
</feature>
<feature type="helix" evidence="121">
    <location>
        <begin position="810"/>
        <end position="813"/>
    </location>
</feature>
<feature type="strand" evidence="121">
    <location>
        <begin position="819"/>
        <end position="824"/>
    </location>
</feature>
<feature type="strand" evidence="121">
    <location>
        <begin position="827"/>
        <end position="831"/>
    </location>
</feature>
<feature type="strand" evidence="121">
    <location>
        <begin position="836"/>
        <end position="838"/>
    </location>
</feature>
<feature type="strand" evidence="121">
    <location>
        <begin position="842"/>
        <end position="847"/>
    </location>
</feature>
<feature type="strand" evidence="121">
    <location>
        <begin position="851"/>
        <end position="858"/>
    </location>
</feature>
<feature type="strand" evidence="121">
    <location>
        <begin position="861"/>
        <end position="870"/>
    </location>
</feature>
<feature type="helix" evidence="121">
    <location>
        <begin position="872"/>
        <end position="876"/>
    </location>
</feature>
<feature type="turn" evidence="121">
    <location>
        <begin position="877"/>
        <end position="879"/>
    </location>
</feature>
<feature type="strand" evidence="121">
    <location>
        <begin position="881"/>
        <end position="883"/>
    </location>
</feature>
<feature type="turn" evidence="121">
    <location>
        <begin position="884"/>
        <end position="887"/>
    </location>
</feature>
<feature type="turn" evidence="121">
    <location>
        <begin position="894"/>
        <end position="896"/>
    </location>
</feature>
<feature type="strand" evidence="121">
    <location>
        <begin position="900"/>
        <end position="904"/>
    </location>
</feature>
<feature type="strand" evidence="121">
    <location>
        <begin position="907"/>
        <end position="910"/>
    </location>
</feature>
<feature type="helix" evidence="121">
    <location>
        <begin position="913"/>
        <end position="916"/>
    </location>
</feature>
<feature type="strand" evidence="121">
    <location>
        <begin position="921"/>
        <end position="929"/>
    </location>
</feature>
<feature type="strand" evidence="121">
    <location>
        <begin position="932"/>
        <end position="936"/>
    </location>
</feature>
<feature type="turn" evidence="116">
    <location>
        <begin position="1073"/>
        <end position="1076"/>
    </location>
</feature>
<feature type="turn" evidence="116">
    <location>
        <begin position="1080"/>
        <end position="1083"/>
    </location>
</feature>
<feature type="strand" evidence="116">
    <location>
        <begin position="1086"/>
        <end position="1089"/>
    </location>
</feature>
<feature type="strand" evidence="116">
    <location>
        <begin position="1092"/>
        <end position="1095"/>
    </location>
</feature>
<feature type="strand" evidence="116">
    <location>
        <begin position="1099"/>
        <end position="1103"/>
    </location>
</feature>
<feature type="turn" evidence="116">
    <location>
        <begin position="1105"/>
        <end position="1107"/>
    </location>
</feature>
<feature type="strand" evidence="116">
    <location>
        <begin position="1108"/>
        <end position="1113"/>
    </location>
</feature>
<feature type="helix" evidence="116">
    <location>
        <begin position="1116"/>
        <end position="1119"/>
    </location>
</feature>
<feature type="turn" evidence="116">
    <location>
        <begin position="1123"/>
        <end position="1126"/>
    </location>
</feature>
<feature type="strand" evidence="116">
    <location>
        <begin position="1127"/>
        <end position="1132"/>
    </location>
</feature>
<feature type="strand" evidence="116">
    <location>
        <begin position="1135"/>
        <end position="1140"/>
    </location>
</feature>
<feature type="strand" evidence="116">
    <location>
        <begin position="1148"/>
        <end position="1150"/>
    </location>
</feature>
<feature type="helix" evidence="118">
    <location>
        <begin position="1490"/>
        <end position="1492"/>
    </location>
</feature>
<feature type="strand" evidence="118">
    <location>
        <begin position="1496"/>
        <end position="1498"/>
    </location>
</feature>
<feature type="strand" evidence="118">
    <location>
        <begin position="1500"/>
        <end position="1505"/>
    </location>
</feature>
<feature type="strand" evidence="118">
    <location>
        <begin position="1508"/>
        <end position="1512"/>
    </location>
</feature>
<feature type="strand" evidence="118">
    <location>
        <begin position="1523"/>
        <end position="1527"/>
    </location>
</feature>
<feature type="strand" evidence="118">
    <location>
        <begin position="1532"/>
        <end position="1537"/>
    </location>
</feature>
<feature type="strand" evidence="117">
    <location>
        <begin position="1544"/>
        <end position="1546"/>
    </location>
</feature>
<feature type="strand" evidence="118">
    <location>
        <begin position="1550"/>
        <end position="1557"/>
    </location>
</feature>
<feature type="helix" evidence="118">
    <location>
        <begin position="1559"/>
        <end position="1563"/>
    </location>
</feature>
<feature type="turn" evidence="118">
    <location>
        <begin position="1564"/>
        <end position="1566"/>
    </location>
</feature>
<feature type="strand" evidence="119">
    <location>
        <begin position="1568"/>
        <end position="1570"/>
    </location>
</feature>
<feature type="turn" evidence="118">
    <location>
        <begin position="1571"/>
        <end position="1574"/>
    </location>
</feature>
<feature type="helix" evidence="118">
    <location>
        <begin position="1583"/>
        <end position="1588"/>
    </location>
</feature>
<feature type="strand" evidence="118">
    <location>
        <begin position="1595"/>
        <end position="1597"/>
    </location>
</feature>
<feature type="turn" evidence="118">
    <location>
        <begin position="1599"/>
        <end position="1601"/>
    </location>
</feature>
<feature type="strand" evidence="118">
    <location>
        <begin position="1604"/>
        <end position="1606"/>
    </location>
</feature>
<feature type="helix" evidence="118">
    <location>
        <begin position="1609"/>
        <end position="1612"/>
    </location>
</feature>
<feature type="helix" evidence="118">
    <location>
        <begin position="1614"/>
        <end position="1617"/>
    </location>
</feature>
<feature type="strand" evidence="118">
    <location>
        <begin position="1620"/>
        <end position="1624"/>
    </location>
</feature>
<feature type="strand" evidence="118">
    <location>
        <begin position="1629"/>
        <end position="1632"/>
    </location>
</feature>
<feature type="turn" evidence="118">
    <location>
        <begin position="1641"/>
        <end position="1643"/>
    </location>
</feature>
<feature type="helix" evidence="114">
    <location>
        <begin position="2054"/>
        <end position="2056"/>
    </location>
</feature>
<feature type="strand" evidence="114">
    <location>
        <begin position="2061"/>
        <end position="2065"/>
    </location>
</feature>
<feature type="strand" evidence="114">
    <location>
        <begin position="2070"/>
        <end position="2073"/>
    </location>
</feature>
<feature type="helix" evidence="114">
    <location>
        <begin position="2080"/>
        <end position="2084"/>
    </location>
</feature>
<feature type="strand" evidence="114">
    <location>
        <begin position="2090"/>
        <end position="2092"/>
    </location>
</feature>
<feature type="turn" evidence="114">
    <location>
        <begin position="2093"/>
        <end position="2096"/>
    </location>
</feature>
<feature type="helix" evidence="114">
    <location>
        <begin position="2105"/>
        <end position="2110"/>
    </location>
</feature>
<feature type="strand" evidence="115">
    <location>
        <begin position="2130"/>
        <end position="2133"/>
    </location>
</feature>
<feature type="strand" evidence="115">
    <location>
        <begin position="2138"/>
        <end position="2142"/>
    </location>
</feature>
<feature type="strand" evidence="115">
    <location>
        <begin position="2157"/>
        <end position="2160"/>
    </location>
</feature>
<feature type="strand" evidence="115">
    <location>
        <begin position="2163"/>
        <end position="2166"/>
    </location>
</feature>
<feature type="helix" evidence="115">
    <location>
        <begin position="2169"/>
        <end position="2171"/>
    </location>
</feature>
<feature type="strand" evidence="115">
    <location>
        <begin position="2177"/>
        <end position="2179"/>
    </location>
</feature>
<feature type="strand" evidence="115">
    <location>
        <begin position="2181"/>
        <end position="2183"/>
    </location>
</feature>
<feature type="strand" evidence="115">
    <location>
        <begin position="2185"/>
        <end position="2190"/>
    </location>
</feature>
<feature type="strand" evidence="115">
    <location>
        <begin position="2193"/>
        <end position="2196"/>
    </location>
</feature>
<feature type="strand" evidence="115">
    <location>
        <begin position="2200"/>
        <end position="2202"/>
    </location>
</feature>
<reference key="1">
    <citation type="journal article" date="1993" name="Hum. Mol. Genet.">
        <title>Genomic organization of the sequence coding for fibrillin, the defective gene product in Marfan syndrome.</title>
        <authorList>
            <person name="Pereira L.V."/>
            <person name="D'Alessio M."/>
            <person name="Ramirez F."/>
            <person name="Lynch J.R."/>
            <person name="Sykes B."/>
            <person name="Pangilinan T."/>
            <person name="Bonadio J."/>
        </authorList>
    </citation>
    <scope>NUCLEOTIDE SEQUENCE [MRNA]</scope>
    <source>
        <tissue>Placenta</tissue>
    </source>
</reference>
<reference key="2">
    <citation type="journal article" date="2004" name="J. Hum. Genet.">
        <title>Three novel mutations of the fibrillin-1 gene and ten single nucleotide polymorphisms of the fibrillin-3 gene in Marfan syndrome patients.</title>
        <authorList>
            <person name="Uyeda T."/>
            <person name="Takahashi T."/>
            <person name="Eto S."/>
            <person name="Sato T."/>
            <person name="Xu G."/>
            <person name="Kanezaki R."/>
            <person name="Toki T."/>
            <person name="Yonesaka S."/>
            <person name="Ito E."/>
        </authorList>
    </citation>
    <scope>NUCLEOTIDE SEQUENCE [GENOMIC DNA]</scope>
    <scope>VARIANT MFS SER-2663</scope>
    <scope>VARIANT CYS-472</scope>
</reference>
<reference key="3">
    <citation type="submission" date="2009-09" db="EMBL/GenBank/DDBJ databases">
        <authorList>
            <person name="Rieder M.J."/>
            <person name="Bertucci C."/>
            <person name="Stanaway I.B."/>
            <person name="Johnson E.J."/>
            <person name="Swanson J.E."/>
            <person name="Siegel D.L."/>
            <person name="da Ponte S.H."/>
            <person name="Igartua C."/>
            <person name="Patterson K."/>
            <person name="Nickerson D.A."/>
        </authorList>
    </citation>
    <scope>NUCLEOTIDE SEQUENCE [GENOMIC DNA]</scope>
</reference>
<reference key="4">
    <citation type="journal article" date="2006" name="Nature">
        <title>Analysis of the DNA sequence and duplication history of human chromosome 15.</title>
        <authorList>
            <person name="Zody M.C."/>
            <person name="Garber M."/>
            <person name="Sharpe T."/>
            <person name="Young S.K."/>
            <person name="Rowen L."/>
            <person name="O'Neill K."/>
            <person name="Whittaker C.A."/>
            <person name="Kamal M."/>
            <person name="Chang J.L."/>
            <person name="Cuomo C.A."/>
            <person name="Dewar K."/>
            <person name="FitzGerald M.G."/>
            <person name="Kodira C.D."/>
            <person name="Madan A."/>
            <person name="Qin S."/>
            <person name="Yang X."/>
            <person name="Abbasi N."/>
            <person name="Abouelleil A."/>
            <person name="Arachchi H.M."/>
            <person name="Baradarani L."/>
            <person name="Birditt B."/>
            <person name="Bloom S."/>
            <person name="Bloom T."/>
            <person name="Borowsky M.L."/>
            <person name="Burke J."/>
            <person name="Butler J."/>
            <person name="Cook A."/>
            <person name="DeArellano K."/>
            <person name="DeCaprio D."/>
            <person name="Dorris L. III"/>
            <person name="Dors M."/>
            <person name="Eichler E.E."/>
            <person name="Engels R."/>
            <person name="Fahey J."/>
            <person name="Fleetwood P."/>
            <person name="Friedman C."/>
            <person name="Gearin G."/>
            <person name="Hall J.L."/>
            <person name="Hensley G."/>
            <person name="Johnson E."/>
            <person name="Jones C."/>
            <person name="Kamat A."/>
            <person name="Kaur A."/>
            <person name="Locke D.P."/>
            <person name="Madan A."/>
            <person name="Munson G."/>
            <person name="Jaffe D.B."/>
            <person name="Lui A."/>
            <person name="Macdonald P."/>
            <person name="Mauceli E."/>
            <person name="Naylor J.W."/>
            <person name="Nesbitt R."/>
            <person name="Nicol R."/>
            <person name="O'Leary S.B."/>
            <person name="Ratcliffe A."/>
            <person name="Rounsley S."/>
            <person name="She X."/>
            <person name="Sneddon K.M.B."/>
            <person name="Stewart S."/>
            <person name="Sougnez C."/>
            <person name="Stone S.M."/>
            <person name="Topham K."/>
            <person name="Vincent D."/>
            <person name="Wang S."/>
            <person name="Zimmer A.R."/>
            <person name="Birren B.W."/>
            <person name="Hood L."/>
            <person name="Lander E.S."/>
            <person name="Nusbaum C."/>
        </authorList>
    </citation>
    <scope>NUCLEOTIDE SEQUENCE [LARGE SCALE GENOMIC DNA]</scope>
</reference>
<reference key="5">
    <citation type="submission" date="2005-07" db="EMBL/GenBank/DDBJ databases">
        <authorList>
            <person name="Mural R.J."/>
            <person name="Istrail S."/>
            <person name="Sutton G.G."/>
            <person name="Florea L."/>
            <person name="Halpern A.L."/>
            <person name="Mobarry C.M."/>
            <person name="Lippert R."/>
            <person name="Walenz B."/>
            <person name="Shatkay H."/>
            <person name="Dew I."/>
            <person name="Miller J.R."/>
            <person name="Flanigan M.J."/>
            <person name="Edwards N.J."/>
            <person name="Bolanos R."/>
            <person name="Fasulo D."/>
            <person name="Halldorsson B.V."/>
            <person name="Hannenhalli S."/>
            <person name="Turner R."/>
            <person name="Yooseph S."/>
            <person name="Lu F."/>
            <person name="Nusskern D.R."/>
            <person name="Shue B.C."/>
            <person name="Zheng X.H."/>
            <person name="Zhong F."/>
            <person name="Delcher A.L."/>
            <person name="Huson D.H."/>
            <person name="Kravitz S.A."/>
            <person name="Mouchard L."/>
            <person name="Reinert K."/>
            <person name="Remington K.A."/>
            <person name="Clark A.G."/>
            <person name="Waterman M.S."/>
            <person name="Eichler E.E."/>
            <person name="Adams M.D."/>
            <person name="Hunkapiller M.W."/>
            <person name="Myers E.W."/>
            <person name="Venter J.C."/>
        </authorList>
    </citation>
    <scope>NUCLEOTIDE SEQUENCE [LARGE SCALE GENOMIC DNA]</scope>
</reference>
<reference key="6">
    <citation type="journal article" date="2004" name="Genome Res.">
        <title>The status, quality, and expansion of the NIH full-length cDNA project: the Mammalian Gene Collection (MGC).</title>
        <authorList>
            <consortium name="The MGC Project Team"/>
        </authorList>
    </citation>
    <scope>NUCLEOTIDE SEQUENCE [LARGE SCALE MRNA]</scope>
</reference>
<reference key="7">
    <citation type="journal article" date="1993" name="Genomics">
        <title>Fibrillin binds calcium and is coded by cDNAs that reveal a multidomain structure and alternatively spliced exons at the 5' end.</title>
        <authorList>
            <person name="Corson G.M."/>
            <person name="Chalberg S.C."/>
            <person name="Dietz H.C."/>
            <person name="Charbonneau N.L."/>
            <person name="Sakai L.Y."/>
        </authorList>
    </citation>
    <scope>NUCLEOTIDE SEQUENCE [MRNA]</scope>
    <scope>NUCLEOTIDE SEQUENCE [GENOMIC DNA] OF 1-55</scope>
    <source>
        <tissue>Fibroblast</tissue>
        <tissue>Placenta</tissue>
    </source>
</reference>
<reference key="8">
    <citation type="journal article" date="1991" name="Nature">
        <title>Partial sequence of a candidate gene for the Marfan syndrome.</title>
        <authorList>
            <person name="Maslen C.L."/>
            <person name="Corson G.M."/>
            <person name="Maddox B.K."/>
            <person name="Glanville R.W."/>
            <person name="Sakai L.Y."/>
        </authorList>
    </citation>
    <scope>NUCLEOTIDE SEQUENCE [MRNA] OF 899-2871</scope>
</reference>
<reference key="9">
    <citation type="journal article" date="1991" name="Nature">
        <title>Linkage of Marfan syndrome and a phenotypically related disorder to two different fibrillin genes.</title>
        <authorList>
            <person name="Lee B."/>
            <person name="Godfrey M."/>
            <person name="Vitale E."/>
            <person name="Hori H."/>
            <person name="Mattei M.-G."/>
            <person name="Sarfarazi M."/>
            <person name="Tsipouras P."/>
            <person name="Ramirez F."/>
            <person name="Hollister D.W."/>
        </authorList>
    </citation>
    <scope>NUCLEOTIDE SEQUENCE [MRNA] OF 813-1313</scope>
</reference>
<reference key="10">
    <citation type="journal article" date="1993" name="Science">
        <title>The skipping of constitutive exons in vivo induced by nonsense mutations.</title>
        <authorList>
            <person name="Dietz H.C."/>
            <person name="Valle D."/>
            <person name="Francomano C.A."/>
            <person name="Kendzior R.J. Jr."/>
            <person name="Pyeritz R.E."/>
            <person name="Cutting G.R."/>
        </authorList>
    </citation>
    <scope>NUCLEOTIDE SEQUENCE [GENOMIC DNA] OF 2086-2194</scope>
</reference>
<reference key="11">
    <citation type="journal article" date="2000" name="J. Biol. Chem.">
        <title>Initial steps in assembly of microfibrils. Formation of disulfide-cross-linked multimers containing fibrillin-1.</title>
        <authorList>
            <person name="Reinhardt D.P."/>
            <person name="Gambee J.E."/>
            <person name="Ono R.N."/>
            <person name="Baechinger H.P."/>
            <person name="Sakai L.Y."/>
        </authorList>
    </citation>
    <scope>PROTEIN SEQUENCE OF 25-36 AND 45-56</scope>
    <scope>CLEAVAGE OF SIGNAL PEPTIDE AFTER GLY-24</scope>
</reference>
<reference key="12">
    <citation type="journal article" date="1998" name="Hum. Mol. Genet.">
        <title>Evidence for furin-type activity-mediated C-terminal processing of profibrillin-1 and interference in the processing by certain mutations.</title>
        <authorList>
            <person name="Loennqvist L."/>
            <person name="Reinhardt D."/>
            <person name="Sakai L."/>
            <person name="Peltonen L."/>
        </authorList>
    </citation>
    <scope>PROTEIN SEQUENCE OF 2732-2746</scope>
    <scope>PROTEOLYTIC PROCESSING</scope>
    <scope>MUTAGENESIS OF ARG-2728; ARG-2731 AND SER-2732</scope>
    <scope>CHARACTERIZATION OF VARIANT TRP-2726</scope>
</reference>
<reference key="13">
    <citation type="journal article" date="1989" name="JAMA">
        <title>Association of mitral valve prolapse and systemic abnormalities of connective tissue: a phenotypic continuum.</title>
        <authorList>
            <person name="Glesby M.J."/>
            <person name="Pyeritz R.E."/>
        </authorList>
    </citation>
    <scope>INVOLVEMENT IN OCTD</scope>
</reference>
<reference key="14">
    <citation type="journal article" date="1991" name="J. Biol. Chem.">
        <title>Purification and partial characterization of fibrillin, a cysteine-rich structural component of connective tissue microfibrils.</title>
        <authorList>
            <person name="Sakai L.Y."/>
            <person name="Keene D.R."/>
            <person name="Glanville R.W."/>
            <person name="Bachinger H.P."/>
        </authorList>
    </citation>
    <scope>FUNCTION</scope>
</reference>
<reference key="15">
    <citation type="journal article" date="2001" name="J. Biol. Chem.">
        <title>Interactions of fibrillin-1 with heparin/heparan sulfate, implications for microfibrillar assembly.</title>
        <authorList>
            <person name="Tiedemann K."/>
            <person name="Baetge B."/>
            <person name="Mueller P.K."/>
            <person name="Reinhardt D.P."/>
        </authorList>
    </citation>
    <scope>HEPARIN-BINDING</scope>
    <scope>N-TERMINAL REGION DOMAIN</scope>
    <scope>C-TERMINAL REGION DOMAIN</scope>
    <scope>SUBCELLULAR LOCATION</scope>
</reference>
<reference key="16">
    <citation type="journal article" date="2003" name="J. Biol. Chem.">
        <title>Cell adhesion to fibrillin-1 molecules and microfibrils is mediated by alpha 5 beta 1 and alpha v beta 3 integrins.</title>
        <authorList>
            <person name="Bax D.V."/>
            <person name="Bernard S.E."/>
            <person name="Lomas A."/>
            <person name="Morgan A."/>
            <person name="Humphries J."/>
            <person name="Shuttleworth C.A."/>
            <person name="Humphries M.J."/>
            <person name="Kielty C.M."/>
        </authorList>
    </citation>
    <scope>FUNCTION</scope>
    <scope>CELL ATTACHMENT SITE</scope>
    <scope>MUTAGENESIS OF GLY-1542</scope>
    <scope>INTERACTION WITH ITGA5; ITGAV; ITGB1 AND ITGB3</scope>
</reference>
<reference key="17">
    <citation type="journal article" date="2004" name="J. Biol. Chem.">
        <title>MAGP-2 has multiple binding regions on fibrillins and has covalent periodic association with fibrillin-containing microfibrils.</title>
        <authorList>
            <person name="Hanssen E."/>
            <person name="Hew F.H."/>
            <person name="Moore E."/>
            <person name="Gibson M.A."/>
        </authorList>
    </citation>
    <scope>INTERACTION WITH MFAP2 AND MFAP5</scope>
</reference>
<reference key="18">
    <citation type="journal article" date="2004" name="J. Mol. Biol.">
        <title>Molecular structure and interaction of recombinant human type XVI collagen.</title>
        <authorList>
            <person name="Kassner A."/>
            <person name="Tiedemann K."/>
            <person name="Notbohm H."/>
            <person name="Ludwig T."/>
            <person name="Morgelin M."/>
            <person name="Reinhardt D.P."/>
            <person name="Chu M.-L."/>
            <person name="Bruckner P."/>
            <person name="Grassel S."/>
        </authorList>
    </citation>
    <scope>INTERACTION WITH COL16A1</scope>
</reference>
<reference key="19">
    <citation type="journal article" date="2005" name="Biochem. J.">
        <title>Fibulin-5 interacts with fibrillin-1 molecules and microfibrils.</title>
        <authorList>
            <person name="Freeman L.J."/>
            <person name="Lomas A."/>
            <person name="Hodson N."/>
            <person name="Sherratt M.J."/>
            <person name="Mellody K.T."/>
            <person name="Weiss A.S."/>
            <person name="Shuttleworth A."/>
            <person name="Kielty C.M."/>
        </authorList>
    </citation>
    <scope>INTERACTION WITH FBLN5 AND ELN</scope>
</reference>
<reference key="20">
    <citation type="journal article" date="2007" name="J. Biol. Chem.">
        <title>alphaVbeta6 is a novel receptor for human fibrillin-1. Comparative studies of molecular determinants underlying integrin-rgd affinity and specificity.</title>
        <authorList>
            <person name="Jovanovic J."/>
            <person name="Takagi J."/>
            <person name="Choulier L."/>
            <person name="Abrescia N.G."/>
            <person name="Stuart D.I."/>
            <person name="van der Merwe P.A."/>
            <person name="Mardon H.J."/>
            <person name="Handford P.A."/>
        </authorList>
    </citation>
    <scope>FUNCTION</scope>
    <scope>INTERACTION WITH ITGA5; ITGAV; ITGB1 AND ITGB6</scope>
</reference>
<reference key="21">
    <citation type="journal article" date="2007" name="J. Biol. Chem.">
        <title>Fibrillin-1 interactions with fibulins depend on the first hybrid domain and provide an adaptor function to tropoelastin.</title>
        <authorList>
            <person name="El-Hallous E."/>
            <person name="Sasaki T."/>
            <person name="Hubmacher D."/>
            <person name="Getie M."/>
            <person name="Tiedemann K."/>
            <person name="Brinckmann J."/>
            <person name="Baetge B."/>
            <person name="Davis E.C."/>
            <person name="Reinhardt D.P."/>
        </authorList>
    </citation>
    <scope>INTERACTION WITH ELN; FBLN2; EFEMP2 AND FBLN5</scope>
</reference>
<reference key="22">
    <citation type="journal article" date="2007" name="Matrix Biol.">
        <title>LTBP-2 specifically interacts with the amino-terminal region of fibrillin-1 and competes with LTBP-1 for binding to this microfibrillar protein.</title>
        <authorList>
            <person name="Hirani R."/>
            <person name="Hanssen E."/>
            <person name="Gibson M.A."/>
        </authorList>
    </citation>
    <scope>INTERACTION WITH LTBP1 AND LTBP2</scope>
    <scope>TISSUE SPECIFICITY</scope>
</reference>
<reference key="23">
    <citation type="journal article" date="2008" name="J. Biol. Chem.">
        <title>Targeting of bone morphogenetic protein growth factor complexes to fibrillin.</title>
        <authorList>
            <person name="Sengle G."/>
            <person name="Charbonneau N.L."/>
            <person name="Ono R.N."/>
            <person name="Sasaki T."/>
            <person name="Alvarez J."/>
            <person name="Keene D.R."/>
            <person name="Baechinger H.P."/>
            <person name="Sakai L.Y."/>
        </authorList>
    </citation>
    <scope>INTERACTION WITH BMP2; BMP4; BMP7; BMP10 AND GDF5</scope>
</reference>
<reference key="24">
    <citation type="journal article" date="2009" name="J. Biol. Chem.">
        <title>Latent transforming growth factor beta-binding proteins and fibulins compete for fibrillin-1 and exhibit exquisite specificities in binding sites.</title>
        <authorList>
            <person name="Ono R.N."/>
            <person name="Sengle G."/>
            <person name="Charbonneau N.L."/>
            <person name="Carlberg V."/>
            <person name="Baechinger H.P."/>
            <person name="Sasaki T."/>
            <person name="Lee-Arteaga S."/>
            <person name="Zilberberg L."/>
            <person name="Rifkin D.B."/>
            <person name="Ramirez F."/>
            <person name="Chu M.L."/>
            <person name="Sakai L.Y."/>
        </authorList>
    </citation>
    <scope>INTERACTION WITH EFEMP2</scope>
</reference>
<reference key="25">
    <citation type="journal article" date="2009" name="J. Biol. Chem.">
        <title>Differential regulation of elastic fiber formation by fibulin-4 and -5.</title>
        <authorList>
            <person name="Choudhury R."/>
            <person name="McGovern A."/>
            <person name="Ridley C."/>
            <person name="Cain S.A."/>
            <person name="Baldwin A."/>
            <person name="Wang M.C."/>
            <person name="Guo C."/>
            <person name="Mironov A. Jr."/>
            <person name="Drymoussi Z."/>
            <person name="Trump D."/>
            <person name="Shuttleworth A."/>
            <person name="Baldock C."/>
            <person name="Kielty C.M."/>
        </authorList>
    </citation>
    <scope>INTERACTION WITH EFEMP2</scope>
</reference>
<reference key="26">
    <citation type="journal article" date="2009" name="J. Proteome Res.">
        <title>Glycoproteomics analysis of human liver tissue by combination of multiple enzyme digestion and hydrazide chemistry.</title>
        <authorList>
            <person name="Chen R."/>
            <person name="Jiang X."/>
            <person name="Sun D."/>
            <person name="Han G."/>
            <person name="Wang F."/>
            <person name="Ye M."/>
            <person name="Wang L."/>
            <person name="Zou H."/>
        </authorList>
    </citation>
    <scope>GLYCOSYLATION [LARGE SCALE ANALYSIS] AT ASN-448; ASN-1067; ASN-1484 AND ASN-1581</scope>
    <source>
        <tissue>Liver</tissue>
    </source>
</reference>
<reference key="27">
    <citation type="journal article" date="2010" name="Am. J. Med. Genet. A">
        <title>Marfan syndrome with neonatal progeroid syndrome-like lipodystrophy associated with a novel frameshift mutation at the 3' terminus of the FBN1-gene.</title>
        <authorList>
            <person name="Graul-Neumann L.M."/>
            <person name="Kienitz T."/>
            <person name="Robinson P.N."/>
            <person name="Baasanjav S."/>
            <person name="Karow B."/>
            <person name="Gillessen-Kaesbach G."/>
            <person name="Fahsold R."/>
            <person name="Schmidt H."/>
            <person name="Hoffmann K."/>
            <person name="Passarge E."/>
        </authorList>
    </citation>
    <scope>INVOLVEMENT IN MFLS (ASPROSIN)</scope>
</reference>
<reference key="28">
    <citation type="journal article" date="2011" name="Am. J. Med. Genet. A">
        <title>Further evidence for a marfanoid syndrome with neonatal progeroid features and severe generalized lipodystrophy due to frameshift mutations near the 3' end of the FBN1 gene.</title>
        <authorList>
            <person name="Goldblatt J."/>
            <person name="Hyatt J."/>
            <person name="Edwards C."/>
            <person name="Walpole I."/>
        </authorList>
    </citation>
    <scope>INVOLVEMENT IN MFLS (ASPROSIN)</scope>
</reference>
<reference key="29">
    <citation type="journal article" date="2011" name="Am. J. Med. Genet. A">
        <title>Progeroid facial features and lipodystrophy associated with a novel splice site mutation in the final intron of the FBN1 gene.</title>
        <authorList>
            <person name="Horn D."/>
            <person name="Robinson P.N."/>
        </authorList>
    </citation>
    <scope>INVOLVEMENT IN MFLS (ASPROSIN)</scope>
</reference>
<reference key="30">
    <citation type="journal article" date="2011" name="J. Biol. Chem.">
        <title>ADAMTS10 protein interacts with fibrillin-1 and promotes its deposition in extracellular matrix of cultured fibroblasts.</title>
        <authorList>
            <person name="Kutz W.E."/>
            <person name="Wang L.W."/>
            <person name="Bader H.L."/>
            <person name="Majors A.K."/>
            <person name="Iwata K."/>
            <person name="Traboulsi E.I."/>
            <person name="Sakai L.Y."/>
            <person name="Keene D.R."/>
            <person name="Apte S.S."/>
        </authorList>
    </citation>
    <scope>INTERACTION WITH ADAMTS10</scope>
</reference>
<reference key="31">
    <citation type="journal article" date="2012" name="Matrix Biol.">
        <title>A disintegrin-like and metalloprotease domain containing thrombospondin type 1 motif-like 5 (ADAMTSL5) is a novel fibrillin-1-, fibrillin-2-, and heparin-binding member of the ADAMTS superfamily containing a netrin-like module.</title>
        <authorList>
            <person name="Bader H.L."/>
            <person name="Wang L.W."/>
            <person name="Ho J.C."/>
            <person name="Tran T."/>
            <person name="Holden P."/>
            <person name="Fitzgerald J."/>
            <person name="Atit R.P."/>
            <person name="Reinhardt D.P."/>
            <person name="Apte S.S."/>
        </authorList>
    </citation>
    <scope>INTERACTION WITH ADAMTSL5</scope>
</reference>
<reference key="32">
    <citation type="journal article" date="2013" name="J. Cell Sci.">
        <title>Fibrillin-1 directly regulates osteoclast formation and function by a dual mechanism.</title>
        <authorList>
            <person name="Tiedemann K."/>
            <person name="Boraschi-Diaz I."/>
            <person name="Rajakumar I."/>
            <person name="Kaur J."/>
            <person name="Roughley P."/>
            <person name="Reinhardt D.P."/>
            <person name="Komarova S.V."/>
        </authorList>
    </citation>
    <scope>FUNCTION</scope>
    <scope>INTERACTION WITH TNFSF11</scope>
</reference>
<reference key="33">
    <citation type="journal article" date="2014" name="Am. J. Med. Genet. A">
        <title>De novo heterozygous FBN1 mutations in the extreme C-terminal region cause progeroid fibrillinopathy.</title>
        <authorList>
            <person name="Garg A."/>
            <person name="Xing C."/>
        </authorList>
    </citation>
    <scope>INVOLVEMENT IN MFLS (ASPROSIN)</scope>
    <scope>VARIANT MFLS THR-2741</scope>
</reference>
<reference key="34">
    <citation type="journal article" date="2013" name="Am. J. Med. Genet. A">
        <title>Severe congenital lipodystrophy and a progeroid appearance: Mutation in the penultimate exon of FBN1 causing a recognizable phenotype.</title>
        <authorList>
            <person name="Takenouchi T."/>
            <person name="Hida M."/>
            <person name="Sakamoto Y."/>
            <person name="Torii C."/>
            <person name="Kosaki R."/>
            <person name="Takahashi T."/>
            <person name="Kosaki K."/>
        </authorList>
    </citation>
    <scope>INVOLVEMENT IN MFLS (ASPROSIN)</scope>
</reference>
<reference key="35">
    <citation type="journal article" date="2014" name="Eur. J. Med. Genet.">
        <title>Neonatal progeroid variant of Marfan syndrome with congenital lipodystrophy results from mutations at the 3' end of FBN1 gene.</title>
        <authorList>
            <person name="Jacquinet A."/>
            <person name="Verloes A."/>
            <person name="Callewaert B."/>
            <person name="Coremans C."/>
            <person name="Coucke P."/>
            <person name="de Paepe A."/>
            <person name="Kornak U."/>
            <person name="Lebrun F."/>
            <person name="Lombet J."/>
            <person name="Pierard G.E."/>
            <person name="Robinson P.N."/>
            <person name="Symoens S."/>
            <person name="Van Maldergem L."/>
            <person name="Debray F.G."/>
        </authorList>
    </citation>
    <scope>INVOLVEMENT IN MFLS (ASPROSIN)</scope>
</reference>
<reference key="36">
    <citation type="journal article" date="2014" name="J. Proteomics">
        <title>An enzyme assisted RP-RPLC approach for in-depth analysis of human liver phosphoproteome.</title>
        <authorList>
            <person name="Bian Y."/>
            <person name="Song C."/>
            <person name="Cheng K."/>
            <person name="Dong M."/>
            <person name="Wang F."/>
            <person name="Huang J."/>
            <person name="Sun D."/>
            <person name="Wang L."/>
            <person name="Ye M."/>
            <person name="Zou H."/>
        </authorList>
    </citation>
    <scope>PHOSPHORYLATION [LARGE SCALE ANALYSIS] AT SER-2702</scope>
    <scope>IDENTIFICATION BY MASS SPECTROMETRY [LARGE SCALE ANALYSIS]</scope>
    <source>
        <tissue>Liver</tissue>
    </source>
</reference>
<reference key="37">
    <citation type="journal article" date="2014" name="Proc. Natl. Acad. Sci. U.S.A.">
        <title>C-terminal propeptide is required for fibrillin-1 secretion and blocks premature assembly through linkage to domains cbEGF41-43.</title>
        <authorList>
            <person name="Jensen S.A."/>
            <person name="Aspinall G."/>
            <person name="Handford P.A."/>
        </authorList>
    </citation>
    <scope>SUBCELLULAR LOCATION</scope>
    <scope>PROTEOLYTIC PROCESSING</scope>
    <scope>CHARACTERIZATION OF VARIANTS 2776-ARG--LEU-2781 DEL; PRO-2780; 2849-TYR--HIS-2871 DEL AND 2867-GLN--HIS-2871 DEL</scope>
</reference>
<reference key="38">
    <citation type="journal article" date="2015" name="Cell">
        <title>A single kinase generates the majority of the secreted phosphoproteome.</title>
        <authorList>
            <person name="Tagliabracci V.S."/>
            <person name="Wiley S.E."/>
            <person name="Guo X."/>
            <person name="Kinch L.N."/>
            <person name="Durrant E."/>
            <person name="Wen J."/>
            <person name="Xiao J."/>
            <person name="Cui J."/>
            <person name="Nguyen K.B."/>
            <person name="Engel J.L."/>
            <person name="Coon J.J."/>
            <person name="Grishin N."/>
            <person name="Pinna L.A."/>
            <person name="Pagliarini D.J."/>
            <person name="Dixon J.E."/>
        </authorList>
    </citation>
    <scope>PHOSPHORYLATION AT SER-2702</scope>
</reference>
<reference key="39">
    <citation type="journal article" date="2016" name="Biochem. J.">
        <title>New insights into the structure, assembly and biological roles of 10-12 nm connective tissue microfibrils from fibrillin-1 studies.</title>
        <authorList>
            <person name="Jensen S.A."/>
            <person name="Handford P.A."/>
        </authorList>
    </citation>
    <scope>REVIEW</scope>
</reference>
<reference key="40">
    <citation type="journal article" date="2016" name="Cell">
        <title>Asprosin, a fasting-induced glucogenic protein hormone.</title>
        <authorList>
            <person name="Romere C."/>
            <person name="Duerrschmid C."/>
            <person name="Bournat J."/>
            <person name="Constable P."/>
            <person name="Jain M."/>
            <person name="Xia F."/>
            <person name="Saha P.K."/>
            <person name="Del Solar M."/>
            <person name="Zhu B."/>
            <person name="York B."/>
            <person name="Sarkar P."/>
            <person name="Rendon D.A."/>
            <person name="Gaber M.W."/>
            <person name="LeMaire S.A."/>
            <person name="Coselli J.S."/>
            <person name="Milewicz D.M."/>
            <person name="Sutton V.R."/>
            <person name="Butte N.F."/>
            <person name="Moore D.D."/>
            <person name="Chopra A.R."/>
        </authorList>
    </citation>
    <scope>FUNCTION (ASPROSIN)</scope>
    <scope>SUBCELLULAR LOCATION (ASPROSIN)</scope>
    <scope>INVOLVEMENT IN MFLS (ASPROSIN)</scope>
</reference>
<reference key="41">
    <citation type="journal article" date="2019" name="Cell Metab.">
        <title>OLFR734 mediates glucose metabolism as a receptor of asprosin.</title>
        <authorList>
            <person name="Li E."/>
            <person name="Shan H."/>
            <person name="Chen L."/>
            <person name="Long A."/>
            <person name="Zhang Y."/>
            <person name="Liu Y."/>
            <person name="Jia L."/>
            <person name="Wei F."/>
            <person name="Han J."/>
            <person name="Li T."/>
            <person name="Liu X."/>
            <person name="Deng H."/>
            <person name="Wang Y."/>
        </authorList>
    </citation>
    <scope>FUNCTION (ASPROSIN)</scope>
</reference>
<reference key="42">
    <citation type="journal article" date="2019" name="Ann. Nutr. Metab.">
        <title>Serum Asprosin Concentrations Are Increased and Associated with Insulin Resistance in Children with Obesity.</title>
        <authorList>
            <person name="Wang M."/>
            <person name="Yin C."/>
            <person name="Wang L."/>
            <person name="Liu Y."/>
            <person name="Li H."/>
            <person name="Li M."/>
            <person name="Yi X."/>
            <person name="Xiao Y."/>
        </authorList>
    </citation>
    <scope>INDUCTION (ASPROSIN)</scope>
</reference>
<reference key="43">
    <citation type="journal article" date="2019" name="Clin. Chim. Acta">
        <title>Circulating asprosin concentrations are increased in type 2 diabetes mellitus and independently associated with fasting glucose and triglyceride.</title>
        <authorList>
            <person name="Zhang L."/>
            <person name="Chen C."/>
            <person name="Zhou N."/>
            <person name="Fu Y."/>
            <person name="Cheng X."/>
        </authorList>
    </citation>
    <scope>INDUCTION (ASPROSIN)</scope>
</reference>
<reference key="44">
    <citation type="journal article" date="2019" name="Mol. Cell. Endocrinol.">
        <title>Asprosin impairs insulin secretion in response to glucose and viability through TLR4/JNK-mediated inflammation.</title>
        <authorList>
            <person name="Lee T."/>
            <person name="Yun S."/>
            <person name="Jeong J.H."/>
            <person name="Jung T.W."/>
        </authorList>
    </citation>
    <scope>FUNCTION (ASPROSIN)</scope>
</reference>
<reference key="45">
    <citation type="journal article" date="2021" name="Elife">
        <title>Asprosin-neutralizing antibodies as a treatment for metabolic syndrome.</title>
        <authorList>
            <person name="Mishra I."/>
            <person name="Duerrschmid C."/>
            <person name="Ku Z."/>
            <person name="He Y."/>
            <person name="Xie W."/>
            <person name="Silva E.S."/>
            <person name="Hoffman J."/>
            <person name="Xin W."/>
            <person name="Zhang N."/>
            <person name="Xu Y."/>
            <person name="An Z."/>
            <person name="Chopra A.R."/>
        </authorList>
    </citation>
    <scope>BIOTECHNOLOGY (ASPROSIN)</scope>
</reference>
<reference key="46">
    <citation type="journal article" date="2016" name="Eur. J. Hum. Genet.">
        <title>Marfanoid-progeroid-lipodystrophy syndrome: a newly recognized fibrillinopathy.</title>
        <authorList>
            <person name="Passarge E."/>
            <person name="Robinson P.N."/>
            <person name="Graul-Neumann L.M."/>
        </authorList>
    </citation>
    <scope>INVOLVEMENT IN MFLS (ASPROSIN)</scope>
</reference>
<reference key="47">
    <citation type="journal article" date="2016" name="J. Biol. Chem.">
        <title>Characterization of microfibrillar-associated protein 4 (MFAP4) as a tropoelastin- and fibrillin-binding protein involved in elastic fiber formation.</title>
        <authorList>
            <person name="Pilecki B."/>
            <person name="Holm A.T."/>
            <person name="Schlosser A."/>
            <person name="Moeller J.B."/>
            <person name="Wohl A.P."/>
            <person name="Zuk A.V."/>
            <person name="Heumueller S.E."/>
            <person name="Wallis R."/>
            <person name="Moestrup S.K."/>
            <person name="Sengle G."/>
            <person name="Holmskov U."/>
            <person name="Sorensen G.L."/>
        </authorList>
    </citation>
    <scope>INTERACTION WITH MFAP4</scope>
</reference>
<reference key="48">
    <citation type="journal article" date="2021" name="J. Biol. Chem.">
        <title>POGLUT2 and POGLUT3 O-glucosylate multiple EGF repeats in fibrillin-1, -2, and LTBP1 and promote secretion of fibrillin-1.</title>
        <authorList>
            <person name="Williamson D.B."/>
            <person name="Sohn C.J."/>
            <person name="Ito A."/>
            <person name="Haltiwanger R.S."/>
        </authorList>
    </citation>
    <scope>GLYCOSYLATION AT SER-268; SER-471; SER-510; SER-552; SER-593; SER-634; SER-787; SER-827; SER-1050; SER-1135; SER-1218; SER-1302; SER-1345; SER-1386; SER-1508; SER-1628; SER-1830; SER-1871; SER-1911; SER-1953; SER-2035; SER-2148; SER-2227; SER-2313; SER-2465; SER-2547 AND SER-2628</scope>
    <scope>SUBCELLULAR LOCATION</scope>
</reference>
<reference key="49">
    <citation type="journal article" date="1997" name="EMBO J.">
        <title>Solution structure of the transforming growth factor beta-binding protein-like module, a domain associated with matrix fibrils.</title>
        <authorList>
            <person name="Yuan X."/>
            <person name="Downing A.K."/>
            <person name="Knott V."/>
            <person name="Handford P.A."/>
        </authorList>
    </citation>
    <scope>STRUCTURE BY NMR OF 2054-2125</scope>
    <scope>DISULFIDE BONDS</scope>
</reference>
<reference key="50">
    <citation type="journal article" date="1996" name="J. Mol. Biol.">
        <title>Calcium binding properties of an epidermal growth factor-like domain pair from human fibrillin-1.</title>
        <authorList>
            <person name="Knott V."/>
            <person name="Downing A.K."/>
            <person name="Cardy C.M."/>
            <person name="Handford P.A."/>
        </authorList>
    </citation>
    <scope>STRUCTURE BY NMR OF 2124-2205</scope>
</reference>
<reference key="51">
    <citation type="journal article" date="1996" name="Cell">
        <title>Solution structure of a pair of calcium-binding epidermal growth factor-like domains: implications for the Marfan syndrome and other genetic disorders.</title>
        <authorList>
            <person name="Downing A.K."/>
            <person name="Knott V."/>
            <person name="Werner J.M."/>
            <person name="Cardy C.M."/>
            <person name="Campbell I.D."/>
            <person name="Handford P.A."/>
        </authorList>
    </citation>
    <scope>STRUCTURE BY NMR OF 2124-2205</scope>
</reference>
<reference key="52">
    <citation type="journal article" date="2003" name="J. Biol. Chem.">
        <title>Solution structure and dynamics of a calcium binding epidermal growth factor-like domain pair from the neonatal region of human fibrillin-1.</title>
        <authorList>
            <person name="Smallridge R.S."/>
            <person name="Whiteman P."/>
            <person name="Werner J.M."/>
            <person name="Campbell I.D."/>
            <person name="Handford P.A."/>
            <person name="Downing A.K."/>
        </authorList>
    </citation>
    <scope>STRUCTURE BY NMR OF 1069-1154 IN COMPLEX WITH CALCIUM</scope>
    <scope>DISULFIDE BONDS</scope>
</reference>
<reference key="53">
    <citation type="journal article" date="2004" name="Structure">
        <title>Structure of the integrin binding fragment from fibrillin-1 gives new insights into microfibril organization.</title>
        <authorList>
            <person name="Lee S.S."/>
            <person name="Knott V."/>
            <person name="Jovanovic J."/>
            <person name="Harlos K."/>
            <person name="Grimes J.M."/>
            <person name="Choulier L."/>
            <person name="Mardon H.J."/>
            <person name="Stuart D.I."/>
            <person name="Handford P.A."/>
        </authorList>
    </citation>
    <scope>X-RAY CRYSTALLOGRAPHY (1.35 ANGSTROMS) OF 1486-1647 IN COMPLEX WITH CALCIUM IONS</scope>
    <scope>FUNCTION</scope>
    <scope>INTERACTION WITH INTEGRIN ALPHA-V/BETA-3</scope>
    <scope>DISULFIDE BONDS</scope>
</reference>
<reference key="54">
    <citation type="journal article" date="2009" name="Structure">
        <title>Structure and interdomain interactions of a hybrid domain: a disulphide-rich module of the fibrillin/LTBP superfamily of matrix proteins.</title>
        <authorList>
            <person name="Jensen S.A."/>
            <person name="Iqbal S."/>
            <person name="Lowe E.D."/>
            <person name="Redfield C."/>
            <person name="Handford P.A."/>
        </authorList>
    </citation>
    <scope>X-RAY CRYSTALLOGRAPHY (1.8 ANGSTROMS) OF 807-951 IN COMPLEX WITH CALCIUM</scope>
    <scope>DISULFIDE BONDS</scope>
</reference>
<reference key="55">
    <citation type="journal article" date="2013" name="Structure">
        <title>Structure of the fibrillin-1 N-terminal domains suggests that heparan sulfate regulates the early stages of microfibril assembly.</title>
        <authorList>
            <person name="Yadin D.A."/>
            <person name="Robertson I.B."/>
            <person name="McNaught-Davis J."/>
            <person name="Evans P."/>
            <person name="Stoddart D."/>
            <person name="Handford P.A."/>
            <person name="Jensen S.A."/>
            <person name="Redfield C."/>
        </authorList>
    </citation>
    <scope>STRUCTURE BY NMR OF 45-178</scope>
    <scope>DISULFIDE BONDS</scope>
</reference>
<reference key="56">
    <citation type="journal article" date="1996" name="Nucleic Acids Res.">
        <title>Software and database for the analysis of mutations in the human FBN1 gene.</title>
        <authorList>
            <person name="Collod G."/>
            <person name="Beroud C."/>
            <person name="Soussi T."/>
            <person name="Junien C."/>
            <person name="Boileau C."/>
        </authorList>
    </citation>
    <scope>REVIEW ON MFS VARIANTS</scope>
</reference>
<reference key="57">
    <citation type="journal article" date="2000" name="J. Med. Genet.">
        <title>The molecular genetics of Marfan syndrome and related microfibrillopathies.</title>
        <authorList>
            <person name="Robinson P.N."/>
            <person name="Godfrey M."/>
        </authorList>
    </citation>
    <scope>REVIEW ON MFS</scope>
</reference>
<reference key="58">
    <citation type="journal article" date="2002" name="Hum. Mutat.">
        <title>Mutations of FBN1 and genotype-phenotype correlations in Marfan syndrome and related fibrillinopathies.</title>
        <authorList>
            <person name="Robinson P.N."/>
            <person name="Booms P."/>
            <person name="Katzke S."/>
            <person name="Ladewig M."/>
            <person name="Neumann L."/>
            <person name="Palz M."/>
            <person name="Pregla R."/>
            <person name="Tiecke F."/>
            <person name="Rosenberg T."/>
        </authorList>
    </citation>
    <scope>REVIEW ON VARIANTS</scope>
</reference>
<reference key="59">
    <citation type="journal article" date="1991" name="Nature">
        <title>Marfan syndrome caused by a recurrent de novo missense mutation in the fibrillin gene.</title>
        <authorList>
            <person name="Dietz H.C."/>
            <person name="Cutting G.R."/>
            <person name="Pyeritz R.E."/>
            <person name="Maslen C.L."/>
            <person name="Sakai L.Y."/>
            <person name="Corson G.M."/>
            <person name="Puffenberger E.G."/>
            <person name="Hamosh A."/>
            <person name="Nanthakumar E.J."/>
            <person name="Curristin S.M."/>
            <person name="Stetten G."/>
            <person name="Meyers D.A."/>
            <person name="Francomano C.A."/>
        </authorList>
    </citation>
    <scope>VARIANT MFS PRO-1137</scope>
</reference>
<reference key="60">
    <citation type="journal article" date="1992" name="Hum. Mutat.">
        <title>Clustering of fibrillin (FBN1) missense mutations in Marfan syndrome patients at cysteine residues in EGF-like domains.</title>
        <authorList>
            <person name="Dietz H.C."/>
            <person name="Saraiva J.M."/>
            <person name="Pyeritz R.E."/>
            <person name="Cutting G.R."/>
            <person name="Francomano C.A."/>
        </authorList>
    </citation>
    <scope>VARIANTS MFS SER-1249; ARG-1663; SER-2221 AND SER-2307</scope>
</reference>
<reference key="61">
    <citation type="journal article" date="1992" name="J. Clin. Invest.">
        <title>Marfan phenotype variability in a family segregating a missense mutation in the epidermal growth factor-like motif of the fibrillin gene.</title>
        <authorList>
            <person name="Dietz H.C."/>
            <person name="Pyeritz R.E."/>
            <person name="Puffenberger E.G."/>
            <person name="Kendzior R.J. Jr."/>
            <person name="Corson G.M."/>
            <person name="Maslen C.L."/>
            <person name="Sakai L.Y."/>
            <person name="Francomano C.A."/>
            <person name="Cutting G.R."/>
        </authorList>
    </citation>
    <scope>VARIANT MFS SER-2307</scope>
</reference>
<reference key="62">
    <citation type="journal article" date="1993" name="Genomics">
        <title>Four novel FBN1 mutations: significance for mutant transcript level and EGF-like domain calcium binding in the pathogenesis of Marfan syndrome.</title>
        <authorList>
            <person name="Dietz H.C."/>
            <person name="McIntosh I."/>
            <person name="Sakai L.Y."/>
            <person name="Corson G.M."/>
            <person name="Chalberg S.C."/>
            <person name="Pyeritz R.E."/>
            <person name="Francomano C.A."/>
        </authorList>
    </citation>
    <scope>VARIANTS MFS ILE-548 AND ALA-723</scope>
</reference>
<reference key="63">
    <citation type="journal article" date="1993" name="Hum. Mol. Genet.">
        <title>A novel fibrillin mutation in the Marfan syndrome which could disrupt calcium binding of the epidermal growth factor-like module.</title>
        <authorList>
            <person name="Hewett D.R."/>
            <person name="Lynch J.R."/>
            <person name="Smith R."/>
            <person name="Sykes B.C."/>
        </authorList>
    </citation>
    <scope>VARIANT MFS SER-2144</scope>
</reference>
<reference key="64">
    <citation type="journal article" date="1993" name="Hum. Mol. Genet.">
        <title>Mutation screening of complete fibrillin-1 coding sequence: report of five new mutations, including two in 8-cysteine domains.</title>
        <authorList>
            <person name="Tynan K."/>
            <person name="Comeau K."/>
            <person name="Pearson M."/>
            <person name="Wilgenbus P."/>
            <person name="Levitt D."/>
            <person name="Gasner C."/>
            <person name="Berg M.A."/>
            <person name="Miller D.C."/>
            <person name="Francke U."/>
        </authorList>
    </citation>
    <scope>VARIANTS MFS ARG-862; TYR-1117; PRO-1137 AND PHE-1589</scope>
    <scope>VARIANT ALA-1148</scope>
</reference>
<reference key="65">
    <citation type="journal article" date="1994" name="Am. J. Hum. Genet.">
        <title>A compound-heterozygous Marfan patient: two defective fibrillin alleles result in a lethal phenotype.</title>
        <authorList>
            <person name="Karttunen L."/>
            <person name="Raghunath M."/>
            <person name="Loennqvist L."/>
            <person name="Peltonen L."/>
        </authorList>
    </citation>
    <scope>VARIANTS MFS GLY-217 AND ARG-2627</scope>
</reference>
<reference key="66">
    <citation type="journal article" date="1994" name="Genomics">
        <title>A novel mutation of the fibrillin gene causing ectopia lentis.</title>
        <authorList>
            <person name="Lonnqvist L."/>
            <person name="Child A."/>
            <person name="Kainulainen K."/>
            <person name="Davidson R."/>
            <person name="Puhakka L."/>
            <person name="Peltonen L."/>
        </authorList>
    </citation>
    <scope>VARIANT ECTOL1 LYS-2447</scope>
</reference>
<reference key="67">
    <citation type="journal article" date="1994" name="Hum. Mol. Genet.">
        <title>Two novel mutations and a neutral polymorphism in EGF-like domains of the fibrillin gene (FBN1): SSCP screening of exons 15-21 in Marfan syndrome patients.</title>
        <authorList>
            <person name="Hayward C."/>
            <person name="Rae A.L."/>
            <person name="Porteous M.E.M."/>
            <person name="Logie L.J."/>
            <person name="Brock L.J."/>
        </authorList>
    </citation>
    <scope>VARIANT MFS CYS-627</scope>
</reference>
<reference key="68">
    <citation type="journal article" date="1994" name="Hum. Mol. Genet.">
        <title>Substitution of a cysteine residue in a non-calcium binding, EGF-like domain of fibrillin segregates with the Marfan syndrome in a large kindred.</title>
        <authorList>
            <person name="Piersall L.D."/>
            <person name="Dietz H.C."/>
            <person name="Hall B.D."/>
            <person name="Cadle R.G."/>
            <person name="Pyeritz R.E."/>
            <person name="Francomano C.A."/>
            <person name="McIntosh I."/>
        </authorList>
    </citation>
    <scope>VARIANT MFS GLY-476</scope>
</reference>
<reference key="69">
    <citation type="journal article" date="1994" name="Hum. Mutat.">
        <title>Identification of a novel nonsense mutation in the fibrillin gene (FBN1) using nonisotopic techniques.</title>
        <authorList>
            <person name="Hayward C."/>
            <person name="Porteous M.E."/>
            <person name="Brock D.J."/>
        </authorList>
    </citation>
    <scope>VARIANT 2776-ARG--LEU-2781 DEL</scope>
</reference>
<reference key="70">
    <citation type="journal article" date="1994" name="J. Clin. Invest.">
        <title>An extra cysteine in one of the non-calcium-binding epidermal growth factor-like motifs of the FBN1 polypeptide is connected to a novel variant of Marfan syndrome.</title>
        <authorList>
            <person name="Stahl-Hallengren C."/>
            <person name="Ukkonen T."/>
            <person name="Kainulainen K."/>
            <person name="Kristofersson U."/>
            <person name="Saxne T."/>
            <person name="Tornqvist K."/>
            <person name="Peltonen L."/>
        </authorList>
    </citation>
    <scope>VARIANT MFS CYS-122</scope>
</reference>
<reference key="71">
    <citation type="journal article" date="1994" name="J. Med. Genet.">
        <title>A new missense mutation of fibrillin in a patient with Marfan syndrome.</title>
        <authorList>
            <person name="Hewett D.R."/>
            <person name="Lynch J.R."/>
            <person name="Child A."/>
            <person name="Sykes B.C."/>
        </authorList>
    </citation>
    <scope>VARIANT MFS TYR-1223</scope>
</reference>
<reference key="72">
    <citation type="journal article" date="1994" name="Mol. Cell. Probes">
        <title>A novel mutation in the fibrillin gene (FBN1) in familial arachnodactyly.</title>
        <authorList>
            <person name="Hayward C."/>
            <person name="Porteous M.E.M."/>
            <person name="Brock D.J.H."/>
        </authorList>
    </citation>
    <scope>VARIANT MFS HIS-1170</scope>
</reference>
<reference key="73">
    <citation type="journal article" date="1994" name="Nat. Genet.">
        <title>Mutations in the fibrillin gene responsible for dominant ectopia lentis and neonatal Marfan syndrome.</title>
        <authorList>
            <person name="Kainulainen K."/>
            <person name="Karttunen L."/>
            <person name="Puhakka L."/>
            <person name="Sakai L."/>
            <person name="Peltonen L."/>
        </authorList>
    </citation>
    <scope>VARIANTS MFS GLY-217; ASN-1023; ARG-1074; TYR-1242; ARG-1513; GLU-2127; TRP-2151; LYS-2447 AND ARG-2511</scope>
</reference>
<reference key="74">
    <citation type="journal article" date="1995" name="Am. J. Hum. Genet.">
        <title>A Gly1127Ser mutation in an EGF-like domain of the fibrillin-1 gene is a risk factor for ascending aortic aneurysm and dissection.</title>
        <authorList>
            <person name="Francke U."/>
            <person name="Berg M.A."/>
            <person name="Tynan K."/>
            <person name="Brenn T."/>
            <person name="Liu W."/>
            <person name="Aoyama T."/>
            <person name="Gasner C."/>
            <person name="Miller D.C."/>
            <person name="Furthmayr H."/>
        </authorList>
    </citation>
    <scope>VARIANT MFS SER-1127</scope>
</reference>
<reference key="75">
    <citation type="journal article" date="1995" name="Am. J. Hum. Genet.">
        <title>Fifteen novel FBN1 mutations causing Marfan syndrome detected by heteroduplex analysis of genomic amplicons.</title>
        <authorList>
            <person name="Nijbroek G."/>
            <person name="Sood S."/>
            <person name="McIntosh I."/>
            <person name="Francomano C.A."/>
            <person name="Bull E."/>
            <person name="Pereira L."/>
            <person name="Ramirez F."/>
            <person name="Pyeritz R.E."/>
            <person name="Dietz H.C."/>
        </authorList>
    </citation>
    <scope>VARIANTS MFS TYR-129; PHE-166; CYS-746; ARG-926; ARG-1013; LYS-1073; SER-1382 AND ARG-1928</scope>
</reference>
<reference key="76">
    <citation type="journal article" date="1995" name="Am. J. Hum. Genet.">
        <title>The phenotypic continuum associated with FBN1 mutations includes the Shprintzen-Goldberg syndrome.</title>
        <authorList>
            <person name="Dietz H.C."/>
            <person name="Sood I."/>
            <person name="McIntosh I."/>
        </authorList>
    </citation>
    <scope>VARIANT MFS TYR-1223</scope>
</reference>
<reference key="77">
    <citation type="journal article" date="1995" name="J. Clin. Invest.">
        <title>A mutation in FBN1 disrupts profibrillin processing and results in isolated skeletal features of the Marfan syndrome.</title>
        <authorList>
            <person name="Milewicz D.M."/>
            <person name="Grossfield J."/>
            <person name="Cao S.-N."/>
            <person name="Kielty C."/>
            <person name="Covitz W."/>
            <person name="Jewett T."/>
        </authorList>
    </citation>
    <scope>VARIANT TRP-2726</scope>
    <scope>CHARACTERIZATION OF VARIANT TRP-2726</scope>
    <scope>INVOLVEMENT IN MFS</scope>
</reference>
<reference key="78">
    <citation type="journal article" date="1996" name="Am. J. Med. Genet.">
        <title>Delineation of the Marfan phenotype associated with mutations in exons 23-32 of the FBN1 gene.</title>
        <authorList>
            <person name="Putnam E.A."/>
            <person name="Cho M."/>
            <person name="Zinn A.B."/>
            <person name="Towbin J.A."/>
            <person name="Byers P.H."/>
            <person name="Milewicz D.M."/>
        </authorList>
    </citation>
    <scope>VARIANTS MFS ARG-1053; GLY-1072; LYS-1073 AND GLY-1117</scope>
</reference>
<reference key="79">
    <citation type="journal article" date="1996" name="J. Med. Genet.">
        <title>Characterisation of four novel fibrillin-1 (FBN1) mutations in Marfan syndrome.</title>
        <authorList>
            <person name="Ades L.C."/>
            <person name="Haan E.A."/>
            <person name="Colley A.F."/>
            <person name="Richards R.I."/>
        </authorList>
    </citation>
    <scope>VARIANTS MFS THR-705; TYR-711; GLY-1055 AND TYR-1153</scope>
</reference>
<reference key="80">
    <citation type="journal article" date="1997" name="Hum. Genet.">
        <title>A novel de novo mutation in exon 14 of the fibrillin-1 gene associated with delayed secretion of fibrillin in a patient with a mild Marfan phenotype.</title>
        <authorList>
            <person name="Booms P."/>
            <person name="Withers A.P."/>
            <person name="Boxer M."/>
            <person name="Kaufmann U.C."/>
            <person name="Hagemeier C."/>
            <person name="Vetter U."/>
            <person name="Robinson P.N."/>
        </authorList>
    </citation>
    <scope>VARIANT MFS TYR-587</scope>
</reference>
<reference key="81">
    <citation type="journal article" date="1997" name="Hum. Genet.">
        <title>The pathogenicity of the Pro1148Ala substitution in the FBN1 gene: causing or predisposing to Marfan syndrome and aortic aneurysm, or clinically innocent?</title>
        <authorList>
            <person name="Schrijver I."/>
            <person name="Liu W."/>
            <person name="Francke U."/>
        </authorList>
    </citation>
    <scope>VARIANT ALA-1148</scope>
</reference>
<reference key="82">
    <citation type="journal article" date="1997" name="Hum. Mutat.">
        <title>Mutation screening of all 65 exons of the fibrillin-1 gene in 60 patients with Marfan syndrome: report of 12 novel mutations.</title>
        <authorList>
            <person name="Hayward C."/>
            <person name="Porteous M.E.M."/>
            <person name="Brock D.J.H."/>
        </authorList>
    </citation>
    <scope>VARIANTS MFS ARG-111; CYS-545; CYS-627; GLY-750; ARG-1074; HIS-1170; TRP-1171; LYS-1173; TYR-1404; GLY-1610; LYS-1893; TRP-2099; TYR-2111; ARG-2258; TRP-2282 AND ARG-2489</scope>
</reference>
<reference key="83">
    <citation type="journal article" date="1997" name="Hum. Mutat.">
        <title>P1148A in fibrillin-1 is not a mutation leading to Shprintzen-Goldberg syndrome.</title>
        <authorList>
            <person name="Watanabe Y."/>
            <person name="Yano S."/>
            <person name="Koga Y."/>
            <person name="Yukizane S."/>
            <person name="Nishiyori A."/>
            <person name="Yoshino M."/>
            <person name="Kato H."/>
        </authorList>
    </citation>
    <scope>VARIANT ALA-1148</scope>
</reference>
<reference key="84">
    <citation type="journal article" date="1997" name="Hum. Mutat.">
        <title>Fibrillin-1 mutations in Marfan syndrome and other type-1 fibrillinopathies.</title>
        <authorList>
            <person name="Hayward C."/>
            <person name="Brock D.J.H."/>
        </authorList>
    </citation>
    <scope>VARIANTS MFS ARG-996; THR-1048; THR-1048 DEL; CYS-1058 INS; TRP-1086; SER-1837 AND CYS-2680</scope>
</reference>
<reference key="85">
    <citation type="journal article" date="1997" name="Nat. Genet.">
        <title>P1148A in fibrillin-1 is not a mutation anymore.</title>
        <authorList>
            <person name="Wang M."/>
            <person name="Mathews K.R."/>
            <person name="Imaizumi K."/>
            <person name="Beiraghi S."/>
            <person name="Blumberg B."/>
            <person name="Scheuner M."/>
            <person name="Graham J.M. Jr."/>
            <person name="Godfrey M."/>
        </authorList>
    </citation>
    <scope>VARIANT ALA-1148</scope>
</reference>
<reference key="86">
    <citation type="journal article" date="1997" name="Nucleic Acids Res.">
        <title>Marfan Database (second edition): software and database for the analysis of mutations in the human FBN1 gene.</title>
        <authorList>
            <person name="Collod-Beroud G."/>
            <person name="Beroud C."/>
            <person name="Ades L."/>
            <person name="Black C."/>
            <person name="Boxer M."/>
            <person name="Brock D.J."/>
            <person name="Godfrey M."/>
            <person name="Hayward C."/>
            <person name="Karttunen L."/>
            <person name="Milewicz D."/>
            <person name="Peltonen L."/>
            <person name="Richards R.I."/>
            <person name="Wang W."/>
            <person name="Junien C."/>
            <person name="Boileau C."/>
        </authorList>
    </citation>
    <scope>VARIANTS MFS ARG-661; ARG-1043 AND ARG-2511</scope>
</reference>
<reference key="87">
    <citation type="journal article" date="1998" name="Am. J. Hum. Genet.">
        <title>Multiple molecular mechanisms underlying subdiagnostic variants of Marfan syndrome.</title>
        <authorList>
            <person name="Montgomery R.A."/>
            <person name="Geraghty M.T."/>
            <person name="Bull E."/>
            <person name="Gelb B.D."/>
            <person name="Johnson M."/>
            <person name="McIntosh I."/>
            <person name="Francomano C.A."/>
            <person name="Dietz H.C."/>
        </authorList>
    </citation>
    <scope>VARIANT MFS ARG-1265</scope>
</reference>
<reference key="88">
    <citation type="journal article" date="1998" name="Hum. Mutat. Suppl.">
        <title>Correlation of a recurrent FBN1 mutation (R122C) with an atypical familial Marfan syndrome phenotype.</title>
        <authorList>
            <person name="Black C."/>
            <person name="Withers A.P."/>
            <person name="Gray J.R."/>
            <person name="Bridges A.B."/>
            <person name="Craig A."/>
            <person name="Baty D.U."/>
            <person name="Boxer M."/>
        </authorList>
    </citation>
    <scope>VARIANT MFS CYS-122</scope>
</reference>
<reference key="89">
    <citation type="journal article" date="1998" name="Hum. Mutat.">
        <title>A novel mutation in the neonatal region of the fibrillin (FBN) 1 gene associated with a classical phenotype of Marfan syndrome (MfS).</title>
        <authorList>
            <person name="Grau U."/>
            <person name="Klein H.-G."/>
            <person name="Detter C."/>
            <person name="Mair H."/>
            <person name="Welz A."/>
            <person name="Seidel D."/>
            <person name="Reichart B."/>
        </authorList>
    </citation>
    <scope>VARIANT MFS ILE-984</scope>
</reference>
<reference key="90">
    <citation type="journal article" date="1999" name="Am. J. Hum. Genet.">
        <title>Demonstration of the recurrence of Marfan-like skeletal and cardiovascular manifestations due to germline mosaicism for an FBN1 mutation.</title>
        <authorList>
            <person name="Collod-Beroud G."/>
            <person name="Lackmy-Port-Lys M."/>
            <person name="Jondeau G."/>
            <person name="Mathieu M."/>
            <person name="Maingourd Y."/>
            <person name="Coulon M."/>
            <person name="Guillotel M."/>
            <person name="Junien C."/>
            <person name="Boileau C."/>
        </authorList>
    </citation>
    <scope>VARIANT MFS GLU-985</scope>
</reference>
<reference key="91">
    <citation type="journal article" date="1999" name="Hum. Mutat.">
        <title>Identification of 9 novel FBN1 mutations in German patients with Marfan syndrome.</title>
        <authorList>
            <person name="El-Aleem A.A."/>
            <person name="Karck M."/>
            <person name="Haverich A."/>
            <person name="Schmidtke J."/>
            <person name="Arslan-Kirchner M."/>
        </authorList>
    </citation>
    <scope>VARIANTS MFS PHE-504; TYR-1129; CYS-1261; SER-1833 AND TYR-2142</scope>
</reference>
<reference key="92">
    <citation type="journal article" date="2001" name="Arch. Intern. Med.">
        <title>Genotype and phenotype analysis of 171 patients referred for molecular study of the fibrillin-1 gene FBN1 because of suspected Marfan syndrome.</title>
        <authorList>
            <person name="Loeys B."/>
            <person name="Nuytinck L."/>
            <person name="Delvaux I."/>
            <person name="De Bie S."/>
            <person name="De Paepe A."/>
        </authorList>
    </citation>
    <scope>VARIANTS MFS PHE-89; CYS-122; CYS-240; CYS-366; CYS-545; SER-560; TYR-570; ASP-592; TRP-598; TYR-776; ARG-781; GLY-913; ARG-985; ARG-1013; TRP-1055; TYR-1055; CYS-1101; PRO-1337; TYR-1339; SER-1429; PRO-1790; TYR-1791; TYR-1835; THR-1909; SER-1915; TYR-1971; TYR-1977; HIS-2223; TRP-2282; TYR-2406; PHE-2581; THR-2585; ARG-2618; LYS-2624 AND CYS-2668</scope>
    <scope>VARIANTS ECTOL1 CYS-1530 AND ARG-2154</scope>
    <scope>VARIANT MITRAL VALVE PROLAPSE ILE-1128</scope>
</reference>
<reference key="93">
    <citation type="journal article" date="2002" name="Hum. Mutat.">
        <title>TGGE screening of the entire FBN1 coding sequence in 126 individuals with Marfan syndrome and related fibrillinopathies.</title>
        <authorList>
            <person name="Katzke S."/>
            <person name="Booms P."/>
            <person name="Tiecke F."/>
            <person name="Palz M."/>
            <person name="Pletschacher A."/>
            <person name="Turkmen S."/>
            <person name="Neumann L.M."/>
            <person name="Pregla R."/>
            <person name="Leitner C."/>
            <person name="Schramm C."/>
            <person name="Lorenz P."/>
            <person name="Hagemeier C."/>
            <person name="Fuchs J."/>
            <person name="Skovby F."/>
            <person name="Rosenberg T."/>
            <person name="Robinson P.N."/>
        </authorList>
    </citation>
    <scope>VARIANTS MFS CYS-62; TYR-587; TYR-596; ASN-654; TYR-681; ARG-683; TRP-685; VAL-723; PHE-734; TYR-748; GLY-776; ARG-781; ARG-908; GLY-921; PRO-1790; SER-1806; VAL-1931 DEL; TYR-1998; GLY-2221; THR-2269 AND TRP-2335</scope>
    <scope>VARIANTS ECTOL1 CYS-115; TYR-661 AND TYR-2339</scope>
    <scope>VARIANT MET-2101</scope>
</reference>
<reference key="94">
    <citation type="journal article" date="2002" name="Hum. Mutat.">
        <title>Mutation screening of the fibrillin-1 (FBN1) gene in 76 unrelated patients with Marfan syndrome or Marfanoid features leads to the identification of 11 novel and three previously reported mutations.</title>
        <authorList>
            <person name="Rommel K."/>
            <person name="Karck M."/>
            <person name="Haverich A."/>
            <person name="Schmidtke J."/>
            <person name="Arslan-Kirchner M."/>
        </authorList>
    </citation>
    <scope>VARIANTS MFS 429-ARG--HIS-2871 DEL; ILE-449; SER-880; CYS-1101; TYR-1806; ILE-1908; ASP-1919 AND ARG-2251</scope>
</reference>
<reference key="95">
    <citation type="journal article" date="2002" name="J. Med. Genet.">
        <title>Sensitivity of conformation sensitive gel electrophoresis in detecting mutations in Marfan syndrome and related conditions.</title>
        <authorList>
            <person name="Koerkkoe J."/>
            <person name="Kaitila I."/>
            <person name="Loennqvist L."/>
            <person name="Peltonen L."/>
            <person name="Ala-Kokko L."/>
        </authorList>
    </citation>
    <scope>VARIANTS MFS CYS-114; ARG-890; GLY-1200; TYR-1835; ARG-2111; CYS-2474 AND GLY-2652</scope>
    <scope>VARIANT ECTOL1 CYS-240</scope>
</reference>
<reference key="96">
    <citation type="journal article" date="2002" name="J. Med. Genet.">
        <title>Twelve novel FBN1 mutations in Marfan syndrome and Marfan related phenotypes test the feasibility of FBN1 mutation testing in clinical practice.</title>
        <authorList>
            <person name="Halliday D.J."/>
            <person name="Hutchinson S."/>
            <person name="Lonie L."/>
            <person name="Hurst J.A."/>
            <person name="Firth H."/>
            <person name="Handford P.A."/>
            <person name="Wordsworth P."/>
        </authorList>
    </citation>
    <scope>VARIANTS MFS CYS-627; ASN-654; TYR-748; 1541-ARG--HIS-2871 DEL; TYR-1835; ARG-1977; TYR-2258; 2394-ARG--HIS-2871 DEL; 2466-TYR--HIS-2871 DEL AND 2467-GLN--HIS-2871 DEL</scope>
    <scope>VARIANT PRO-2780</scope>
</reference>
<reference key="97">
    <citation type="journal article" date="2003" name="J. Med. Genet.">
        <title>In frame fibrillin-1 gene deletion in autosomal dominant Weill-Marchesani syndrome.</title>
        <authorList>
            <person name="Faivre L."/>
            <person name="Gorlin R.J."/>
            <person name="Wirtz M.K."/>
            <person name="Godfrey M."/>
            <person name="Dagoneau N."/>
            <person name="Samples J.R."/>
            <person name="Le Merrer M."/>
            <person name="Collod-Beroud G."/>
            <person name="Boileau C."/>
            <person name="Munnich A."/>
            <person name="Cormier-Daire V."/>
        </authorList>
    </citation>
    <scope>VARIANT WMS2 1692-ARG--TYR-1699 DEL</scope>
</reference>
<reference key="98">
    <citation type="journal article" date="2004" name="Hum. Mutat.">
        <title>Detection of thirty novel FBN1 mutations in patients with Marfan syndrome or a related fibrillinopathy.</title>
        <authorList>
            <person name="Biggin A."/>
            <person name="Holman K."/>
            <person name="Brett M."/>
            <person name="Bennetts B."/>
            <person name="Ades L."/>
        </authorList>
    </citation>
    <scope>VARIANTS MFS SER-154; SER-166; CYS-240; SER-652; THR-705; TYR-711; SER-816; ARG-1013; TYR-1044; GLY-1055; CYS-1101; TYR-1117; TYR-1153; ASN-1155; GLN-1325; LYS-1366; SER-1374; ARG-1389; 1394-GLY--THR-1396 DEL; ALA-1424; CYS-1530; TYR-1564; PHE-1770; TRP-1793; GLU-1796; TRP-2442; THR-2585 AND PRO-2623</scope>
</reference>
<reference key="99">
    <citation type="journal article" date="2004" name="J. Biol. Chem.">
        <title>Consequences of cysteine mutations in calcium-binding epidermal growth factor modules of fibrillin-1.</title>
        <authorList>
            <person name="Vollbrandt T."/>
            <person name="Tiedemann K."/>
            <person name="El-Hallous E."/>
            <person name="Lin G."/>
            <person name="Brinckmann J."/>
            <person name="John H."/>
            <person name="Baetge B."/>
            <person name="Notbohm H."/>
            <person name="Reinhardt D.P."/>
        </authorList>
    </citation>
    <scope>CHARACTERIZATION OF VARIANTS MFS CYS-627; GLY-750 AND ARG-926</scope>
</reference>
<reference key="100">
    <citation type="journal article" date="2005" name="Hum. Mutat.">
        <title>Identification of sixty-two novel and twelve known FBN1 mutations in eighty-one unrelated probands with Marfan syndrome and other fibrillinopathies.</title>
        <authorList>
            <person name="Arbustini E."/>
            <person name="Grasso M."/>
            <person name="Ansaldi S."/>
            <person name="Malattia C."/>
            <person name="Pilotto A."/>
            <person name="Porcu E."/>
            <person name="Disabella E."/>
            <person name="Marziliano N."/>
            <person name="Pisani A."/>
            <person name="Lanzarini L."/>
            <person name="Mannarino S."/>
            <person name="Larizza D."/>
            <person name="Mosconi M."/>
            <person name="Antoniazzi E."/>
            <person name="Zoia M.C."/>
            <person name="Meloni G."/>
            <person name="Magrassi L."/>
            <person name="Brega A."/>
            <person name="Bedeschi M.F."/>
            <person name="Torrente I."/>
            <person name="Mari F."/>
            <person name="Tavazzi L."/>
        </authorList>
    </citation>
    <scope>VARIANTS MFS CYS-20; TYR-123; ARG-177; ARG-224; GLY-439; 629-VAL--GLY-633 DEL; CYS-635; ILE-636; TYR-832; GLY-890; ASP-1058; SER-1153; PHE-1211 DEL; CYS-1219; ASP-1261; SER-1278; SER-1333; ARG-1402; SER-1424; PHE-1564; GLY-1631; TYR-1663; TYR-1876; ILE-1887; ARG-1895; TYR-1900; PRO-2160; PHE-2221; THR-2385; ARG-2500; TYR-2500; TRP-2535; LYS-2570; ARG-2571; SER-2592; LYS-2610 AND CYS-2629</scope>
</reference>
<reference key="101">
    <citation type="journal article" date="2005" name="Hum. Mutat.">
        <title>Identification of 29 novel and nine recurrent fibrillin-1 (FBN1) mutations and genotype-phenotype correlations in 76 patients with Marfan syndrome.</title>
        <authorList>
            <person name="Rommel K."/>
            <person name="Karck M."/>
            <person name="Haverich A."/>
            <person name="von Kodolitsch Y."/>
            <person name="Rybczynski M."/>
            <person name="Muller G."/>
            <person name="Singh K.K."/>
            <person name="Schmidtke J."/>
            <person name="Arslan-Kirchner M."/>
        </authorList>
    </citation>
    <scope>VARIANTS MFS ASN-507 DEL; TYR-541; CYS-627; TYR-781; ARG-985; ARG-1013; VAL-1113; GLY-1284; SER-1475; GLU-1475; THR-1576; ARG-1791; GLY-1928; TYR-1928; TYR-2038; ARG-2085; SER-2144; ARG-2536 AND TYR-2605</scope>
</reference>
<reference key="102">
    <citation type="journal article" date="2007" name="Hum. Mutat.">
        <title>The importance of mutation detection in Marfan syndrome and Marfan-related disorders: report of 193 FBN1 mutations.</title>
        <authorList>
            <person name="Comeglio P."/>
            <person name="Johnson P."/>
            <person name="Arno G."/>
            <person name="Brice G."/>
            <person name="Evans A."/>
            <person name="Aragon-Martin J."/>
            <person name="da Silva F.P."/>
            <person name="Kiotsekoglou A."/>
            <person name="Child A."/>
        </authorList>
    </citation>
    <scope>VARIANTS MFS CYS-122; SER-214; 248-ASP--HIS-2871 DEL; 351-GLN--HIS-2871 DEL; ARG-365; 366-TRP--HIS-2871 DEL; TRP-474; CYS-545; TRP-546; 565-ARG--HIS-2871 DEL; TYR-727; CYS-828; TYR-832; 861-ARG--HIS-2871 DEL; VAL-882; CYS-974; HIS-976; 994-GLU--HIS-2871 DEL; TYR-1032; THR-1048; TYR-1074; ILE-1088; 1125-ARG--HIS-2871 DEL; TYR-1138; 1140-CYS--HIS-2871 DEL; GLY-1158; HIS-1170; ARG-1223; ARG-1249; TYR-1307; ARG-1326; LEU-1346; LYS-1366; TYR-1402; ALA-1424; ASP-1427; ARG-1485; TYR-1528; 1541-ARG--HIS-2871 DEL; ARG-1622; TYR-1720; TYR-1793; VAL-1796; SER-1806; LYS-1811; CYS-1830; PHE-1835; TRP-1847; ASP-1879; ARG-1987; 2053-CYS--HIS-2871 DEL; MET-2118; GLU-2127; ASP-2144; PRO-2145; TYR-2153; THR-2185; 2220-ARG--HIS-2871 DEL; THR-2269; TRP-2274; LYS-2447; ARG-2489; MET-2520; ARG-2536; 2542-GLN--HIS-2871 DEL; VAL-2555; 2571-CYS--HIS-2871 DEL; TYR-2577; THR-2585; LYS-2610 AND ARG-2618</scope>
    <scope>VARIANTS ECTOL1 CYS-63; SER-68; CYS-240; TRP-365; CYS-545; ARG-596; PRO-634; VAL-882; 1086-CYS--HIS-2871 DEL; ASN-1155; ARG-1692 DEL; GLY-2250; CYS-2272; LYS-2447 AND ARG-2448</scope>
    <scope>VARIANTS ASP-127; ARG-160; SER-164; 215-ARG--HIS-2871 DEL; 364-ARG--HIS-2871 DEL; ARG-504; TYR-652; 653-VAL--HIS-2871 DEL; 752-SER--HIS-2871 DEL; CYS-954; 966-GLU--HIS-2871 DEL; 988-TRP--HIS-2871 DEL; GLY-1028; GLY-1406; SER-1633; 1644-ARG--HIS-2871 DEL; PHE-1777; 1796-GLY--HIS-2871 DEL; TYR-1812; SER-1907; HIS-1930; LYS-2105; ASP-2136; 2169-GLU--HIS-2871 DEL; ARG-2195; PRO-2224; 2229-GLU--HIS-2871 DEL; MET-2234; THR-2273; TRP-2289; TYR-2302; TYR-2365; TRP-2470; ILE-2516; SER-2526; PHE-2541; TRP-2554; TRP-2726 AND 2840-LYS--HIS-2871 DEL</scope>
</reference>
<reference key="103">
    <citation type="journal article" date="2008" name="Clin. Genet.">
        <title>FBN1 mutation screening of patients with Marfan syndrome and related disorders: detection of 46 novel FBN1 mutations.</title>
        <authorList>
            <person name="Attanasio M."/>
            <person name="Lapini I."/>
            <person name="Evangelisti L."/>
            <person name="Lucarini L."/>
            <person name="Giusti B."/>
            <person name="Porciani M."/>
            <person name="Fattori R."/>
            <person name="Anichini C."/>
            <person name="Abbate R."/>
            <person name="Gensini G."/>
            <person name="Pepe G."/>
        </authorList>
    </citation>
    <scope>VARIANTS MFS TYR-123; SER-136; SER-177; TYR-177; SER-214; 348-GLN--HIS-2871 DEL; 429-ARG--HIS-2871 DEL; ARG-488; TYR-576; ARG-582; PHE-623; CYS-635; TYR-684; CYS-721; ARG-816; SER-880; GLU-884; TYR-1008; SER-1042; 1125-ARG--HIS-2871 DEL; 1136-TYR--HIS-2871 DEL; TRP-1182; TYR-1265; ARG-1320; 1534-CYS--HIS-2871 DEL; 1539-ARG--HIS-2871 DEL; 1541-ARG--HIS-2871 DEL; GLY-1631; ARG-1672; TYR-1672; GLY-1674; 1735-GLN--HIS-2871 DEL; LYS-1811; ARG-1847; TYR-1860; LYS-1894; TYR-1900; GLY-1934; TRP-1977; 2057-ARG--HIS-2871 DEL; 2062-TYR--HIS-2871 DEL; 2064-LYS--HIS-2871 DEL; TYR-2084; LYS-2130; ARG-2221; TYR-2232; THR-2269; THR-2284; TYR-2470; PRO-2561; LYS-2570; ARG-2577 AND 2694-ARG--HIS-2871 DEL</scope>
    <scope>VARIANTS PRO-39; ARG-937; ALA-1020; TRP-2726 AND 2774-LYS--HIS-2871 DEL</scope>
</reference>
<reference key="104">
    <citation type="journal article" date="2009" name="Am. J. Med. Genet. A">
        <title>Identification of novel FBN1 and TGFBR2 mutations in 65 probands with Marfan syndrome or Marfan-like phenotypes.</title>
        <authorList>
            <person name="Chung B.H."/>
            <person name="Lam S.T."/>
            <person name="Tong T.M."/>
            <person name="Li S.Y."/>
            <person name="Lun K.S."/>
            <person name="Chan D.H."/>
            <person name="Fok S.F."/>
            <person name="Or J.S."/>
            <person name="Smith D.K."/>
            <person name="Yang W."/>
            <person name="Lau Y.L."/>
        </authorList>
    </citation>
    <scope>VARIANTS MFS ASP-57; TYR-100; TYR-129; 861-ARG--HIS-2871 DEL; HIS-910; 921-CYS--HIS-2871 DEL; PRO-1130; 1790-ARG--HIS-2871 DEL; ARG-1812; SER-1826; TRP-2084; LYS-2130; SER-2144; 2298-LYS--HIS-2871 DEL; TYR-2522 AND SER-2708</scope>
</reference>
<reference key="105">
    <citation type="journal article" date="2009" name="Eur. J. Hum. Genet.">
        <title>Identification of the minimal combination of clinical features in probands for efficient mutation detection in the FBN1 gene.</title>
        <authorList>
            <person name="Stheneur C."/>
            <person name="Collod-Beroud G."/>
            <person name="Faivre L."/>
            <person name="Buyck J.F."/>
            <person name="Gouya L."/>
            <person name="Le Parc J.M."/>
            <person name="Moura B."/>
            <person name="Muti C."/>
            <person name="Grandchamp B."/>
            <person name="Sultan G."/>
            <person name="Claustres M."/>
            <person name="Aegerter P."/>
            <person name="Chevallier B."/>
            <person name="Jondeau G."/>
            <person name="Boileau C."/>
        </authorList>
    </citation>
    <scope>VARIANT 2867-GLN--HIS-2871 DEL</scope>
</reference>
<reference key="106">
    <citation type="journal article" date="2010" name="Am. J. Med. Genet. A">
        <title>Central nervous system abnormalities in two cases with neonatal Marfan syndrome with novel mutations in the fibrillin-1 gene.</title>
        <authorList>
            <person name="Barnett C.P."/>
            <person name="Wilson G.J."/>
            <person name="Chiasson D.A."/>
            <person name="Gross G.J."/>
            <person name="Hinek A."/>
            <person name="Hawkins C."/>
            <person name="Chitayat D."/>
        </authorList>
    </citation>
    <scope>VARIANT MFS GLY-1068</scope>
</reference>
<reference key="107">
    <citation type="journal article" date="2010" name="Chin. Med. J.">
        <title>Identification of a novel lethal fibrillin-1 gene mutation in a Chinese Marfan family and correlation of 3' fibrillin-1 gene mutations with phenotype.</title>
        <authorList>
            <person name="Gao L.G."/>
            <person name="Zhang L."/>
            <person name="Song L."/>
            <person name="Wang H."/>
            <person name="Chang Q."/>
            <person name="Wu Y.B."/>
            <person name="Hui R.T."/>
            <person name="Zhou X.L."/>
        </authorList>
    </citation>
    <scope>VARIANT 2849-TYR--HIS-2871 DEL</scope>
</reference>
<reference key="108">
    <citation type="journal article" date="2010" name="Eur. J. Med. Genet.">
        <title>Paucity of skeletal manifestations in Hispanic families with FBN1 mutations.</title>
        <authorList>
            <person name="Villamizar C."/>
            <person name="Regalado E.S."/>
            <person name="Fadulu V.T."/>
            <person name="Hasham S.N."/>
            <person name="Gupta P."/>
            <person name="Willing M.C."/>
            <person name="Kuang S.Q."/>
            <person name="Guo D."/>
            <person name="Muilenburg A."/>
            <person name="Yee R.W."/>
            <person name="Fan Y."/>
            <person name="Towbin J."/>
            <person name="Coselli J.S."/>
            <person name="LeMaire S.A."/>
            <person name="Milewicz D.M."/>
        </authorList>
    </citation>
    <scope>VARIANTS MFS 515-CYS-ARG-516 DELINS TRP-GLY AND CYS-1530</scope>
</reference>
<reference key="109">
    <citation type="journal article" date="2010" name="Leg. Med.">
        <title>A Japanese-specific allele in the GALNT11 gene.</title>
        <authorList>
            <person name="Yuasa I."/>
            <person name="Umetsu K."/>
            <person name="Matsusue A."/>
            <person name="Nishimukai H."/>
            <person name="Harihara S."/>
            <person name="Fukumori Y."/>
            <person name="Saitou N."/>
            <person name="Jin F."/>
            <person name="Chattopadhyay P.K."/>
            <person name="Henke L."/>
            <person name="Henke J."/>
        </authorList>
    </citation>
    <scope>VARIANT ALA-1148</scope>
</reference>
<reference key="110">
    <citation type="journal article" date="2010" name="Sci. Transl. Med.">
        <title>Mutations in fibrillin-1 cause congenital scleroderma: stiff skin syndrome.</title>
        <authorList>
            <person name="Loeys B.L."/>
            <person name="Gerber E.E."/>
            <person name="Riegert-Johnson D."/>
            <person name="Iqbal S."/>
            <person name="Whiteman P."/>
            <person name="McConnell V."/>
            <person name="Chillakuri C.R."/>
            <person name="Macaya D."/>
            <person name="Coucke P.J."/>
            <person name="De Paepe A."/>
            <person name="Judge D.P."/>
            <person name="Wigley F."/>
            <person name="Davis E.C."/>
            <person name="Mardon H.J."/>
            <person name="Handford P."/>
            <person name="Keene D.R."/>
            <person name="Sakai L.Y."/>
            <person name="Dietz H.C."/>
        </authorList>
    </citation>
    <scope>VARIANTS SSKS SER-1564; CYS-1570; GLY-1577 AND ASP-1594</scope>
</reference>
<reference key="111">
    <citation type="journal article" date="2011" name="Am. J. Hum. Genet.">
        <title>Mutations in the TGFbeta binding-protein-like domain 5 of FBN1 are responsible for acromicric and geleophysic dysplasias.</title>
        <authorList>
            <person name="Le Goff C."/>
            <person name="Mahaut C."/>
            <person name="Wang L.W."/>
            <person name="Allali S."/>
            <person name="Abhyankar A."/>
            <person name="Jensen S."/>
            <person name="Zylberberg L."/>
            <person name="Collod-Beroud G."/>
            <person name="Bonnet D."/>
            <person name="Alanay Y."/>
            <person name="Brady A.F."/>
            <person name="Cordier M.P."/>
            <person name="Devriendt K."/>
            <person name="Genevieve D."/>
            <person name="Kiper P.O."/>
            <person name="Kitoh H."/>
            <person name="Krakow D."/>
            <person name="Lynch S.A."/>
            <person name="Le Merrer M."/>
            <person name="Megarbane A."/>
            <person name="Mortier G."/>
            <person name="Odent S."/>
            <person name="Polak M."/>
            <person name="Rohrbach M."/>
            <person name="Sillence D."/>
            <person name="Stolte-Dijkstra I."/>
            <person name="Superti-Furga A."/>
            <person name="Rimoin D.L."/>
            <person name="Topouchian V."/>
            <person name="Unger S."/>
            <person name="Zabel B."/>
            <person name="Bole-Feysot C."/>
            <person name="Nitschke P."/>
            <person name="Handford P."/>
            <person name="Casanova J.L."/>
            <person name="Boileau C."/>
            <person name="Apte S.S."/>
            <person name="Munnich A."/>
            <person name="Cormier-Daire V."/>
        </authorList>
    </citation>
    <scope>VARIANTS GPHYSD2 CYS-1696; ASP-1699; CYS-1699; TYR-1706; TRP-1719; THR-1728; VAL-1728; TYR-1733 AND SER-1762</scope>
    <scope>VARIANTS ACMICD CYS-1699; CYS-1700; ARG-1714; CYS-1722; VAL-1726; THR-1728; GLN-1735 INS; ARG-1750 AND VAL-1758</scope>
</reference>
<reference key="112">
    <citation type="journal article" date="2011" name="Hum. Mutat.">
        <title>Applying massive parallel sequencing to molecular diagnosis of Marfan and Loeys-Dietz syndromes.</title>
        <authorList>
            <person name="Baetens M."/>
            <person name="Van Laer L."/>
            <person name="De Leeneer K."/>
            <person name="Hellemans J."/>
            <person name="De Schrijver J."/>
            <person name="Van De Voorde H."/>
            <person name="Renard M."/>
            <person name="Dietz H."/>
            <person name="Lacro R.V."/>
            <person name="Menten B."/>
            <person name="Van Criekinge W."/>
            <person name="De Backer J."/>
            <person name="De Paepe A."/>
            <person name="Loeys B."/>
            <person name="Coucke P.J."/>
        </authorList>
    </citation>
    <scope>VARIANTS MFS GLY-80; TYR-490; TYR-499; ARG-611; GLY-617; TRP-685; TYR-685; TYR-790; TYR-811; SER-853; TYR-926; SER-1090; ASP-1185; TYR-1284; PHE-1350; ALA-1401; TRP-1431; TYR-1431; ALA-1487; LYS-1489; CYS-1838; TYR-1900; THR-1909; SER-1934; GLY-1976; ARG-1984; ASN-2166; THR-2185; GLY-2247; ARG-2318; TYR-2406; SER-2442; ARG-2511; VAL-2606 DEL; LYS-2610 AND ARG-2646</scope>
    <scope>VARIANTS GLY-1481 AND HIS-2793</scope>
</reference>
<reference key="113">
    <citation type="journal article" date="2013" name="J. Mol. Med.">
        <title>Exon 47 skipping of fibrillin-1 leads preferentially to cardiovascular defects in patients with thoracic aortic aneurysms and dissections.</title>
        <authorList>
            <person name="Wang W.J."/>
            <person name="Han P."/>
            <person name="Zheng J."/>
            <person name="Hu F.Y."/>
            <person name="Zhu Y."/>
            <person name="Xie J.S."/>
            <person name="Guo J."/>
            <person name="Zhang Z."/>
            <person name="Dong J."/>
            <person name="Zheng G.Y."/>
            <person name="Cao H."/>
            <person name="Liu T.S."/>
            <person name="Fu Q."/>
            <person name="Sun L."/>
            <person name="Yang B.B."/>
            <person name="Tian X.L."/>
        </authorList>
    </citation>
    <scope>VARIANTS MFS GLU-55; GLN-219; SER-699; SER-880; TYR-908; ARG-1117; ALA-1199; 1539-ARG--HIS-2871 DEL; GLY-1642; ARG-1865; 2081-GLN--HIS-2871 DEL AND 2220-ARG--HIS-2871 DEL</scope>
</reference>
<name>FBN1_HUMAN</name>
<gene>
    <name evidence="112" type="primary">FBN1</name>
    <name type="synonym">FBN</name>
</gene>
<accession>P35555</accession>
<accession>B2RUU0</accession>
<accession>D2JYH6</accession>
<accession>Q15972</accession>
<accession>Q75N87</accession>
<proteinExistence type="evidence at protein level"/>
<organism>
    <name type="scientific">Homo sapiens</name>
    <name type="common">Human</name>
    <dbReference type="NCBI Taxonomy" id="9606"/>
    <lineage>
        <taxon>Eukaryota</taxon>
        <taxon>Metazoa</taxon>
        <taxon>Chordata</taxon>
        <taxon>Craniata</taxon>
        <taxon>Vertebrata</taxon>
        <taxon>Euteleostomi</taxon>
        <taxon>Mammalia</taxon>
        <taxon>Eutheria</taxon>
        <taxon>Euarchontoglires</taxon>
        <taxon>Primates</taxon>
        <taxon>Haplorrhini</taxon>
        <taxon>Catarrhini</taxon>
        <taxon>Hominidae</taxon>
        <taxon>Homo</taxon>
    </lineage>
</organism>
<protein>
    <recommendedName>
        <fullName evidence="102">Fibrillin-1</fullName>
    </recommendedName>
    <component>
        <recommendedName>
            <fullName evidence="104">Asprosin</fullName>
        </recommendedName>
    </component>
</protein>
<keyword id="KW-0002">3D-structure</keyword>
<keyword id="KW-0993">Aortic aneurysm</keyword>
<keyword id="KW-0106">Calcium</keyword>
<keyword id="KW-0903">Direct protein sequencing</keyword>
<keyword id="KW-0225">Disease variant</keyword>
<keyword id="KW-1015">Disulfide bond</keyword>
<keyword id="KW-0242">Dwarfism</keyword>
<keyword id="KW-0245">EGF-like domain</keyword>
<keyword id="KW-0272">Extracellular matrix</keyword>
<keyword id="KW-0325">Glycoprotein</keyword>
<keyword id="KW-0358">Heparin-binding</keyword>
<keyword id="KW-0372">Hormone</keyword>
<keyword id="KW-0597">Phosphoprotein</keyword>
<keyword id="KW-1267">Proteomics identification</keyword>
<keyword id="KW-1185">Reference proteome</keyword>
<keyword id="KW-0677">Repeat</keyword>
<keyword id="KW-0964">Secreted</keyword>
<keyword id="KW-0732">Signal</keyword>